<gene>
    <name evidence="106" type="primary">SCN1A</name>
    <name type="synonym">NAC1</name>
    <name type="synonym">SCN1</name>
</gene>
<name>SCN1A_HUMAN</name>
<sequence>MEQTVLVPPGPDSFNFFTRESLAAIERRIAEEKAKNPKPDKKDDDENGPKPNSDLEAGKNLPFIYGDIPPEMVSEPLEDLDPYYINKKTFIVLNKGKAIFRFSATSALYILTPFNPLRKIAIKILVHSLFSMLIMCTILTNCVFMTMSNPPDWTKNVEYTFTGIYTFESLIKIIARGFCLEDFTFLRDPWNWLDFTVITFAYVTEFVDLGNVSALRTFRVLRALKTISVIPGLKTIVGALIQSVKKLSDVMILTVFCLSVFALIGLQLFMGNLRNKCIQWPPTNASLEEHSIEKNITVNYNGTLINETVFEFDWKSYIQDSRYHYFLEGFLDALLCGNSSDAGQCPEGYMCVKAGRNPNYGYTSFDTFSWAFLSLFRLMTQDFWENLYQLTLRAAGKTYMIFFVLVIFLGSFYLINLILAVVAMAYEEQNQATLEEAEQKEAEFQQMIEQLKKQQEAAQQAATATASEHSREPSAAGRLSDSSSEASKLSSKSAKERRNRRKKRKQKEQSGGEEKDEDEFQKSESEDSIRRKGFRFSIEGNRLTYEKRYSSPHQSLLSIRGSLFSPRRNSRTSLFSFRGRAKDVGSENDFADDEHSTFEDNESRRDSLFVPRRHGERRNSNLSQTSRSSRMLAVFPANGKMHSTVDCNGVVSLVGGPSVPTSPVGQLLPEVIIDKPATDDNGTTTETEMRKRRSSSFHVSMDFLEDPSQRQRAMSIASILTNTVEELEESRQKCPPCWYKFSNIFLIWDCSPYWLKVKHVVNLVVMDPFVDLAITICIVLNTLFMAMEHYPMTDHFNNVLTVGNLVFTGIFTAEMFLKIIAMDPYYYFQEGWNIFDGFIVTLSLVELGLANVEGLSVLRSFRLLRVFKLAKSWPTLNMLIKIIGNSVGALGNLTLVLAIIVFIFAVVGMQLFGKSYKDCVCKIASDCQLPRWHMNDFFHSFLIVFRVLCGEWIETMWDCMEVAGQAMCLTVFMMVMVIGNLVVLNLFLALLLSSFSADNLAATDDDNEMNNLQIAVDRMHKGVAYVKRKIYEFIQQSFIRKQKILDEIKPLDDLNNKKDSCMSNHTAEIGKDLDYLKDVNGTTSGIGTGSSVEKYIIDESDYMSFINNPSLTVTVPIAVGESDFENLNTEDFSSESDLEESKEKLNESSSSSEGSTVDIGAPVEEQPVVEPEETLEPEACFTEGCVQRFKCCQINVEEGRGKQWWNLRRTCFRIVEHNWFETFIVFMILLSSGALAFEDIYIDQRKTIKTMLEYADKVFTYIFILEMLLKWVAYGYQTYFTNAWCWLDFLIVDVSLVSLTANALGYSELGAIKSLRTLRALRPLRALSRFEGMRVVVNALLGAIPSIMNVLLVCLIFWLIFSIMGVNLFAGKFYHCINTTTGDRFDIEDVNNHTDCLKLIERNETARWKNVKVNFDNVGFGYLSLLQVATFKGWMDIMYAAVDSRNVELQPKYEESLYMYLYFVIFIIFGSFFTLNLFIGVIIDNFNQQKKKFGGQDIFMTEEQKKYYNAMKKLGSKKPQKPIPRPGNKFQGMVFDFVTRQVFDISIMILICLNMVTMMVETDDQSEYVTTILSRINLVFIVLFTGECVLKLISLRHYYFTIGWNIFDFVVVILSIVGMFLAELIEKYFVSPTLFRVIRLARIGRILRLIKGAKGIRTLLFALMMSLPALFNIGLLLFLVMFIYAIFGMSNFAYVKREVGIDDMFNFETFGNSMICLFQITTSAGWDGLLAPILNSKPPDCDPNKVNPGSSVKGDCGNPSVGIFFFVSYIIISFLVVVNMYIAVILENFSVATEESAEPLSEDDFEMFYEVWEKFDPDATQFMEFEKLSQFAAALEPPLNLPQPNKLQLIAMDLPMVSGDRIHCLDILFAFTKRVLGESGEMDALRIQMEERFMASNPSKVSYQPITTTLKRKQEEVSAVIIQRAYRRHLLKRTVKQASFTYNKNKIKGGANLLIKEDMIIDRINENSITEKTDLTMSTAACPPSYDRVTKPIVEKHEQEGKDEKAKGK</sequence>
<evidence type="ECO:0000250" key="1">
    <source>
        <dbReference type="UniProtKB" id="A2APX8"/>
    </source>
</evidence>
<evidence type="ECO:0000250" key="2">
    <source>
        <dbReference type="UniProtKB" id="P04774"/>
    </source>
</evidence>
<evidence type="ECO:0000250" key="3">
    <source>
        <dbReference type="UniProtKB" id="P04775"/>
    </source>
</evidence>
<evidence type="ECO:0000255" key="4"/>
<evidence type="ECO:0000255" key="5">
    <source>
        <dbReference type="PROSITE-ProRule" id="PRU00116"/>
    </source>
</evidence>
<evidence type="ECO:0000256" key="6">
    <source>
        <dbReference type="SAM" id="MobiDB-lite"/>
    </source>
</evidence>
<evidence type="ECO:0000269" key="7">
    <source>
    </source>
</evidence>
<evidence type="ECO:0000269" key="8">
    <source>
    </source>
</evidence>
<evidence type="ECO:0000269" key="9">
    <source>
    </source>
</evidence>
<evidence type="ECO:0000269" key="10">
    <source>
    </source>
</evidence>
<evidence type="ECO:0000269" key="11">
    <source>
    </source>
</evidence>
<evidence type="ECO:0000269" key="12">
    <source>
    </source>
</evidence>
<evidence type="ECO:0000269" key="13">
    <source>
    </source>
</evidence>
<evidence type="ECO:0000269" key="14">
    <source>
    </source>
</evidence>
<evidence type="ECO:0000269" key="15">
    <source>
    </source>
</evidence>
<evidence type="ECO:0000269" key="16">
    <source>
    </source>
</evidence>
<evidence type="ECO:0000269" key="17">
    <source>
    </source>
</evidence>
<evidence type="ECO:0000269" key="18">
    <source>
    </source>
</evidence>
<evidence type="ECO:0000269" key="19">
    <source>
    </source>
</evidence>
<evidence type="ECO:0000269" key="20">
    <source>
    </source>
</evidence>
<evidence type="ECO:0000269" key="21">
    <source>
    </source>
</evidence>
<evidence type="ECO:0000269" key="22">
    <source>
    </source>
</evidence>
<evidence type="ECO:0000269" key="23">
    <source>
    </source>
</evidence>
<evidence type="ECO:0000269" key="24">
    <source>
    </source>
</evidence>
<evidence type="ECO:0000269" key="25">
    <source>
    </source>
</evidence>
<evidence type="ECO:0000269" key="26">
    <source>
    </source>
</evidence>
<evidence type="ECO:0000269" key="27">
    <source>
    </source>
</evidence>
<evidence type="ECO:0000269" key="28">
    <source>
    </source>
</evidence>
<evidence type="ECO:0000269" key="29">
    <source>
    </source>
</evidence>
<evidence type="ECO:0000269" key="30">
    <source>
    </source>
</evidence>
<evidence type="ECO:0000269" key="31">
    <source>
    </source>
</evidence>
<evidence type="ECO:0000269" key="32">
    <source>
    </source>
</evidence>
<evidence type="ECO:0000269" key="33">
    <source>
    </source>
</evidence>
<evidence type="ECO:0000269" key="34">
    <source>
    </source>
</evidence>
<evidence type="ECO:0000269" key="35">
    <source>
    </source>
</evidence>
<evidence type="ECO:0000269" key="36">
    <source>
    </source>
</evidence>
<evidence type="ECO:0000269" key="37">
    <source>
    </source>
</evidence>
<evidence type="ECO:0000269" key="38">
    <source>
    </source>
</evidence>
<evidence type="ECO:0000269" key="39">
    <source>
    </source>
</evidence>
<evidence type="ECO:0000269" key="40">
    <source>
    </source>
</evidence>
<evidence type="ECO:0000269" key="41">
    <source>
    </source>
</evidence>
<evidence type="ECO:0000269" key="42">
    <source>
    </source>
</evidence>
<evidence type="ECO:0000269" key="43">
    <source>
    </source>
</evidence>
<evidence type="ECO:0000269" key="44">
    <source>
    </source>
</evidence>
<evidence type="ECO:0000269" key="45">
    <source>
    </source>
</evidence>
<evidence type="ECO:0000269" key="46">
    <source>
    </source>
</evidence>
<evidence type="ECO:0000269" key="47">
    <source>
    </source>
</evidence>
<evidence type="ECO:0000269" key="48">
    <source>
    </source>
</evidence>
<evidence type="ECO:0000269" key="49">
    <source>
    </source>
</evidence>
<evidence type="ECO:0000269" key="50">
    <source>
    </source>
</evidence>
<evidence type="ECO:0000269" key="51">
    <source>
    </source>
</evidence>
<evidence type="ECO:0000269" key="52">
    <source>
    </source>
</evidence>
<evidence type="ECO:0000269" key="53">
    <source>
    </source>
</evidence>
<evidence type="ECO:0000269" key="54">
    <source>
    </source>
</evidence>
<evidence type="ECO:0000269" key="55">
    <source>
    </source>
</evidence>
<evidence type="ECO:0000269" key="56">
    <source>
    </source>
</evidence>
<evidence type="ECO:0000269" key="57">
    <source>
    </source>
</evidence>
<evidence type="ECO:0000269" key="58">
    <source>
    </source>
</evidence>
<evidence type="ECO:0000269" key="59">
    <source>
    </source>
</evidence>
<evidence type="ECO:0000269" key="60">
    <source>
    </source>
</evidence>
<evidence type="ECO:0000269" key="61">
    <source>
    </source>
</evidence>
<evidence type="ECO:0000269" key="62">
    <source>
    </source>
</evidence>
<evidence type="ECO:0000269" key="63">
    <source>
    </source>
</evidence>
<evidence type="ECO:0000269" key="64">
    <source>
    </source>
</evidence>
<evidence type="ECO:0000269" key="65">
    <source>
    </source>
</evidence>
<evidence type="ECO:0000269" key="66">
    <source>
    </source>
</evidence>
<evidence type="ECO:0000269" key="67">
    <source>
    </source>
</evidence>
<evidence type="ECO:0000269" key="68">
    <source>
    </source>
</evidence>
<evidence type="ECO:0000269" key="69">
    <source>
    </source>
</evidence>
<evidence type="ECO:0000269" key="70">
    <source>
    </source>
</evidence>
<evidence type="ECO:0000269" key="71">
    <source>
    </source>
</evidence>
<evidence type="ECO:0000269" key="72">
    <source>
    </source>
</evidence>
<evidence type="ECO:0000269" key="73">
    <source>
    </source>
</evidence>
<evidence type="ECO:0000269" key="74">
    <source>
    </source>
</evidence>
<evidence type="ECO:0000269" key="75">
    <source>
    </source>
</evidence>
<evidence type="ECO:0000269" key="76">
    <source>
    </source>
</evidence>
<evidence type="ECO:0000269" key="77">
    <source>
    </source>
</evidence>
<evidence type="ECO:0000269" key="78">
    <source>
    </source>
</evidence>
<evidence type="ECO:0000269" key="79">
    <source>
    </source>
</evidence>
<evidence type="ECO:0000269" key="80">
    <source>
    </source>
</evidence>
<evidence type="ECO:0000269" key="81">
    <source>
    </source>
</evidence>
<evidence type="ECO:0000269" key="82">
    <source>
    </source>
</evidence>
<evidence type="ECO:0000269" key="83">
    <source>
    </source>
</evidence>
<evidence type="ECO:0000269" key="84">
    <source>
    </source>
</evidence>
<evidence type="ECO:0000269" key="85">
    <source>
    </source>
</evidence>
<evidence type="ECO:0000269" key="86">
    <source>
    </source>
</evidence>
<evidence type="ECO:0000269" key="87">
    <source>
    </source>
</evidence>
<evidence type="ECO:0000269" key="88">
    <source>
    </source>
</evidence>
<evidence type="ECO:0000269" key="89">
    <source>
    </source>
</evidence>
<evidence type="ECO:0000269" key="90">
    <source>
    </source>
</evidence>
<evidence type="ECO:0000269" key="91">
    <source>
    </source>
</evidence>
<evidence type="ECO:0000269" key="92">
    <source>
    </source>
</evidence>
<evidence type="ECO:0000269" key="93">
    <source>
    </source>
</evidence>
<evidence type="ECO:0000269" key="94">
    <source>
    </source>
</evidence>
<evidence type="ECO:0000269" key="95">
    <source>
    </source>
</evidence>
<evidence type="ECO:0000269" key="96">
    <source>
    </source>
</evidence>
<evidence type="ECO:0000269" key="97">
    <source>
    </source>
</evidence>
<evidence type="ECO:0000269" key="98">
    <source>
    </source>
</evidence>
<evidence type="ECO:0000269" key="99">
    <source ref="4"/>
</evidence>
<evidence type="ECO:0000303" key="100">
    <source ref="2"/>
</evidence>
<evidence type="ECO:0000303" key="101">
    <source ref="3"/>
</evidence>
<evidence type="ECO:0000303" key="102">
    <source ref="4"/>
</evidence>
<evidence type="ECO:0000305" key="103"/>
<evidence type="ECO:0000305" key="104">
    <source>
    </source>
</evidence>
<evidence type="ECO:0000305" key="105">
    <source>
    </source>
</evidence>
<evidence type="ECO:0000312" key="106">
    <source>
        <dbReference type="HGNC" id="HGNC:10585"/>
    </source>
</evidence>
<evidence type="ECO:0007744" key="107">
    <source>
        <dbReference type="PDB" id="7DTD"/>
    </source>
</evidence>
<evidence type="ECO:0007829" key="108">
    <source>
        <dbReference type="PDB" id="7DTD"/>
    </source>
</evidence>
<reference key="1">
    <citation type="journal article" date="2000" name="Nat. Genet.">
        <title>Mutations of SCN1A, encoding a neuronal sodium channel, in two families with GEFS+2.</title>
        <authorList>
            <person name="Escayg A."/>
            <person name="MacDonald B.T."/>
            <person name="Meisler M.H."/>
            <person name="Baulac S."/>
            <person name="Huberfeld G."/>
            <person name="An-Gourfinkel I."/>
            <person name="Brice A."/>
            <person name="LeGuern E."/>
            <person name="Moulard B."/>
            <person name="Chaigne D."/>
            <person name="Buresi C."/>
            <person name="Malafosse A."/>
        </authorList>
    </citation>
    <scope>NUCLEOTIDE SEQUENCE [MRNA] (ISOFORM 1)</scope>
    <scope>VARIANTS GEFSP2 MET-875 AND HIS-1648</scope>
</reference>
<reference key="2">
    <citation type="submission" date="2000-01" db="EMBL/GenBank/DDBJ databases">
        <title>Cloning of cDNA for human voltage-gated sodium channel alpha subunit, SCN1A.</title>
        <authorList>
            <person name="Jeong S.-Y."/>
            <person name="Goto J."/>
            <person name="Kanazawa I."/>
        </authorList>
    </citation>
    <scope>NUCLEOTIDE SEQUENCE [MRNA] (ISOFORM 2)</scope>
</reference>
<reference key="3">
    <citation type="submission" date="2001-07" db="EMBL/GenBank/DDBJ databases">
        <title>Homo sapiens neuronal voltage-gated sodium channel type I (Nav1.1) mRNA.</title>
        <authorList>
            <person name="Sugawara T."/>
            <person name="Mazaki E.M."/>
            <person name="Yamakawa K."/>
        </authorList>
    </citation>
    <scope>NUCLEOTIDE SEQUENCE [MRNA] (ISOFORM 2)</scope>
    <source>
        <tissue>Brain</tissue>
    </source>
</reference>
<reference key="4">
    <citation type="submission" date="2002-10" db="EMBL/GenBank/DDBJ databases">
        <title>Isoforms of human sodium channel SCN1A gene.</title>
        <authorList>
            <person name="Ouchida M."/>
            <person name="Ohmori I."/>
        </authorList>
    </citation>
    <scope>NUCLEOTIDE SEQUENCE [MRNA] (ISOFORMS 1; 2 AND 3)</scope>
    <scope>VARIANT THR-1067</scope>
    <scope>ALTERNATIVE SPLICING</scope>
    <source>
        <tissue>Brain</tissue>
    </source>
</reference>
<reference key="5">
    <citation type="journal article" date="2005" name="Nature">
        <title>Generation and annotation of the DNA sequences of human chromosomes 2 and 4.</title>
        <authorList>
            <person name="Hillier L.W."/>
            <person name="Graves T.A."/>
            <person name="Fulton R.S."/>
            <person name="Fulton L.A."/>
            <person name="Pepin K.H."/>
            <person name="Minx P."/>
            <person name="Wagner-McPherson C."/>
            <person name="Layman D."/>
            <person name="Wylie K."/>
            <person name="Sekhon M."/>
            <person name="Becker M.C."/>
            <person name="Fewell G.A."/>
            <person name="Delehaunty K.D."/>
            <person name="Miner T.L."/>
            <person name="Nash W.E."/>
            <person name="Kremitzki C."/>
            <person name="Oddy L."/>
            <person name="Du H."/>
            <person name="Sun H."/>
            <person name="Bradshaw-Cordum H."/>
            <person name="Ali J."/>
            <person name="Carter J."/>
            <person name="Cordes M."/>
            <person name="Harris A."/>
            <person name="Isak A."/>
            <person name="van Brunt A."/>
            <person name="Nguyen C."/>
            <person name="Du F."/>
            <person name="Courtney L."/>
            <person name="Kalicki J."/>
            <person name="Ozersky P."/>
            <person name="Abbott S."/>
            <person name="Armstrong J."/>
            <person name="Belter E.A."/>
            <person name="Caruso L."/>
            <person name="Cedroni M."/>
            <person name="Cotton M."/>
            <person name="Davidson T."/>
            <person name="Desai A."/>
            <person name="Elliott G."/>
            <person name="Erb T."/>
            <person name="Fronick C."/>
            <person name="Gaige T."/>
            <person name="Haakenson W."/>
            <person name="Haglund K."/>
            <person name="Holmes A."/>
            <person name="Harkins R."/>
            <person name="Kim K."/>
            <person name="Kruchowski S.S."/>
            <person name="Strong C.M."/>
            <person name="Grewal N."/>
            <person name="Goyea E."/>
            <person name="Hou S."/>
            <person name="Levy A."/>
            <person name="Martinka S."/>
            <person name="Mead K."/>
            <person name="McLellan M.D."/>
            <person name="Meyer R."/>
            <person name="Randall-Maher J."/>
            <person name="Tomlinson C."/>
            <person name="Dauphin-Kohlberg S."/>
            <person name="Kozlowicz-Reilly A."/>
            <person name="Shah N."/>
            <person name="Swearengen-Shahid S."/>
            <person name="Snider J."/>
            <person name="Strong J.T."/>
            <person name="Thompson J."/>
            <person name="Yoakum M."/>
            <person name="Leonard S."/>
            <person name="Pearman C."/>
            <person name="Trani L."/>
            <person name="Radionenko M."/>
            <person name="Waligorski J.E."/>
            <person name="Wang C."/>
            <person name="Rock S.M."/>
            <person name="Tin-Wollam A.-M."/>
            <person name="Maupin R."/>
            <person name="Latreille P."/>
            <person name="Wendl M.C."/>
            <person name="Yang S.-P."/>
            <person name="Pohl C."/>
            <person name="Wallis J.W."/>
            <person name="Spieth J."/>
            <person name="Bieri T.A."/>
            <person name="Berkowicz N."/>
            <person name="Nelson J.O."/>
            <person name="Osborne J."/>
            <person name="Ding L."/>
            <person name="Meyer R."/>
            <person name="Sabo A."/>
            <person name="Shotland Y."/>
            <person name="Sinha P."/>
            <person name="Wohldmann P.E."/>
            <person name="Cook L.L."/>
            <person name="Hickenbotham M.T."/>
            <person name="Eldred J."/>
            <person name="Williams D."/>
            <person name="Jones T.A."/>
            <person name="She X."/>
            <person name="Ciccarelli F.D."/>
            <person name="Izaurralde E."/>
            <person name="Taylor J."/>
            <person name="Schmutz J."/>
            <person name="Myers R.M."/>
            <person name="Cox D.R."/>
            <person name="Huang X."/>
            <person name="McPherson J.D."/>
            <person name="Mardis E.R."/>
            <person name="Clifton S.W."/>
            <person name="Warren W.C."/>
            <person name="Chinwalla A.T."/>
            <person name="Eddy S.R."/>
            <person name="Marra M.A."/>
            <person name="Ovcharenko I."/>
            <person name="Furey T.S."/>
            <person name="Miller W."/>
            <person name="Eichler E.E."/>
            <person name="Bork P."/>
            <person name="Suyama M."/>
            <person name="Torrents D."/>
            <person name="Waterston R.H."/>
            <person name="Wilson R.K."/>
        </authorList>
    </citation>
    <scope>NUCLEOTIDE SEQUENCE [LARGE SCALE GENOMIC DNA]</scope>
</reference>
<reference key="6">
    <citation type="journal article" date="1994" name="Cytogenet. Cell Genet.">
        <title>Localization of a putative human brain sodium channel gene (SCN1A) to chromosome band 2q24.</title>
        <authorList>
            <person name="Malo M.S."/>
            <person name="Blanchard B.J."/>
            <person name="Andresen J.M."/>
            <person name="Srivastava K."/>
            <person name="Chen X.N."/>
            <person name="Li X."/>
            <person name="Jabs E.W."/>
            <person name="Korenberg J.R."/>
            <person name="Ingram V.M."/>
        </authorList>
    </citation>
    <scope>NUCLEOTIDE SEQUENCE [GENOMIC DNA] OF 1335-1428</scope>
</reference>
<reference key="7">
    <citation type="journal article" date="1992" name="FEBS Lett.">
        <title>Differential expression of two sodium channel subtypes in human brain.</title>
        <authorList>
            <person name="Lu C.-M."/>
            <person name="Han J."/>
            <person name="Rado T.A."/>
            <person name="Brown G.B."/>
        </authorList>
    </citation>
    <scope>NUCLEOTIDE SEQUENCE [MRNA] OF 1518-1940</scope>
    <source>
        <tissue>Brain</tissue>
    </source>
</reference>
<reference key="8">
    <citation type="journal article" date="2011" name="J. Biol. Chem.">
        <title>Identification of novel interaction sites that determine specificity between fibroblast growth factor homologous factors and voltage-gated sodium channels.</title>
        <authorList>
            <person name="Wang C."/>
            <person name="Wang C."/>
            <person name="Hoch E.G."/>
            <person name="Pitt G.S."/>
        </authorList>
    </citation>
    <scope>INTERACTION WITH FGF13</scope>
</reference>
<reference key="9">
    <citation type="journal article" date="2014" name="Proc. Natl. Acad. Sci. U.S.A.">
        <title>A disulfide tether stabilizes the block of sodium channels by the conotoxin muO[section sign]-GVIIJ.</title>
        <authorList>
            <person name="Gajewiak J."/>
            <person name="Azam L."/>
            <person name="Imperial J."/>
            <person name="Walewska A."/>
            <person name="Green B.R."/>
            <person name="Bandyopadhyay P.K."/>
            <person name="Raghuraman S."/>
            <person name="Ueberheide B."/>
            <person name="Bern M."/>
            <person name="Zhou H.M."/>
            <person name="Minassian N.A."/>
            <person name="Hagan R.H."/>
            <person name="Flinspach M."/>
            <person name="Liu Y."/>
            <person name="Bulaj G."/>
            <person name="Wickenden A.D."/>
            <person name="Olivera B.M."/>
            <person name="Yoshikami D."/>
            <person name="Zhang M.M."/>
        </authorList>
    </citation>
    <scope>ACTIVITY REGULATION</scope>
</reference>
<reference key="10">
    <citation type="journal article" date="2017" name="Sci. Rep.">
        <title>The tarantula toxin beta/delta-TRTX-Pre1a highlights the importance of the S1-S2 voltage-sensor region for sodium channel subtype selectivity.</title>
        <authorList>
            <person name="Wingerd J.S."/>
            <person name="Mozar C.A."/>
            <person name="Ussing C.A."/>
            <person name="Murali S.S."/>
            <person name="Chin Y.K."/>
            <person name="Cristofori-Armstrong B."/>
            <person name="Durek T."/>
            <person name="Gilchrist J."/>
            <person name="Vaughan C.W."/>
            <person name="Bosmans F."/>
            <person name="Adams D.J."/>
            <person name="Lewis R.J."/>
            <person name="Alewood P.F."/>
            <person name="Mobli M."/>
            <person name="Christie M.J."/>
            <person name="Rash L.D."/>
        </authorList>
    </citation>
    <scope>ACTIVITY REGULATION</scope>
    <scope>SITE SER-1574</scope>
</reference>
<reference key="11">
    <citation type="journal article" date="2023" name="Nat. Commun.">
        <title>Pain-causing stinging nettle toxins target TMEM233 to modulate NaV1.7 function.</title>
        <authorList>
            <person name="Jami S."/>
            <person name="Deuis J.R."/>
            <person name="Klasfauseweh T."/>
            <person name="Cheng X."/>
            <person name="Kurdyukov S."/>
            <person name="Chung F."/>
            <person name="Okorokov A.L."/>
            <person name="Li S."/>
            <person name="Zhang J."/>
            <person name="Cristofori-Armstrong B."/>
            <person name="Israel M.R."/>
            <person name="Ju R.J."/>
            <person name="Robinson S.D."/>
            <person name="Zhao P."/>
            <person name="Ragnarsson L."/>
            <person name="Andersson A."/>
            <person name="Tran P."/>
            <person name="Schendel V."/>
            <person name="McMahon K.L."/>
            <person name="Tran H.N.T."/>
            <person name="Chin Y.K."/>
            <person name="Zhu Y."/>
            <person name="Liu J."/>
            <person name="Crawford T."/>
            <person name="Purushothamvasan S."/>
            <person name="Habib A.M."/>
            <person name="Andersson D.A."/>
            <person name="Rash L.D."/>
            <person name="Wood J.N."/>
            <person name="Zhao J."/>
            <person name="Stehbens S.J."/>
            <person name="Mobli M."/>
            <person name="Leffler A."/>
            <person name="Jiang D."/>
            <person name="Cox J.J."/>
            <person name="Waxman S.G."/>
            <person name="Dib-Hajj S.D."/>
            <person name="Gregory Neely G."/>
            <person name="Durek T."/>
            <person name="Vetter I."/>
        </authorList>
    </citation>
    <scope>INTERACTION WITH TMEM233</scope>
</reference>
<reference evidence="107" key="12">
    <citation type="journal article" date="2021" name="Proc. Natl. Acad. Sci. U.S.A.">
        <title>Comparative structural analysis of human Nav1.1 and Nav1.5 reveals mutational hotspots for sodium channelopathies.</title>
        <authorList>
            <person name="Pan X."/>
            <person name="Li Z."/>
            <person name="Jin X."/>
            <person name="Zhao Y."/>
            <person name="Huang G."/>
            <person name="Huang X."/>
            <person name="Shen Z."/>
            <person name="Cao Y."/>
            <person name="Dong M."/>
            <person name="Lei J."/>
            <person name="Yan N."/>
        </authorList>
    </citation>
    <scope>STRUCTURE BY ELECTRON MICROSCOPY (3.30 ANGSTROMS) IN COMPLEX WITH SCN4B</scope>
    <scope>TOPOLOGY</scope>
    <scope>DISULFIDE BONDS</scope>
    <scope>GLYCOSYLATION AT ASN-338; ASN-1378; ASN-1392 AND ASN-1403</scope>
    <scope>CHARACTERIZATION OF VARIANT DRVT VAL-1339 AND ARG-1658</scope>
    <scope>CHARACTERIZATION OF VARIANT FMH3 LEU-1499</scope>
</reference>
<reference key="13">
    <citation type="journal article" date="2001" name="Am. J. Hum. Genet.">
        <title>Neuronal sodium-channel alpha1-subunit mutations in generalized epilepsy with febrile seizures plus.</title>
        <authorList>
            <person name="Wallace R.H."/>
            <person name="Scheffer I.E."/>
            <person name="Barnett S."/>
            <person name="Richards M."/>
            <person name="Dibbens L."/>
            <person name="Desai R.R."/>
            <person name="Lerman-Sagie T."/>
            <person name="Lev D."/>
            <person name="Mazarib A."/>
            <person name="Brand N."/>
            <person name="Ben-Zeev B."/>
            <person name="Goikhman I."/>
            <person name="Singh R."/>
            <person name="Kremmidiotis G."/>
            <person name="Gardner A."/>
            <person name="Sutherland G.R."/>
            <person name="George A.L. Jr."/>
            <person name="Mulley J.C."/>
            <person name="Berkovic S.F."/>
        </authorList>
    </citation>
    <scope>VARIANTS GEFSP2 VAL-188; LEU-1353 AND MET-1656</scope>
    <scope>VARIANTS THR-1067 AND GLY-1928</scope>
</reference>
<reference key="14">
    <citation type="journal article" date="2001" name="Am. J. Hum. Genet.">
        <title>A novel SCN1A mutation associated with generalized epilepsy with febrile seizures plus -- and prevalence of variants in patients with epilepsy.</title>
        <authorList>
            <person name="Escayg A."/>
            <person name="Heils A."/>
            <person name="MacDonald B.T."/>
            <person name="Haug K."/>
            <person name="Sander T."/>
            <person name="Meisler M.H."/>
        </authorList>
    </citation>
    <scope>VARIANT GEFSP2 ARG-1204</scope>
</reference>
<reference key="15">
    <citation type="journal article" date="2001" name="Am. J. Hum. Genet.">
        <title>De novo mutations in the sodium-channel gene SCN1A cause severe myoclonic epilepsy of infancy.</title>
        <authorList>
            <person name="Claes L."/>
            <person name="Del-Favero J."/>
            <person name="Ceulemans B."/>
            <person name="Lagae L."/>
            <person name="Van Broeckhoven C."/>
            <person name="De Jonghe P."/>
        </authorList>
    </citation>
    <scope>VARIANTS DRVT 222-ARG--LYS-2009 DEL AND PHE-986</scope>
</reference>
<reference key="16">
    <citation type="journal article" date="2001" name="Neurology">
        <title>Na(v)1.1 mutations cause febrile seizures associated with afebrile partial seizures.</title>
        <authorList>
            <person name="Sugawara T."/>
            <person name="Mazaki-Miyazaki E."/>
            <person name="Ito M."/>
            <person name="Nagafuji H."/>
            <person name="Fukuma G."/>
            <person name="Mitsudome A."/>
            <person name="Wada K."/>
            <person name="Kaneko S."/>
            <person name="Hirose S."/>
            <person name="Yamakawa K."/>
        </authorList>
    </citation>
    <scope>VARIANTS GEFSP2 ALA-1428 AND VAL-1685</scope>
</reference>
<reference key="17">
    <citation type="journal article" date="2001" name="Neurology">
        <title>Partial and generalized epilepsy with febrile seizures plus and a novel SCN1A mutation.</title>
        <authorList>
            <person name="Abou-Khalil B."/>
            <person name="Ge Q."/>
            <person name="Desai R."/>
            <person name="Ryther R."/>
            <person name="Bazyk A."/>
            <person name="Bailey R."/>
            <person name="Haines J.L."/>
            <person name="Sutcliffe J.S."/>
            <person name="George A.L. Jr."/>
        </authorList>
    </citation>
    <scope>VARIANT GEFSP2 THR-1270</scope>
</reference>
<reference key="18">
    <citation type="journal article" date="2002" name="Biochem. Biophys. Res. Commun.">
        <title>Significant correlation of the SCN1A mutations and severe myoclonic epilepsy in infancy.</title>
        <authorList>
            <person name="Ohmori I."/>
            <person name="Ouchida M."/>
            <person name="Ohtsuka Y."/>
            <person name="Oka E."/>
            <person name="Shimizu K."/>
        </authorList>
    </citation>
    <scope>VARIANTS DRVT CYS-902; CYS-931; PRO-1265; PHE-1289 DEL; MET-1390; ARG-1434; ARG-1450; CYS-1648 AND ARG-1674 AND ILE-1909</scope>
    <scope>VARIANT THR-1067</scope>
</reference>
<reference key="19">
    <citation type="journal article" date="2003" name="Brain">
        <title>Mutations of sodium channel alpha subunit type 1 (SCN1A) in intractable childhood epilepsies with frequent generalized tonic-clonic seizures.</title>
        <authorList>
            <person name="Fujiwara T."/>
            <person name="Sugawara T."/>
            <person name="Mazaki-Miyazaki E."/>
            <person name="Takahashi Y."/>
            <person name="Fukushima K."/>
            <person name="Watanabe M."/>
            <person name="Hara K."/>
            <person name="Morikawa T."/>
            <person name="Yagi K."/>
            <person name="Yamakawa K."/>
            <person name="Inoue Y."/>
        </authorList>
    </citation>
    <scope>VARIANTS DRVT GLY-103; ILE-112; TRP-265; ASP-343; VAL-960; ILE-985; ARG-1231; LEU-1263; ASP-1685; 1807-MET--GLU-1810 DEL; GLY-1812 AND SER-1831</scope>
    <scope>VARIANTS ICEGTC SER-808; ARG-979; ALA-983; ILE-1011; PHE-1611; SER-1632; ILE-1709 AND LEU-1808</scope>
    <scope>VARIANT THR-1067</scope>
</reference>
<reference key="20">
    <citation type="journal article" date="2003" name="Epilepsia">
        <title>Two novel SCN1A missense mutations in generalized epilepsy with febrile seizures plus.</title>
        <authorList>
            <person name="Annesi G."/>
            <person name="Gambardella A."/>
            <person name="Carrideo S."/>
            <person name="Incorpora G."/>
            <person name="Labate A."/>
            <person name="Pasqua A.A."/>
            <person name="Civitelli D."/>
            <person name="Polizzi A."/>
            <person name="Annesi F."/>
            <person name="Spadafora P."/>
            <person name="Tarantino P."/>
            <person name="Ciro Candiano I.C."/>
            <person name="Romeo N."/>
            <person name="De Marco E.V."/>
            <person name="Ventura P."/>
            <person name="LePiane E."/>
            <person name="Zappia M."/>
            <person name="Aguglia U."/>
            <person name="Pavone L."/>
            <person name="Quattrone A."/>
        </authorList>
    </citation>
    <scope>VARIANTS GEFSP2 CYS-790 AND THR-1852</scope>
</reference>
<reference key="21">
    <citation type="journal article" date="2003" name="Epilepsy Res.">
        <title>Functional characterization of the D188V mutation in neuronal voltage-gated sodium channel causing generalized epilepsy with febrile seizures plus (GEFS).</title>
        <authorList>
            <person name="Cossette P."/>
            <person name="Loukas A."/>
            <person name="Lafreniere R.G."/>
            <person name="Rochefort D."/>
            <person name="Harvey-Girard E."/>
            <person name="Ragsdale D.S."/>
            <person name="Dunn R.J."/>
            <person name="Rouleau G.A."/>
        </authorList>
    </citation>
    <scope>VARIANT GEFSP2 VAL-188</scope>
</reference>
<reference key="22">
    <citation type="journal article" date="2003" name="Hum. Mutat.">
        <title>De novo SCN1A mutations are a major cause of severe myoclonic epilepsy of infancy.</title>
        <authorList>
            <person name="Claes L."/>
            <person name="Ceulemans B."/>
            <person name="Audenaert D."/>
            <person name="Smets K."/>
            <person name="Loefgren A."/>
            <person name="Del-Favero J."/>
            <person name="Ala-Mello S."/>
            <person name="Basel-Vanagaite L."/>
            <person name="Plecko B."/>
            <person name="Raskin S."/>
            <person name="Thiry P."/>
            <person name="Wolf N.I."/>
            <person name="Van Broeckhoven C."/>
            <person name="De Jonghe P."/>
        </authorList>
    </citation>
    <scope>VARIANTS DRVT HIS-393; GLN-939; ARG-959; ARG-1434; SER-1661 AND GLU-1749</scope>
</reference>
<reference key="23">
    <citation type="journal article" date="2003" name="J. Neurosci.">
        <title>Epilepsy-associated dysfunction in the voltage-gated neuronal sodium channel SCN1A.</title>
        <authorList>
            <person name="Lossin C."/>
            <person name="Rhodes T.H."/>
            <person name="Desai R.R."/>
            <person name="Vanoye C.G."/>
            <person name="Wang D."/>
            <person name="Carniciu S."/>
            <person name="Devinsky O."/>
            <person name="George A.L. Jr."/>
        </authorList>
    </citation>
    <scope>VARIANT GEFSP2 CYS-1657</scope>
    <scope>CHARACTERIZATION OF VARIANTS GEFSP2 LEU-1353; MET-1656; CYS-1657 AND VAL-1685</scope>
    <scope>CHARACTERIZATION OF VARIANT DRVT PHE-986</scope>
    <scope>FUNCTION</scope>
    <scope>TRANSPORTER ACTIVITY</scope>
    <scope>SUBCELLULAR LOCATION</scope>
</reference>
<reference key="24">
    <citation type="journal article" date="2003" name="Mol. Psychiatry">
        <title>Sodium channels SCN1A, SCN2A and SCN3A in familial autism.</title>
        <authorList>
            <person name="Weiss L.A."/>
            <person name="Escayg A."/>
            <person name="Kearney J.A."/>
            <person name="Trudeau M."/>
            <person name="MacDonald B.T."/>
            <person name="Mori M."/>
            <person name="Reichert J."/>
            <person name="Buxbaum J.D."/>
            <person name="Meisler M.H."/>
        </authorList>
    </citation>
    <scope>VARIANTS GLN-542; THR-1034; LEU-1038; THR-1067 AND THR-1955</scope>
</reference>
<reference key="25">
    <citation type="journal article" date="2003" name="Neurology">
        <title>Spectrum of SCN1A mutations in severe myoclonic epilepsy of infancy.</title>
        <authorList>
            <person name="Nabbout R."/>
            <person name="Gennaro E."/>
            <person name="Dalla Bernardina B."/>
            <person name="Dulac O."/>
            <person name="Madia F."/>
            <person name="Bertini E."/>
            <person name="Capovilla G."/>
            <person name="Chiron C."/>
            <person name="Cristofori G."/>
            <person name="Elia M."/>
            <person name="Fontana E."/>
            <person name="Gaggero R."/>
            <person name="Granata T."/>
            <person name="Guerrini R."/>
            <person name="Loi M."/>
            <person name="La Selva L."/>
            <person name="Lispi M.L."/>
            <person name="Matricardi A."/>
            <person name="Romeo A."/>
            <person name="Tzolas V."/>
            <person name="Valseriati D."/>
            <person name="Veggiotti P."/>
            <person name="Vigevano F."/>
            <person name="Vallee L."/>
            <person name="Dagna Bricarelli F."/>
            <person name="Bianchi A."/>
            <person name="Zara F."/>
        </authorList>
    </citation>
    <scope>VARIANTS DRVT ASP-78; GLU-177; SER-227; ARG-280; ILE-297; ASN-426; ARG-1233; ILE-1461; SER-1463; ALA-1668; THR-1780 AND 1812-TRP--LYS-1815 DELINS CYS</scope>
</reference>
<reference key="26">
    <citation type="journal article" date="2003" name="Neurology">
        <title>Sodium channel alpha1-subunit mutations in severe myoclonic epilepsy of infancy and infantile spasms.</title>
        <authorList>
            <person name="Wallace R.H."/>
            <person name="Hodgson B.L."/>
            <person name="Grinton B.E."/>
            <person name="Gardiner R.M."/>
            <person name="Robinson R."/>
            <person name="Rodriguez-Casero V."/>
            <person name="Sadleir L."/>
            <person name="Morgan J."/>
            <person name="Harkin L.A."/>
            <person name="Dibbens L.M."/>
            <person name="Yamamoto T."/>
            <person name="Andermann E."/>
            <person name="Mulley J.C."/>
            <person name="Berkovic S.F."/>
            <person name="Scheffer I.E."/>
        </authorList>
    </citation>
    <scope>VARIANTS DRVT PRO-1326 AND ASP-1881</scope>
    <scope>VARIANT INFANTILE SPASMS GLY-1957</scope>
</reference>
<reference key="27">
    <citation type="journal article" date="2003" name="Neuroscience">
        <title>Generalized epilepsy with febrile seizures plus type 2 mutation W1204R alters voltage-dependent gating of Na(v)1.1 sodium channels.</title>
        <authorList>
            <person name="Spampanato J."/>
            <person name="Escayg A."/>
            <person name="Meisler M.H."/>
            <person name="Goldin A.L."/>
        </authorList>
    </citation>
    <scope>CHARACTERIZATION OF VARIANT GEFSP2 ARG-1204</scope>
</reference>
<reference key="28">
    <citation type="journal article" date="2004" name="Epilepsia">
        <title>Mutations of neuronal voltage-gated Na+ channel alpha 1 subunit gene SCN1A in core severe myoclonic epilepsy in infancy (SMEI) and in borderline SMEI (SMEB).</title>
        <authorList>
            <person name="Fukuma G."/>
            <person name="Oguni H."/>
            <person name="Shirasaka Y."/>
            <person name="Watanabe K."/>
            <person name="Miyajima T."/>
            <person name="Yasumoto S."/>
            <person name="Ohfu M."/>
            <person name="Inoue T."/>
            <person name="Watanachai A."/>
            <person name="Kira R."/>
            <person name="Matsuo M."/>
            <person name="Muranaka H."/>
            <person name="Sofue F."/>
            <person name="Zhang B."/>
            <person name="Kaneko S."/>
            <person name="Mitsudome A."/>
            <person name="Hirose S."/>
        </authorList>
    </citation>
    <scope>VARIANTS DRVT GLN-101; ARG-190; ILE-934; ALA-944; CYS-946; HIS-946; PRO-1355; MET-1559 DEL; SER-1692; CYS-1694; PHE-1766 DEL AND CYS-1781</scope>
</reference>
<reference key="29">
    <citation type="journal article" date="2004" name="J. Neurosci.">
        <title>A novel epilepsy mutation in the sodium channel SCN1A identifies a cytoplasmic domain for beta subunit interaction.</title>
        <authorList>
            <person name="Spampanato J."/>
            <person name="Kearney J.A."/>
            <person name="de Haan G."/>
            <person name="McEwen D.P."/>
            <person name="Escayg A."/>
            <person name="Aradi I."/>
            <person name="MacDonald B.T."/>
            <person name="Levin S.I."/>
            <person name="Soltesz I."/>
            <person name="Benna P."/>
            <person name="Montalenti E."/>
            <person name="Isom L.L."/>
            <person name="Goldin A.L."/>
            <person name="Meisler M.H."/>
        </authorList>
    </citation>
    <scope>VARIANT GEFSP2 TYR-1866</scope>
    <scope>CHARACTERIZATION OF VARIANT GEFSP2 TYR-1866</scope>
    <scope>INTERACTION WITH SCN1B</scope>
</reference>
<reference key="30">
    <citation type="journal article" date="2004" name="Pediatr. Neurol.">
        <title>Clinical correlations of mutations in the SCN1A gene: from febrile seizures to severe myoclonic epilepsy in infancy.</title>
        <authorList>
            <person name="Ceulemans B.P.G.M."/>
            <person name="Claes L.R.F."/>
            <person name="Lagae L.G."/>
        </authorList>
    </citation>
    <scope>VARIANT DRVT ASN-252</scope>
</reference>
<reference key="31">
    <citation type="journal article" date="2005" name="Brain Dev.">
        <title>A missense mutation in SCN1A in brothers with severe myoclonic epilepsy in infancy (SMEI) inherited from a father with febrile seizures.</title>
        <authorList>
            <person name="Kimura K."/>
            <person name="Sugawara T."/>
            <person name="Mazaki-Miyazaki E."/>
            <person name="Hoshino K."/>
            <person name="Nomura Y."/>
            <person name="Tateno A."/>
            <person name="Hachimori K."/>
            <person name="Yamakawa K."/>
            <person name="Segawa M."/>
        </authorList>
    </citation>
    <scope>VARIANT DRVT ASN-1713</scope>
    <scope>VARIANT THR-1067</scope>
</reference>
<reference key="32">
    <citation type="journal article" date="2005" name="Epilepsy Res.">
        <title>A family of generalized epilepsy with febrile seizures plus type 2-a new missense mutation of SCN1A found in the pedigree of several patients with complex febrile seizures.</title>
        <authorList>
            <person name="Nagao Y."/>
            <person name="Mazaki-Miyazaki E."/>
            <person name="Okamura N."/>
            <person name="Takagi M."/>
            <person name="Igarashi T."/>
            <person name="Yamakawa K."/>
        </authorList>
    </citation>
    <scope>VARIANT GEFSP2 LEU-1857</scope>
</reference>
<reference key="33">
    <citation type="journal article" date="2005" name="J. Physiol. (Lond.)">
        <title>Sodium channel dysfunction in intractable childhood epilepsy with generalized tonic-clonic seizures.</title>
        <authorList>
            <person name="Rhodes T.H."/>
            <person name="Vanoye C.G."/>
            <person name="Ohmori I."/>
            <person name="Ogiwara I."/>
            <person name="Yamakawa K."/>
            <person name="George A.L. Jr."/>
        </authorList>
    </citation>
    <scope>VARIANTS ICEGTC SER-808 AND ILE-1011</scope>
    <scope>CHARACTERIZATION OF VARIANTS ICEGTC SER-808; ARG-979; ALA-983; ILE-1011; PHE-1611; SER-1632; ILE-1709 AND LEU-1808</scope>
</reference>
<reference key="34">
    <citation type="journal article" date="2005" name="Lancet">
        <title>Mutation in the neuronal voltage-gated sodium channel SCN1A in familial hemiplegic migraine.</title>
        <authorList>
            <person name="Dichgans M."/>
            <person name="Freilinger T."/>
            <person name="Eckstein G."/>
            <person name="Babini E."/>
            <person name="Lorenz-Depiereux B."/>
            <person name="Biskup S."/>
            <person name="Ferrari M.D."/>
            <person name="Herzog J."/>
            <person name="van den Maagdenberg A.M.J.M."/>
            <person name="Pusch M."/>
            <person name="Strom T.M."/>
        </authorList>
    </citation>
    <scope>VARIANT FHM3 LYS-1489</scope>
</reference>
<reference key="35">
    <citation type="journal article" date="2005" name="Neuropediatrics">
        <title>SCN1A mutation analysis in myoclonic astatic epilepsy and severe idiopathic generalized epilepsy of infancy with generalized tonic-clonic seizures.</title>
        <authorList>
            <person name="Ebach K."/>
            <person name="Joos H."/>
            <person name="Doose H."/>
            <person name="Stephani U."/>
            <person name="Kurlemann G."/>
            <person name="Fiedler B."/>
            <person name="Hahn A."/>
            <person name="Hauser E."/>
            <person name="Hundt K."/>
            <person name="Holthausen H."/>
            <person name="Mueller U."/>
            <person name="Neubauer B.A."/>
        </authorList>
    </citation>
    <scope>VARIANT DRVT SER-946</scope>
</reference>
<reference key="36">
    <citation type="journal article" date="2005" name="Proc. Natl. Acad. Sci. U.S.A.">
        <title>Identification of an Nav1.1 sodium channel (SCN1A) loss-of-function mutation associated with familial simple febrile seizures.</title>
        <authorList>
            <person name="Mantegazza M."/>
            <person name="Gambardella A."/>
            <person name="Rusconi R."/>
            <person name="Schiavon E."/>
            <person name="Annesi F."/>
            <person name="Cassulini R.R."/>
            <person name="Labate A."/>
            <person name="Carrideo S."/>
            <person name="Chifari R."/>
            <person name="Canevini M.P."/>
            <person name="Canger R."/>
            <person name="Franceschetti S."/>
            <person name="Annesi G."/>
            <person name="Wanke E."/>
            <person name="Quattrone A."/>
        </authorList>
    </citation>
    <scope>VARIANT FEB3A THR-145</scope>
    <scope>CHARACTERIZATION OF VARIANT FEB3A THR-145</scope>
</reference>
<reference key="37">
    <citation type="journal article" date="2005" name="Seizure">
        <title>A novel SCN1A mutation associated with severe GEFS+ in a large South American pedigree.</title>
        <authorList>
            <person name="Pineda-Trujillo N."/>
            <person name="Carrizosa J."/>
            <person name="Cornejo W."/>
            <person name="Arias W."/>
            <person name="Franco C."/>
            <person name="Cabrera D."/>
            <person name="Bedoya G."/>
            <person name="Ruiz-Linares A."/>
        </authorList>
    </citation>
    <scope>VARIANT GEFSP2 GLY-1742</scope>
</reference>
<reference key="38">
    <citation type="journal article" date="2006" name="Acta Paediatr.">
        <title>Epilepsy with a de novo missense mutation in the sodium channel a1 subunit: a case report.</title>
        <authorList>
            <person name="Stefanaki E."/>
            <person name="Aggelakou V."/>
            <person name="Orfanou M."/>
            <person name="Kokori E."/>
            <person name="Boutoufianakis S."/>
        </authorList>
    </citation>
    <scope>VARIANT DRVT PRO-1393</scope>
</reference>
<reference key="39">
    <citation type="journal article" date="2006" name="Epilepsia">
        <title>Familial occurrence of febrile seizures and epilepsy in severe myoclonic epilepsy of infancy (SMEI) patients with SCN1A mutations.</title>
        <authorList>
            <person name="Mancardi M.M."/>
            <person name="Striano P."/>
            <person name="Gennaro E."/>
            <person name="Madia F."/>
            <person name="Paravidino R."/>
            <person name="Scapolan S."/>
            <person name="Dalla Bernardina B."/>
            <person name="Bertini E."/>
            <person name="Bianchi A."/>
            <person name="Capovilla G."/>
            <person name="Darra F."/>
            <person name="Elia M."/>
            <person name="Freri E."/>
            <person name="Gobbi G."/>
            <person name="Granata T."/>
            <person name="Guerrini R."/>
            <person name="Pantaleoni C."/>
            <person name="Parmeggiani A."/>
            <person name="Romeo A."/>
            <person name="Santucci M."/>
            <person name="Vecchi M."/>
            <person name="Veggiotti P."/>
            <person name="Vigevano F."/>
            <person name="Pistorio A."/>
            <person name="Gaggero R."/>
            <person name="Zara F."/>
        </authorList>
    </citation>
    <scope>VARIANTS DRVT ASP-78; PRO-162; ASN-194; LYS-217; SER-227; ARG-280; LEU-383; CYS-393; SER-393; ASN-426; ARG-812; LYS-846; PRO-942; ARG-1233; GLN-1245; CYS-1422; ARG-1426; LEU-1451; SER-1463; SER-1475; ALA-1668; ARG-1714; GLU-1762; PHE-1773 AND THR-1780</scope>
</reference>
<reference key="40">
    <citation type="journal article" date="2006" name="Epilepsia">
        <title>Nonfunctional SCN1A is common in severe myoclonic epilepsy of infancy.</title>
        <authorList>
            <person name="Ohmori I."/>
            <person name="Kahlig K.M."/>
            <person name="Rhodes T.H."/>
            <person name="Wang D.W."/>
            <person name="George A.L. Jr."/>
        </authorList>
    </citation>
    <scope>CHARACTERIZATION OF VARIANTS DRVT GLU-177; SER-227; HIS-393; ASN-426; GLN-939; ARG-959; PHE-1289 DEL AND ILE-1909</scope>
</reference>
<reference key="41">
    <citation type="journal article" date="2006" name="J. Neurosci.">
        <title>An epilepsy mutation in the sodium channel SCN1A that decreases channel excitability.</title>
        <authorList>
            <person name="Barela A.J."/>
            <person name="Waddy S.P."/>
            <person name="Lickfett J.G."/>
            <person name="Hunter J."/>
            <person name="Anido A."/>
            <person name="Helmers S.L."/>
            <person name="Goldin A.L."/>
            <person name="Escayg A."/>
        </authorList>
    </citation>
    <scope>VARIANT GEFSP2 CYS-859</scope>
    <scope>CHARACTERIZATION OF VARIANT GEFSP2 CYS-859</scope>
</reference>
<reference key="42">
    <citation type="journal article" date="2006" name="Lancet Neurol.">
        <title>De-novo mutations of the sodium channel gene SCN1A in alleged vaccine encephalopathy: a retrospective study.</title>
        <authorList>
            <person name="Berkovic S.F."/>
            <person name="Harkin L."/>
            <person name="McMahon J.M."/>
            <person name="Pelekanos J.T."/>
            <person name="Zuberi S.M."/>
            <person name="Wirrell E.C."/>
            <person name="Gill D.S."/>
            <person name="Iona X."/>
            <person name="Mulley J.C."/>
            <person name="Scheffer I.E."/>
        </authorList>
    </citation>
    <scope>VARIANTS DRVT LEU-403; ASN-413; HIS-946; ASP-1238; GLY-1396 AND GLN-1645</scope>
</reference>
<reference key="43">
    <citation type="journal article" date="2006" name="Pediatr. Neurol.">
        <title>Recurrent de novo mutations of SCN1A in severe myoclonic epilepsy of infancy.</title>
        <authorList>
            <person name="Kearney J.A."/>
            <person name="Wiste A.K."/>
            <person name="Stephani U."/>
            <person name="Trudeau M.M."/>
            <person name="Siegel A."/>
            <person name="Ramachandrannair R."/>
            <person name="Elterman R.D."/>
            <person name="Muhle H."/>
            <person name="Reinsdorf J."/>
            <person name="Shields W.D."/>
            <person name="Meisler M.H."/>
            <person name="Escayg A."/>
        </authorList>
    </citation>
    <scope>VARIANT DRVT THR-1231</scope>
</reference>
<reference key="44">
    <citation type="journal article" date="2007" name="Brain">
        <title>The spectrum of SCN1A-related infantile epileptic encephalopathies.</title>
        <authorList>
            <consortium name="The infantile epileptic encephalopathy referral consortium"/>
            <person name="Harkin L.A."/>
            <person name="McMahon J.M."/>
            <person name="Iona X."/>
            <person name="Dibbens L."/>
            <person name="Pelekanos J.T."/>
            <person name="Zuberi S.M."/>
            <person name="Sadleir L.G."/>
            <person name="Andermann E."/>
            <person name="Gill D."/>
            <person name="Farrell K."/>
            <person name="Connolly M."/>
            <person name="Stanley T."/>
            <person name="Harbord M."/>
            <person name="Andermann F."/>
            <person name="Wang J."/>
            <person name="Batish S.D."/>
            <person name="Jones J.G."/>
            <person name="Seltzer W.K."/>
            <person name="Gardner A."/>
            <person name="Sutherland G."/>
            <person name="Berkovic S.F."/>
            <person name="Mulley J.C."/>
            <person name="Scheffer I.E."/>
        </authorList>
    </citation>
    <scope>VARIANTS CYS-393; PRO-395; GLU-422; GLY-626; VAL-1480; SER-1543; GLN-1636 AND HIS-1657</scope>
    <scope>VARIANTS DRVT HIS-79; CYS-84; TRP-101; ARG-199; THR-239; LEU-403; ASN-413; GLY-674; PRO-783; GLU-944; LEU-945; GLU-950; ASP-1238; MET-1390; GLY-1396; PRO-1441; VAL-1545; CYS-1596; GLN-1645; VAL-1707; ARG-1721 AND THR-1922</scope>
    <scope>VARIANT GEFSP2 VAL-973</scope>
    <scope>VARIANT DEE6B MET-226</scope>
</reference>
<reference key="45">
    <citation type="journal article" date="2007" name="Epilepsia">
        <title>Idiopathic epilepsies with seizures precipitated by fever and SCN1A abnormalities.</title>
        <authorList>
            <person name="Marini C."/>
            <person name="Mei D."/>
            <person name="Temudo T."/>
            <person name="Ferrari A.R."/>
            <person name="Buti D."/>
            <person name="Dravet C."/>
            <person name="Dias A.I."/>
            <person name="Moreira A."/>
            <person name="Calado E."/>
            <person name="Seri S."/>
            <person name="Neville B."/>
            <person name="Narbona J."/>
            <person name="Reid E."/>
            <person name="Michelucci R."/>
            <person name="Sicca F."/>
            <person name="Cross H.J."/>
            <person name="Guerrini R."/>
        </authorList>
    </citation>
    <scope>VARIANTS DRVT GLN-101; ILE-322; GLY-356; THR-358; CYS-393; HIS-393; LEU-957; TYR-1414; TRP-1470; ARG-1588; TYR-1608; MET-1630; ARG-1658; ARG-1716; VAL-1783 AND LYS-1787</scope>
    <scope>VARIANTS GEFSP2 PRO-74; ARG-1204 AND SER-1687</scope>
</reference>
<reference key="46">
    <citation type="journal article" date="2007" name="Epilepsy Res.">
        <title>Patients with a sodium channel alpha 1 gene mutation show wide phenotypic variation.</title>
        <authorList>
            <person name="Osaka H."/>
            <person name="Ogiwara I."/>
            <person name="Mazaki E."/>
            <person name="Okamura N."/>
            <person name="Yamashita S."/>
            <person name="Iai M."/>
            <person name="Yamada M."/>
            <person name="Kurosawa K."/>
            <person name="Iwamoto H."/>
            <person name="Yasui-Furukori N."/>
            <person name="Kaneko S."/>
            <person name="Fujiwara T."/>
            <person name="Inoue Y."/>
            <person name="Yamakawa K."/>
        </authorList>
    </citation>
    <scope>VARIANT GEFSP2 ILE-1366</scope>
    <scope>VARIANT ICEGTC ILE-1366</scope>
</reference>
<reference key="47">
    <citation type="journal article" date="2007" name="Hum. Mutat.">
        <title>The novel p.L1649Q mutation in the SCN1A epilepsy gene is associated with familial hemiplegic migraine: genetic and functional studies. Mutation in brief #957. Online.</title>
        <authorList>
            <person name="Vanmolkot K.R."/>
            <person name="Babini E."/>
            <person name="de Vries B."/>
            <person name="Stam A.H."/>
            <person name="Freilinger T."/>
            <person name="Terwindt G.M."/>
            <person name="Norris L."/>
            <person name="Haan J."/>
            <person name="Frants R.R."/>
            <person name="Ramadan N.M."/>
            <person name="Ferrari M.D."/>
            <person name="Pusch M."/>
            <person name="van den Maagdenberg A.M."/>
            <person name="Dichgans M."/>
        </authorList>
    </citation>
    <scope>VARIANT FHM3 GLN-1649</scope>
</reference>
<reference key="48">
    <citation type="journal article" date="2007" name="J. Neurosci.">
        <title>Modulatory proteins can rescue a trafficking defective epileptogenic Nav1.1 Na+ channel mutant.</title>
        <authorList>
            <person name="Rusconi R."/>
            <person name="Scalmani P."/>
            <person name="Cassulini R.R."/>
            <person name="Giunti G."/>
            <person name="Gambardella A."/>
            <person name="Franceschetti S."/>
            <person name="Annesi G."/>
            <person name="Wanke E."/>
            <person name="Mantegazza M."/>
        </authorList>
    </citation>
    <scope>CHARACTERIZATION OF VARIANT GEFSP2 THR-1852</scope>
    <scope>SUBCELLULAR LOCATION</scope>
    <scope>INTERACTION WITH SCN1B</scope>
</reference>
<reference key="49">
    <citation type="journal article" date="2007" name="Neurology">
        <title>SCN1A mutation associated with atypical Panayiotopoulos syndrome.</title>
        <authorList>
            <person name="Grosso S."/>
            <person name="Orrico A."/>
            <person name="Galli L."/>
            <person name="Di Bartolo R."/>
            <person name="Sorrentino V."/>
            <person name="Balestri P."/>
        </authorList>
    </citation>
    <scope>VARIANT PHE-790</scope>
    <scope>POSSIBLE INVOLVEMENT IN PANAYIOTOPOULOS SYNDROME</scope>
</reference>
<reference key="50">
    <citation type="journal article" date="2007" name="Neuropediatrics">
        <title>Focal epilepsy resulting from a de novo SCN1A mutation.</title>
        <authorList>
            <person name="Okumura A."/>
            <person name="Kurahashi H."/>
            <person name="Hirose S."/>
            <person name="Okawa N."/>
            <person name="Watanabe K."/>
        </authorList>
    </citation>
    <scope>VARIANT FOCAL EPILEPSY PHE-1771</scope>
</reference>
<reference key="51">
    <citation type="journal article" date="2007" name="Pediatr. Neurol.">
        <title>Novel mutation confirms seizure locus SCN1A is also familial hemiplegic migraine locus FHM3.</title>
        <authorList>
            <person name="Gargus J.J."/>
            <person name="Tournay A."/>
        </authorList>
    </citation>
    <scope>VARIANT FHM3 SER-1174</scope>
</reference>
<reference key="52">
    <citation type="journal article" date="2008" name="Acta Neurol. Scand.">
        <title>Genetic screening of Scandinavian families with febrile seizures and epilepsy or GEFS+.</title>
        <authorList>
            <person name="Selmer K.K."/>
            <person name="Egeland T."/>
            <person name="Solaas M.H."/>
            <person name="Nakken K.O."/>
            <person name="Kjeldsen M.J."/>
            <person name="Friis M.L."/>
            <person name="Brandal K."/>
            <person name="Corey L.A."/>
            <person name="Undlien D.E."/>
        </authorList>
    </citation>
    <scope>VARIANT GEFSP2 MET-978</scope>
</reference>
<reference key="53">
    <citation type="journal article" date="2008" name="Arch. Neurol.">
        <title>Cryptogenic epileptic syndromes related to SCN1A: twelve novel mutations identified.</title>
        <authorList>
            <person name="Zucca C."/>
            <person name="Redaelli F."/>
            <person name="Epifanio R."/>
            <person name="Zanotta N."/>
            <person name="Romeo A."/>
            <person name="Lodi M."/>
            <person name="Veggiotti P."/>
            <person name="Airoldi G."/>
            <person name="Panzeri C."/>
            <person name="Romaniello R."/>
            <person name="De Polo G."/>
            <person name="Bonanni P."/>
            <person name="Cardinali S."/>
            <person name="Baschirotto C."/>
            <person name="Martorell L."/>
            <person name="Borgatti R."/>
            <person name="Bresolin N."/>
            <person name="Bassi M.T."/>
        </authorList>
    </citation>
    <scope>VARIANTS DRVT SER-118; GLU-366; PRO-1207; MET-1335; SER-1358 AND CYS-1462</scope>
    <scope>VARIANT GEFSP2 GLN-377</scope>
    <scope>VARIANT GLY-1928</scope>
</reference>
<reference key="54">
    <citation type="journal article" date="2008" name="Epilepsia">
        <title>Two cases of sudden unexpected death in epilepsy in a GEFS+ family with an SCN1A mutation.</title>
        <authorList>
            <person name="Hindocha N."/>
            <person name="Nashef L."/>
            <person name="Elmslie F."/>
            <person name="Birch R."/>
            <person name="Zuberi S."/>
            <person name="Al-Chalabi A."/>
            <person name="Crotti L."/>
            <person name="Schwartz P.J."/>
            <person name="Makoff A."/>
        </authorList>
    </citation>
    <scope>VARIANT GEFSP2 THR-1867</scope>
</reference>
<reference key="55">
    <citation type="journal article" date="2008" name="Epilepsia">
        <title>Rasmussen encephalitis associated with SCN 1 A mutation.</title>
        <authorList>
            <person name="Ohmori I."/>
            <person name="Ouchida M."/>
            <person name="Kobayashi K."/>
            <person name="Jitsumori Y."/>
            <person name="Inoue T."/>
            <person name="Shimizu K."/>
            <person name="Matsui H."/>
            <person name="Ohtsuka Y."/>
            <person name="Maegaki Y."/>
        </authorList>
    </citation>
    <scope>VARIANT CYS-1575</scope>
</reference>
<reference key="56">
    <citation type="journal article" date="2008" name="J. Hum. Genet.">
        <title>SCN1A, SCN1B, and GABRG2 gene mutation analysis in Chinese families with generalized epilepsy with febrile seizures plus.</title>
        <authorList>
            <person name="Sun H."/>
            <person name="Zhang Y."/>
            <person name="Liang J."/>
            <person name="Liu X."/>
            <person name="Ma X."/>
            <person name="Wu H."/>
            <person name="Xu K."/>
            <person name="Qin J."/>
            <person name="Qi Y."/>
            <person name="Wu X."/>
        </authorList>
    </citation>
    <scope>VARIANT GEFSP2 HIS-935</scope>
</reference>
<reference key="57">
    <citation type="journal article" date="2008" name="Pediatr. Neurol.">
        <title>Monozygotic twins with severe myoclonic epilepsy in infancy discordant for clinical features.</title>
        <authorList>
            <person name="Miyama S."/>
            <person name="Goto T."/>
            <person name="Inoue Y."/>
            <person name="Yamakawa K."/>
        </authorList>
    </citation>
    <scope>VARIANT DRVT CYS-280</scope>
</reference>
<reference key="58">
    <citation type="journal article" date="2009" name="Br. J. Clin. Pharmacol.">
        <title>Differential role of sodium channels SCN1A and SCN2A gene polymorphisms with epilepsy and multiple drug resistance in the north Indian population.</title>
        <authorList>
            <person name="Lakhan R."/>
            <person name="Kumari R."/>
            <person name="Misra U.K."/>
            <person name="Kalita J."/>
            <person name="Pradhan S."/>
            <person name="Mittal B."/>
        </authorList>
    </citation>
    <scope>VARIANT THR-1067</scope>
</reference>
<reference key="59">
    <citation type="journal article" date="2009" name="Brain Dev.">
        <title>Missense mutation of the sodium channel gene SCN2A causes Dravet syndrome.</title>
        <authorList>
            <person name="Shi X."/>
            <person name="Yasumoto S."/>
            <person name="Nakagawa E."/>
            <person name="Fukasawa T."/>
            <person name="Uchiya S."/>
            <person name="Hirose S."/>
        </authorList>
    </citation>
    <scope>VARIANT DRVT LYS-1503</scope>
</reference>
<reference key="60">
    <citation type="journal article" date="2009" name="Clin. Genet.">
        <title>Mutational analysis of the SCN1A, SCN1B and GABRG2 genes in 150 Italian patients with idiopathic childhood epilepsies.</title>
        <authorList>
            <person name="Orrico A."/>
            <person name="Galli L."/>
            <person name="Grosso S."/>
            <person name="Buoni S."/>
            <person name="Pianigiani R."/>
            <person name="Balestri P."/>
            <person name="Sorrentino V."/>
        </authorList>
    </citation>
    <scope>VARIANTS GLN-542 AND PHE-790</scope>
    <scope>VARIANT FEB3A ASP-1308</scope>
    <scope>VARIANT DRVT CYS-1648</scope>
    <scope>VARIANTS GEFSP2 THR-899; ILE-976; ASN-1249 AND MET-1250</scope>
    <scope>POSSIBLE INVOLVEMENT IN PANAYIOTOPOULOS SYNDROME</scope>
</reference>
<reference key="61">
    <citation type="journal article" date="2009" name="J. Child Neurol.">
        <title>A novel inherited mutation in the voltage sensor region of SCN1A is associated with Panayiotopoulos syndrome in siblings and generalized epilepsy with febrile seizures plus.</title>
        <authorList>
            <person name="Livingston J.H."/>
            <person name="Cross J.H."/>
            <person name="Mclellan A."/>
            <person name="Birch R."/>
            <person name="Zuberi S.M."/>
        </authorList>
    </citation>
    <scope>VARIANT GEFSP2 LEU-218</scope>
    <scope>POSSIBLE INVOLVEMENT IN PANAYIOTOPOULOS SYNDROME</scope>
</reference>
<reference key="62">
    <citation type="journal article" date="2009" name="J. Med. Genet.">
        <title>Spectrum of SCN1A gene mutations associated with Dravet syndrome: analysis of 333 patients.</title>
        <authorList>
            <person name="Depienne C."/>
            <person name="Trouillard O."/>
            <person name="Saint-Martin C."/>
            <person name="Gourfinkel-An I."/>
            <person name="Bouteiller D."/>
            <person name="Carpentier W."/>
            <person name="Keren B."/>
            <person name="Abert B."/>
            <person name="Gautier A."/>
            <person name="Baulac S."/>
            <person name="Arzimanoglou A."/>
            <person name="Cazeneuve C."/>
            <person name="Nabbout R."/>
            <person name="LeGuern E."/>
        </authorList>
    </citation>
    <scope>VARIANTS GLN-542; HIS-604; THR-924; ILE-1079; THR-1109; ASP-1308; CYS-1575 AND GLY-1928</scope>
    <scope>VARIANTS DRVT VAL-58; PHE-61; HIS-79; GLN-101; TRP-101; ASN-124; ARG-171; VAL-175; LYS-191; TYR-191; GLY-194; GLU-223; SER-227; SER-232; TYR-243; ARG-277; LEU-281; SER-281; ILE-322; PHE-340; ASP-343; ARG-345; ASP-355; ILE-357; GLN-378; CYS-393; MET-400 DEL; CYS-426; PHE-525; GLY-626; ARG-843; CYS-859; LYS-875; LEU-896; PHE-927; CYS-931; ILE-934; PRO-939; ASN-943; SER-949; TYR-949; LYS-973; PRO-986; GLY-998; LYS-1068; GLY-1239; TYR-1239; ASP-1255; VAL-1275; SER-1284; PHE-1289 DEL; SER-1316; PRO-1328; LYS-1367; SER-1391; GLY-1416; ILE-1431; MET-1437; PHE-1473 DEL; ILE-1483 DEL; GLY-1484; ILE-1538; ALA-1544; LYS-1561; GLU-1579; GLU-1586; CYS-1596; LEU-1596; ILE-1612; GLY-1639; HIS-1648; ARG-1658; MET-1658; LYS-1664; ARG-1675; PHE-1677; LYS-1714; CYS-1725; ASN-1771; THR-1780; HIS-1781; MET-1782; SER-1782; THR-1783; VAL-1783; LYS-1788; ILE-1808; SER-1812; 1813-GLU--PHE-1815 DEL AND PHE-1835</scope>
</reference>
<reference key="63">
    <citation type="journal article" date="2009" name="Neurology">
        <title>Elicited repetitive daily blindness: a new phenotype associated with hemiplegic migraine and SCN1A mutations.</title>
        <authorList>
            <person name="Vahedi K."/>
            <person name="Depienne C."/>
            <person name="Le Fort D."/>
            <person name="Riant F."/>
            <person name="Chaine P."/>
            <person name="Trouillard O."/>
            <person name="Gaudric A."/>
            <person name="Morris M.A."/>
            <person name="LeGuern E."/>
            <person name="Tournier-Lasserve E."/>
            <person name="Bousser M.-G."/>
        </authorList>
    </citation>
    <scope>VARIANTS FHM3 HIS-1489 AND LEU-1499</scope>
</reference>
<reference key="64">
    <citation type="journal article" date="2009" name="Seizure">
        <title>Variable neurologic phenotype in a GEFS+ family with a novel mutation in SCN1A.</title>
        <authorList>
            <person name="Mahoney K."/>
            <person name="Moore S.J."/>
            <person name="Buckley D."/>
            <person name="Alam M."/>
            <person name="Parfrey P."/>
            <person name="Penney S."/>
            <person name="Merner N."/>
            <person name="Hodgkinson K."/>
            <person name="Young T.L."/>
        </authorList>
    </citation>
    <scope>VARIANT GEFSP2 HIS-388</scope>
</reference>
<reference key="65">
    <citation type="journal article" date="2010" name="Arch. Med. Res.">
        <title>Two novel mutations in SCN1A gene in Iranian patients with epilepsy.</title>
        <authorList>
            <person name="Ebrahimi A."/>
            <person name="Houshmand M."/>
            <person name="Tonekaboni S.H."/>
            <person name="Fallah Mahboob Passand M.S."/>
            <person name="Zainali S."/>
            <person name="Moghadasi M."/>
        </authorList>
    </citation>
    <scope>VARIANT THR-1067</scope>
</reference>
<reference key="66">
    <citation type="journal article" date="2010" name="Epilepsia">
        <title>Partial epilepsy with antecedent febrile seizures and seizure aggravation by antiepileptic drugs: associated with loss of function of Na(v) 1.1.</title>
        <authorList>
            <person name="Liao W.P."/>
            <person name="Shi Y.W."/>
            <person name="Long Y.S."/>
            <person name="Zeng Y."/>
            <person name="Li T."/>
            <person name="Yu M.J."/>
            <person name="Su T."/>
            <person name="Deng P."/>
            <person name="Lei Z.G."/>
            <person name="Xu S.J."/>
            <person name="Deng W.Y."/>
            <person name="Liu X.R."/>
            <person name="Sun W.W."/>
            <person name="Yi Y.H."/>
            <person name="Xu Z.C."/>
            <person name="Duan S."/>
        </authorList>
    </citation>
    <scope>VARIANTS GEFSP2 HIS-946 AND LEU-1765</scope>
    <scope>CHARACTERIZATION OF VARIANTS GEFSP2 HIS-946 AND LEU-1765</scope>
</reference>
<reference key="67">
    <citation type="journal article" date="2010" name="Epilepsy Res.">
        <title>Generalized epilepsy with febrile seizures plus (GEFS+) spectrum: clinical manifestations and SCN1A mutations in Indonesian patients.</title>
        <authorList>
            <person name="Herini E.S."/>
            <person name="Gunadi Harahap I.S."/>
            <person name="Yusoff S."/>
            <person name="Morikawa S."/>
            <person name="Patria S.Y."/>
            <person name="Nishimura N."/>
            <person name="Sunartini Sutaryo S."/>
            <person name="Takada S."/>
            <person name="Matsuo M."/>
            <person name="Nishio H."/>
        </authorList>
    </citation>
    <scope>VARIANTS DRVT ILE-1612 AND GLY-1756</scope>
</reference>
<reference key="68">
    <citation type="journal article" date="2010" name="Eur. J. Paediatr. Neurol.">
        <title>Hepatic coma culminating in severe brain damage in a child with a SCN1A mutation.</title>
        <authorList>
            <person name="Nishri D."/>
            <person name="Blumkin L."/>
            <person name="Lev D."/>
            <person name="Leshinsky-Silver E."/>
            <person name="Abu-Rashid M."/>
            <person name="Birch R."/>
            <person name="Zuberi S.M."/>
            <person name="Lerman-Sagie T."/>
        </authorList>
    </citation>
    <scope>VARIANT GLU-1637</scope>
</reference>
<reference key="69">
    <citation type="journal article" date="2010" name="J. Child Neurol.">
        <title>Four novel SCN1A mutations in Turkish patients with severe myoclonic epilepsy of infancy (SMEI).</title>
        <authorList>
            <person name="Arlier Z."/>
            <person name="Bayri Y."/>
            <person name="Kolb L.E."/>
            <person name="Erturk O."/>
            <person name="Ozturk A.K."/>
            <person name="Bayrakli F."/>
            <person name="Bilguvar K."/>
            <person name="Moliterno J.A."/>
            <person name="Dervent A."/>
            <person name="Demirbilek V."/>
            <person name="Yalcinkaya C."/>
            <person name="Korkmaz B."/>
            <person name="Tuysuz B."/>
            <person name="Gunel M."/>
        </authorList>
    </citation>
    <scope>VARIANTS DRVT GLN-862 AND LYS-954</scope>
</reference>
<reference key="70">
    <citation type="journal article" date="2010" name="J. Child Neurol.">
        <title>Genotype-phenotype correlations in a group of 15 SCN1A-mutated Italian patients with GEFS+ spectrum (seizures plus, classical and borderline severe myoclonic epilepsy of infancy).</title>
        <authorList>
            <person name="Nicita F."/>
            <person name="Spalice A."/>
            <person name="Papetti L."/>
            <person name="Ursitti F."/>
            <person name="Parisi P."/>
            <person name="Gennaro E."/>
            <person name="Zara F."/>
            <person name="Iannetti P."/>
        </authorList>
    </citation>
    <scope>VARIANT GEFSP2 THR-27</scope>
    <scope>VARIANTS DRVT LEU-63; VAL-239 AND ARG-1433</scope>
    <scope>VARIANT ASP-1308</scope>
</reference>
<reference key="71">
    <citation type="journal article" date="2010" name="J. Hum. Genet.">
        <title>Analysis of SCN1A mutation and parental origin in patients with Dravet syndrome.</title>
        <authorList>
            <person name="Sun H."/>
            <person name="Zhang Y."/>
            <person name="Liu X."/>
            <person name="Ma X."/>
            <person name="Yang Z."/>
            <person name="Qin J."/>
            <person name="Jiang Y."/>
            <person name="Qi Y."/>
            <person name="Wu X."/>
        </authorList>
    </citation>
    <scope>VARIANTS DRVT SER-90; THR-91; TRP-101; GLN-101; THR-239; ARG-259; HIS-393; TYR-939; GLY-952; LYS-1210; PRO-1260; PRO-1287; MET-1335; MET-1390; GLU-1433; GLU-1586 AND THR-1783</scope>
</reference>
<reference key="72">
    <citation type="journal article" date="2010" name="J. Med. Genet.">
        <title>De novo SCN1A mutations in Dravet syndrome and related epileptic encephalopathies are largely of paternal origin.</title>
        <authorList>
            <person name="Heron S.E."/>
            <person name="Scheffer I.E."/>
            <person name="Iona X."/>
            <person name="Zuberi S.M."/>
            <person name="Birch R."/>
            <person name="McMahon J.M."/>
            <person name="Bruce C.M."/>
            <person name="Berkovic S.F."/>
            <person name="Mulley J.C."/>
        </authorList>
    </citation>
    <scope>VARIANTS DRVT CYS-84; GLN-101; LYS-171; THR-175; ASN-194; SER-227; PHE-406; ASN-413; PRO-783; GLU-944; LEU-945; HIS-946; GLU-950; GLY-1396; LYS-1450; VAL-1545; GLN-1645; ARG-1726 AND THR-1783</scope>
    <scope>VARIANTS HIS-604; GLN-1636 AND HIS-1657</scope>
</reference>
<reference key="73">
    <citation type="journal article" date="2010" name="J. Med. Genet.">
        <title>Mechanisms for variable expressivity of inherited SCN1A mutations causing Dravet syndrome.</title>
        <authorList>
            <person name="Depienne C."/>
            <person name="Trouillard O."/>
            <person name="Gourfinkel-An I."/>
            <person name="Saint-Martin C."/>
            <person name="Bouteiller D."/>
            <person name="Graber D."/>
            <person name="Barthez-Carpentier M.A."/>
            <person name="Gautier A."/>
            <person name="Villeneuve N."/>
            <person name="Dravet C."/>
            <person name="Livet M.O."/>
            <person name="Rivier-Ringenbach C."/>
            <person name="Adam C."/>
            <person name="Dupont S."/>
            <person name="Baulac S."/>
            <person name="Heron D."/>
            <person name="Nabbout R."/>
            <person name="Leguern E."/>
        </authorList>
    </citation>
    <scope>VARIANTS DRVT ASN-124; TYR-191; LYS-875; LYS-1367; SER-1514; HIS-1648; MET-1658; LYS-1664 AND MET-1782</scope>
</reference>
<reference key="74">
    <citation type="journal article" date="2010" name="Neurosci. Lett.">
        <title>Novel mutation of SCN1A in familial generalized epilepsy with febrile seizures plus.</title>
        <authorList>
            <person name="Li N."/>
            <person name="Zhang J."/>
            <person name="Guo J.F."/>
            <person name="Yan X.X."/>
            <person name="Xia K."/>
            <person name="Tang B.S."/>
        </authorList>
    </citation>
    <scope>VARIANT GEFSP2 LYS-1795</scope>
</reference>
<reference key="75">
    <citation type="journal article" date="2010" name="Pediatr. Int.">
        <title>Novel SCN1A mutations in Indonesian patients with severe myoclonic epilepsy in infancy.</title>
        <authorList>
            <person name="Herini E.S."/>
            <person name="Gunadi H."/>
            <person name="van Kempen M.J."/>
            <person name="Yusoff S."/>
            <person name="Sutaryo S."/>
            <person name="Patria S.Y."/>
            <person name="Matsuo M."/>
            <person name="Lindhout D."/>
            <person name="Nishio H."/>
        </authorList>
    </citation>
    <scope>VARIANTS DRVT ILE-1612 AND GLY-1756</scope>
</reference>
<reference key="76">
    <citation type="journal article" date="2010" name="Pediatr. Neurol.">
        <title>Generalized epilepsy with febrile seizures plus: novel SCN1A mutation.</title>
        <authorList>
            <person name="Dimova P.S."/>
            <person name="Yordanova I."/>
            <person name="Bojinova V."/>
            <person name="Jordanova A."/>
            <person name="Kremenski I."/>
        </authorList>
    </citation>
    <scope>VARIANT GEFSP2 PHE-1309</scope>
</reference>
<reference key="77">
    <citation type="journal article" date="2011" name="Brain">
        <title>Dravet syndrome as epileptic encephalopathy: evidence from long-term course and neuropathology.</title>
        <authorList>
            <person name="Catarino C.B."/>
            <person name="Liu J.Y."/>
            <person name="Liagkouras I."/>
            <person name="Gibbons V.S."/>
            <person name="Labrum R.W."/>
            <person name="Ellis R."/>
            <person name="Woodward C."/>
            <person name="Davis M.B."/>
            <person name="Smith S.J."/>
            <person name="Cross J.H."/>
            <person name="Appleton R.E."/>
            <person name="Yendle S.C."/>
            <person name="McMahon J.M."/>
            <person name="Bellows S.T."/>
            <person name="Jacques T.S."/>
            <person name="Zuberi S.M."/>
            <person name="Koepp M.J."/>
            <person name="Martinian L."/>
            <person name="Scheffer I.E."/>
            <person name="Thom M."/>
            <person name="Sisodiya S.M."/>
        </authorList>
    </citation>
    <scope>VARIANTS DRVT LYS-226; HIS-931; ALA-1266; HIS-1462; THR-1523; THR-1638 AND GLU-1880</scope>
</reference>
<reference key="78">
    <citation type="journal article" date="2011" name="Arch. Neurol.">
        <title>Novel SCN1A mutation in a proband with malignant migrating partial seizures of infancy.</title>
        <authorList>
            <person name="Freilich E.R."/>
            <person name="Jones J.M."/>
            <person name="Gaillard W.D."/>
            <person name="Conry J.A."/>
            <person name="Tsuchida T.N."/>
            <person name="Reyes C."/>
            <person name="Dib-Hajj S."/>
            <person name="Waxman S.G."/>
            <person name="Meisler M.H."/>
            <person name="Pearl P.L."/>
        </authorList>
    </citation>
    <scope>VARIANT DRVT GLU-1669</scope>
</reference>
<reference key="79">
    <citation type="journal article" date="2011" name="Eur. J. Neurosci.">
        <title>Nav 1.1 dysfunction in genetic epilepsy with febrile seizures-plus or Dravet syndrome.</title>
        <authorList>
            <person name="Volkers L."/>
            <person name="Kahlig K.M."/>
            <person name="Verbeek N.E."/>
            <person name="Das J.H."/>
            <person name="van Kempen M.J."/>
            <person name="Stroink H."/>
            <person name="Augustijn P."/>
            <person name="van Nieuwenhuizen O."/>
            <person name="Lindhout D."/>
            <person name="George A.L. Jr."/>
            <person name="Koeleman B.P."/>
            <person name="Rook M.B."/>
        </authorList>
    </citation>
    <scope>VARIANT GEFSP2 HIS-859</scope>
    <scope>VARIANT DRVT GLY-865</scope>
    <scope>CHARACTERIZATION OF VARIANT GEFSP2 HIS-859</scope>
    <scope>CHARACTERIZATION OF VARIANTS DRVT GLY-865; CYS-946 AND HIS-946</scope>
</reference>
<reference key="80">
    <citation type="journal article" date="2011" name="Neurology">
        <title>Genotype-phenotype associations in SCN1A-related epilepsies.</title>
        <authorList>
            <person name="Zuberi S.M."/>
            <person name="Brunklaus A."/>
            <person name="Birch R."/>
            <person name="Reavey E."/>
            <person name="Duncan J."/>
            <person name="Forbes G.H."/>
        </authorList>
    </citation>
    <scope>VARIANTS DRVT PHE-17 DEL; THR-68; ASN-79; CYS-84; PRO-98; GLN-101; TRP-101; ARG-108; ASP-127; ARG-199; SER-227; THR-227; SER-232; ARG-233; VAL-342; ASP-343; TRP-351; SER-359; ARG-363; ARG-384; CYS-393; HIS-393; VAL-400; VAL-403; PHE-406; GLY-626; ASP-762; THR-785; ILE-812; ARG-842; 854-GLY-LEU-855 DEL; CYS-859; GLN-862; PRO-890; CYS-932; PRO-933; CYS-946; HIS-946; ARG-950; LYS-954; LYS-956; LEU-957; ILE-976; VAL-979; ARG-993; 999-ASN-LEU-1000 DELINS LEU-ILE-SER; LYS-1208; LYS-1221; PHE-1230; ASP-1238; ALA-1266; ASN-1288; VAL-1320; PRO-1326; GLY-1350; ARG-1358; PRO-1370; HIS-1378; THR-1378; ILE-1394; TYR-1396; SER-1417; PHE-1423; ALA-1429 DEL; VAL-1433; LYS-1450; SER-1451; LYS-1454; HIS-1462; LYS-1476; LYS-1503; GLY-1544; GLU-1586; ARG-1588; HIS-1592; PRO-1592; SER-1605; GLU-1637; THR-1638; CYS-1648; GLU-1653; PRO-1660; PRO-1667; LEU-1668; ILE-1672; THR-1673; THR-1683; ASP-1684; TRP-1688; ARG-1714; ASN-1763; ASN-1770; PHE-1770; THR-1770; THR-1780; VAL-1783; LYS-1787; PRO-1832; LYS-1852; LEU-1855; GLU-1880; THR-1909 DEL AND ARG-1927 DELINS ILE-ILE-GLN</scope>
    <scope>VARIANTS GEFSP2 LEU-218; ILE-254; GLY-291; THR-960; VAL-973; SER-1204; PHE-1230; ASP-1414; HIS-1596; LEU-1739 AND THR-1867</scope>
    <scope>VARIANTS ASN-45; VAL-333; ASN-382; HIS-604; ILE-699; THR-924; HIS-931; GLU-1006; ILE-1079; THR-1109; ASP-1308; ASP-1326; MET-1483 AND PHE-1683</scope>
</reference>
<reference key="81">
    <citation type="journal article" date="2011" name="Neurology">
        <title>De novo SCN1A mutations in migrating partial seizures of infancy.</title>
        <authorList>
            <person name="Carranza Rojo D."/>
            <person name="Hamiwka L."/>
            <person name="McMahon J.M."/>
            <person name="Dibbens L.M."/>
            <person name="Arsov T."/>
            <person name="Suls A."/>
            <person name="Stoedberg T."/>
            <person name="Kelley K."/>
            <person name="Wirrell E."/>
            <person name="Appleton B."/>
            <person name="Mackay M."/>
            <person name="Freeman J.L."/>
            <person name="Yendle S.C."/>
            <person name="Berkovic S.F."/>
            <person name="Bienvenu T."/>
            <person name="De Jonghe P."/>
            <person name="Thorburn D.R."/>
            <person name="Mulley J.C."/>
            <person name="Mefford H.C."/>
            <person name="Scheffer I.E."/>
        </authorList>
    </citation>
    <scope>VARIANT DRVT GLY-862</scope>
</reference>
<reference key="82">
    <citation type="journal article" date="2012" name="Epilepsia">
        <title>Acute encephalopathy in children with Dravet syndrome.</title>
        <authorList>
            <person name="Okumura A."/>
            <person name="Uematsu M."/>
            <person name="Imataka G."/>
            <person name="Tanaka M."/>
            <person name="Okanishi T."/>
            <person name="Kubota T."/>
            <person name="Sudo A."/>
            <person name="Tohyama J."/>
            <person name="Tsuji M."/>
            <person name="Ohmori I."/>
            <person name="Naiki M."/>
            <person name="Hiraiwa-Sofue A."/>
            <person name="Sato H."/>
            <person name="Saitoh S."/>
            <person name="Shimizu T."/>
        </authorList>
    </citation>
    <scope>VARIANTS DRVT VAL-1339 AND LEU-1630</scope>
</reference>
<reference key="83">
    <citation type="journal article" date="2012" name="Epilepsia">
        <title>Mutations of the SCN1A gene in acute encephalopathy.</title>
        <authorList>
            <person name="Saitoh M."/>
            <person name="Shinohara M."/>
            <person name="Hoshino H."/>
            <person name="Kubota M."/>
            <person name="Amemiya K."/>
            <person name="Takanashi J.L."/>
            <person name="Hwang S.K."/>
            <person name="Hirose S."/>
            <person name="Mizuguchi M."/>
        </authorList>
    </citation>
    <scope>VARIANTS LEU-982; CYS-1575 AND LEU-1977</scope>
</reference>
<reference key="84">
    <citation type="journal article" date="2012" name="Epilepsia">
        <title>Targeted next generation sequencing as a diagnostic tool in epileptic disorders.</title>
        <authorList>
            <person name="Lemke J.R."/>
            <person name="Riesch E."/>
            <person name="Scheurenbrand T."/>
            <person name="Schubach M."/>
            <person name="Wilhelm C."/>
            <person name="Steiner I."/>
            <person name="Hansen J."/>
            <person name="Courage C."/>
            <person name="Gallati S."/>
            <person name="Buerki S."/>
            <person name="Strozzi S."/>
            <person name="Simonetti B.G."/>
            <person name="Grunt S."/>
            <person name="Steinlin M."/>
            <person name="Alber M."/>
            <person name="Wolff M."/>
            <person name="Klopstock T."/>
            <person name="Prott E.C."/>
            <person name="Lorenz R."/>
            <person name="Spaich C."/>
            <person name="Rona S."/>
            <person name="Lakshminarasimhan M."/>
            <person name="Kroell J."/>
            <person name="Dorn T."/>
            <person name="Kraemer G."/>
            <person name="Synofzik M."/>
            <person name="Becker F."/>
            <person name="Weber Y.G."/>
            <person name="Lerche H."/>
            <person name="Boehm D."/>
            <person name="Biskup S."/>
        </authorList>
    </citation>
    <scope>VARIANTS DRVT VAL-289; ARG-379 AND HIS-393</scope>
</reference>
<reference key="85">
    <citation type="journal article" date="2012" name="Epilepsy Res.">
        <title>Prevalence of SCN1A mutations in children with suspected Dravet syndrome and intractable childhood epilepsy.</title>
        <authorList>
            <person name="Wang J.W."/>
            <person name="Shi X.Y."/>
            <person name="Kurahashi H."/>
            <person name="Hwang S.K."/>
            <person name="Ishii A."/>
            <person name="Higurashi N."/>
            <person name="Kaneko S."/>
            <person name="Hirose S."/>
        </authorList>
    </citation>
    <scope>VARIANTS DRVT CYS-84; GLN-101; TRP-101; ILE-105; ARG-179; ARG-190; ARG-226; SER-227; ARG-259; ARG-280; ALA-281; PRO-363; ARG-384; HIS-393; TRP-409; CYS-426; MET-875; ILE-876; PHE-896; ILE-934; PHE-940; CYS-946; HIS-946; LEU-987; GLY-1316; VAL-1339; MET-1344; PRO-1355; VAL-1385; GLY-1418; PRO-1427; CYS-1453; HIS-1462; SER-1472; TYR-1485; GLU-1503 DEL; LYS-1503; VAL-1545; ARG-1555; GLY-1608; LEU-1630; ASN-1638; SER-1642; VAL-1662; PRO-1667; PHE-1677; THR-1683; SER-1692; CYS-1694; GLY-1727; ARG-1741; PHE-1766 DEL; PHE-1771; THR-1783; VAL-1783 AND THR-1792</scope>
    <scope>VARIANTS ICEGTC SER-90; GLN-101; SER-178; MET-252; ARG-290; HIS-393; ILE-896; ALA-944; GLN-1213; CYS-1254; THR-1325; PRO-1328; LEU-1357; ARG-1376; ASP-1429; HIS-1462; LYS-1511; VAL-1619; SER-1684; PRO-1724; CYS-1781 AND TRP-1861</scope>
    <scope>VARIANTS GLN-542 AND CYS-1575</scope>
</reference>
<reference key="86">
    <citation type="journal article" date="2013" name="Epilepsia">
        <title>Targeted capture and sequencing for detection of mutations causing early onset epileptic encephalopathy.</title>
        <authorList>
            <person name="Kodera H."/>
            <person name="Kato M."/>
            <person name="Nord A.S."/>
            <person name="Walsh T."/>
            <person name="Lee M."/>
            <person name="Yamanaka G."/>
            <person name="Tohyama J."/>
            <person name="Nakamura K."/>
            <person name="Nakagawa E."/>
            <person name="Ikeda T."/>
            <person name="Ben-Zeev B."/>
            <person name="Lev D."/>
            <person name="Lerman-Sagie T."/>
            <person name="Straussberg R."/>
            <person name="Tanabe S."/>
            <person name="Ueda K."/>
            <person name="Amamoto M."/>
            <person name="Ohta S."/>
            <person name="Nonoda Y."/>
            <person name="Nishiyama K."/>
            <person name="Tsurusaki Y."/>
            <person name="Nakashima M."/>
            <person name="Miyake N."/>
            <person name="Hayasaka K."/>
            <person name="King M.C."/>
            <person name="Matsumoto N."/>
            <person name="Saitsu H."/>
        </authorList>
    </citation>
    <scope>VARIANTS DRVT ASN-194 AND ASP-1238</scope>
</reference>
<reference key="87">
    <citation type="journal article" date="2013" name="Epilepsia">
        <title>Exome sequencing reveals new causal mutations in children with epileptic encephalopathies.</title>
        <authorList>
            <person name="Veeramah K.R."/>
            <person name="Johnstone L."/>
            <person name="Karafet T.M."/>
            <person name="Wolf D."/>
            <person name="Sprissler R."/>
            <person name="Salogiannis J."/>
            <person name="Barth-Maron A."/>
            <person name="Greenberg M.E."/>
            <person name="Stuhlmann T."/>
            <person name="Weinert S."/>
            <person name="Jentsch T.J."/>
            <person name="Pazzi M."/>
            <person name="Restifo L.L."/>
            <person name="Talwar D."/>
            <person name="Erickson R.P."/>
            <person name="Hammer M.F."/>
        </authorList>
    </citation>
    <scope>VARIANT ALA-1275</scope>
</reference>
<reference key="88">
    <citation type="journal article" date="2013" name="Nat. Genet.">
        <title>Targeted resequencing in epileptic encephalopathies identifies de novo mutations in CHD2 and SYNGAP1.</title>
        <authorList>
            <person name="Carvill G.L."/>
            <person name="Heavin S.B."/>
            <person name="Yendle S.C."/>
            <person name="McMahon J.M."/>
            <person name="O'Roak B.J."/>
            <person name="Cook J."/>
            <person name="Khan A."/>
            <person name="Dorschner M.O."/>
            <person name="Weaver M."/>
            <person name="Calvert S."/>
            <person name="Malone S."/>
            <person name="Wallace G."/>
            <person name="Stanley T."/>
            <person name="Bye A.M."/>
            <person name="Bleasel A."/>
            <person name="Howell K.B."/>
            <person name="Kivity S."/>
            <person name="Mackay M.T."/>
            <person name="Rodriguez-Casero V."/>
            <person name="Webster R."/>
            <person name="Korczyn A."/>
            <person name="Afawi Z."/>
            <person name="Zelnick N."/>
            <person name="Lerman-Sagie T."/>
            <person name="Lev D."/>
            <person name="Moeller R.S."/>
            <person name="Gill D."/>
            <person name="Andrade D.M."/>
            <person name="Freeman J.L."/>
            <person name="Sadleir L.G."/>
            <person name="Shendure J."/>
            <person name="Berkovic S.F."/>
            <person name="Scheffer I.E."/>
            <person name="Mefford H.C."/>
        </authorList>
    </citation>
    <scope>VARIANTS ASN-45 AND TRP-1988</scope>
    <scope>VARIANT ICEGTC SER-359</scope>
</reference>
<reference key="89">
    <citation type="journal article" date="2014" name="Epileptic Disord.">
        <title>Infantile epileptic encephalopathy with a hyperkinetic movement disorder and hand stereotypies associated with a novel SCN1A mutation.</title>
        <authorList>
            <person name="Ohashi T."/>
            <person name="Akasaka N."/>
            <person name="Kobayashi Y."/>
            <person name="Magara S."/>
            <person name="Kawashima H."/>
            <person name="Matsumoto N."/>
            <person name="Saitsu H."/>
            <person name="Tohyama J."/>
        </authorList>
    </citation>
    <scope>VARIANT DEE6B LEU-422</scope>
</reference>
<reference key="90">
    <citation type="journal article" date="2015" name="Epilepsia">
        <title>Diagnostic yield of genetic testing in epileptic encephalopathy in childhood.</title>
        <authorList>
            <person name="Mercimek-Mahmutoglu S."/>
            <person name="Patel J."/>
            <person name="Cordeiro D."/>
            <person name="Hewson S."/>
            <person name="Callen D."/>
            <person name="Donner E.J."/>
            <person name="Hahn C.D."/>
            <person name="Kannu P."/>
            <person name="Kobayashi J."/>
            <person name="Minassian B.A."/>
            <person name="Moharir M."/>
            <person name="Siriwardena K."/>
            <person name="Weiss S.K."/>
            <person name="Weksberg R."/>
            <person name="Snead O.C. III"/>
        </authorList>
    </citation>
    <scope>VARIANTS DRVT THR-113; 450-GLN--LYS-2009 DEL AND ARG-1588</scope>
</reference>
<reference key="91">
    <citation type="journal article" date="2015" name="Epilepsy Res.">
        <title>Missense mutations in sodium channel SCN1A and SCN2A predispose children to encephalopathy with severe febrile seizures.</title>
        <authorList>
            <person name="Saitoh M."/>
            <person name="Ishii A."/>
            <person name="Ihara Y."/>
            <person name="Hoshino A."/>
            <person name="Terashima H."/>
            <person name="Kubota M."/>
            <person name="Kikuchi K."/>
            <person name="Yamanaka G."/>
            <person name="Amemiya K."/>
            <person name="Hirose S."/>
            <person name="Mizuguchi M."/>
        </authorList>
    </citation>
    <scope>VARIANTS LEU-982; CYS-1575 AND SER-1674</scope>
</reference>
<reference key="92">
    <citation type="journal article" date="2015" name="Neuron">
        <title>Targeted DNA Sequencing from Autism Spectrum Disorder Brains Implicates Multiple Genetic Mechanisms.</title>
        <authorList>
            <person name="D'Gama A.M."/>
            <person name="Pochareddy S."/>
            <person name="Li M."/>
            <person name="Jamuar S.S."/>
            <person name="Reiff R.E."/>
            <person name="Lam A.T."/>
            <person name="Sestan N."/>
            <person name="Walsh C.A."/>
        </authorList>
    </citation>
    <scope>VARIANT VAL-1440</scope>
</reference>
<reference key="93">
    <citation type="journal article" date="2016" name="J. Med. Genet.">
        <title>Improving diagnosis and broadening the phenotypes in early-onset seizure and severe developmental delay disorders through gene panel analysis.</title>
        <authorList>
            <person name="Trump N."/>
            <person name="McTague A."/>
            <person name="Brittain H."/>
            <person name="Papandreou A."/>
            <person name="Meyer E."/>
            <person name="Ngoh A."/>
            <person name="Palmer R."/>
            <person name="Morrogh D."/>
            <person name="Boustred C."/>
            <person name="Hurst J.A."/>
            <person name="Jenkins L."/>
            <person name="Kurian M.A."/>
            <person name="Scott R.H."/>
        </authorList>
    </citation>
    <scope>VARIANTS DRVT GLN-101; 1284-TRP--LYS-2009 DEL AND LEU-1345</scope>
</reference>
<reference key="94">
    <citation type="journal article" date="2017" name="Am. J. Med. Genet. A">
        <title>A mutation in GABRB3 associated with Dravet syndrome.</title>
        <authorList>
            <person name="Le S.V."/>
            <person name="Le P.H.T."/>
            <person name="Le T.K.V."/>
            <person name="Kieu Huynh T.T."/>
            <person name="Hang Do T.T."/>
        </authorList>
    </citation>
    <scope>VARIANT DRVT HIS-393</scope>
</reference>
<reference key="95">
    <citation type="journal article" date="2017" name="Hum. Mutat.">
        <title>Diagnostic targeted resequencing in 349 patients with drug-resistant pediatric epilepsies identifies causative mutations in 30 different genes.</title>
        <authorList>
            <consortium name="Clinical Study Group"/>
            <person name="Parrini E."/>
            <person name="Marini C."/>
            <person name="Mei D."/>
            <person name="Galuppi A."/>
            <person name="Cellini E."/>
            <person name="Pucatti D."/>
            <person name="Chiti L."/>
            <person name="Rutigliano D."/>
            <person name="Bianchini C."/>
            <person name="Virdo S."/>
            <person name="De Vita D."/>
            <person name="Bigoni S."/>
            <person name="Barba C."/>
            <person name="Mari F."/>
            <person name="Montomoli M."/>
            <person name="Pisano T."/>
            <person name="Rosati A."/>
            <person name="Guerrini R."/>
        </authorList>
    </citation>
    <scope>VARIANTS DRVT ARG-190; PRO-228; ILE-1605 AND GLN-1645</scope>
    <scope>VARIANT ASP-616</scope>
</reference>
<reference key="96">
    <citation type="journal article" date="2017" name="Neurology">
        <title>Not all SCN1A epileptic encephalopathies are Dravet syndrome: Early profound Thr226Met phenotype.</title>
        <authorList>
            <consortium name="DDD Study"/>
            <person name="Sadleir L.G."/>
            <person name="Mountier E.I."/>
            <person name="Gill D."/>
            <person name="Davis S."/>
            <person name="Joshi C."/>
            <person name="DeVile C."/>
            <person name="Kurian M.A."/>
            <person name="Mandelstam S."/>
            <person name="Wirrell E."/>
            <person name="Nickels K.C."/>
            <person name="Murali H.R."/>
            <person name="Carvill G."/>
            <person name="Myers C.T."/>
            <person name="Mefford H.C."/>
            <person name="Scheffer I.E."/>
        </authorList>
    </citation>
    <scope>INVOLVEMENT IN DEE6B</scope>
    <scope>VARIANTS DEE6B MET-226 AND SER-1345</scope>
</reference>
<reference key="97">
    <citation type="journal article" date="2018" name="PLoS Genet.">
        <title>De novo mutations in the GTP/GDP-binding region of RALA, a RAS-like small GTPase, cause intellectual disability and developmental delay.</title>
        <authorList>
            <person name="Hiatt S.M."/>
            <person name="Neu M.B."/>
            <person name="Ramaker R.C."/>
            <person name="Hardigan A.A."/>
            <person name="Prokop J.W."/>
            <person name="Hancarova M."/>
            <person name="Prchalova D."/>
            <person name="Havlovicova M."/>
            <person name="Prchal J."/>
            <person name="Stranecky V."/>
            <person name="Yim D.K.C."/>
            <person name="Powis Z."/>
            <person name="Keren B."/>
            <person name="Nava C."/>
            <person name="Mignot C."/>
            <person name="Rio M."/>
            <person name="Revah-Politi A."/>
            <person name="Hemati P."/>
            <person name="Stong N."/>
            <person name="Iglesias A.D."/>
            <person name="Suchy S.F."/>
            <person name="Willaert R."/>
            <person name="Wentzensen I.M."/>
            <person name="Wheeler P.G."/>
            <person name="Brick L."/>
            <person name="Kozenko M."/>
            <person name="Hurst A.C.E."/>
            <person name="Wheless J.W."/>
            <person name="Lacassie Y."/>
            <person name="Myers R.M."/>
            <person name="Barsh G.S."/>
            <person name="Sedlacek Z."/>
            <person name="Cooper G.M."/>
        </authorList>
    </citation>
    <scope>VARIANT GLN-187</scope>
</reference>
<reference key="98">
    <citation type="journal article" date="2023" name="Cereb. Cortex">
        <title>Mutations in plasticity-related-gene-1 (PRG-1) protein contribute to hippocampal seizure susceptibility and modify epileptic phenotype.</title>
        <authorList>
            <person name="Knierim E."/>
            <person name="Vogt J."/>
            <person name="Kintscher M."/>
            <person name="Ponomarenko A."/>
            <person name="Baumgart J."/>
            <person name="Beed P."/>
            <person name="Korotkova T."/>
            <person name="Trimbuch T."/>
            <person name="Panzer A."/>
            <person name="Steinlein O.K."/>
            <person name="Stephani U."/>
            <person name="Escayg A."/>
            <person name="Koko M."/>
            <person name="Liu Y."/>
            <person name="Lerche H."/>
            <person name="Schmitz D."/>
            <person name="Nitsch R."/>
            <person name="Schuelke M."/>
        </authorList>
    </citation>
    <scope>VARIANT SER-541</scope>
</reference>
<reference key="99">
    <citation type="journal article" date="2024" name="Int. J. Mol. Sci.">
        <title>Functional characteristics of the Nav1.1 p.Arg1596Cys mutation associated with varying severity of epilepsy phenotypes.</title>
        <authorList>
            <person name="Witkowski G."/>
            <person name="Szulczyk B."/>
            <person name="Nurowska E."/>
            <person name="Jurek M."/>
            <person name="Pasierski M."/>
            <person name="Lipiec A."/>
            <person name="Charzewska A."/>
            <person name="Dawidziuk M."/>
            <person name="Milewski M."/>
            <person name="Owsiak S."/>
            <person name="Rola R."/>
            <person name="Sienkiewicz Jarosz H."/>
            <person name="Hoffman-Zacharska D."/>
        </authorList>
    </citation>
    <scope>VARIANT CYS-1596</scope>
    <scope>CHARACTERIZATION OF VARIANT CYS-1596</scope>
</reference>
<proteinExistence type="evidence at protein level"/>
<keyword id="KW-0002">3D-structure</keyword>
<keyword id="KW-0025">Alternative splicing</keyword>
<keyword id="KW-1269">Autism</keyword>
<keyword id="KW-1268">Autism spectrum disorder</keyword>
<keyword id="KW-1003">Cell membrane</keyword>
<keyword id="KW-0225">Disease variant</keyword>
<keyword id="KW-1015">Disulfide bond</keyword>
<keyword id="KW-0887">Epilepsy</keyword>
<keyword id="KW-0325">Glycoprotein</keyword>
<keyword id="KW-0407">Ion channel</keyword>
<keyword id="KW-0406">Ion transport</keyword>
<keyword id="KW-0472">Membrane</keyword>
<keyword id="KW-0597">Phosphoprotein</keyword>
<keyword id="KW-1267">Proteomics identification</keyword>
<keyword id="KW-1185">Reference proteome</keyword>
<keyword id="KW-0677">Repeat</keyword>
<keyword id="KW-0915">Sodium</keyword>
<keyword id="KW-0894">Sodium channel</keyword>
<keyword id="KW-0739">Sodium transport</keyword>
<keyword id="KW-0812">Transmembrane</keyword>
<keyword id="KW-1133">Transmembrane helix</keyword>
<keyword id="KW-0813">Transport</keyword>
<keyword id="KW-0851">Voltage-gated channel</keyword>
<protein>
    <recommendedName>
        <fullName>Sodium channel protein type 1 subunit alpha</fullName>
    </recommendedName>
    <alternativeName>
        <fullName>Sodium channel protein brain I subunit alpha</fullName>
    </alternativeName>
    <alternativeName>
        <fullName>Sodium channel protein type I subunit alpha</fullName>
    </alternativeName>
    <alternativeName>
        <fullName>Voltage-gated sodium channel subunit alpha Nav1.1</fullName>
    </alternativeName>
</protein>
<comment type="function">
    <text evidence="1 22">Pore-forming subunit of Nav1.1, a voltage-gated sodium (Nav) channel that directly mediates the depolarizing phase of action potentials in excitable membranes. Navs, also called VGSCs (voltage-gated sodium channels) or VDSCs (voltage-dependent sodium channels), operate by switching between closed and open conformations depending on the voltage difference across the membrane. In the open conformation they allow Na(+) ions to selectively pass through the pore, along their electrochemical gradient. The influx of Na(+) ions provokes membrane depolarization, initiating the propagation of electrical signals throughout cells and tissues (PubMed:14672992). By regulating the excitability of neurons, ensures that they respond appropriately to synaptic inputs, maintaining the balance between excitation and inhibition in brain neural circuits (By similarity). Nav1.1 plays a role in controlling the excitability and action potential propagation from somatosensory neurons, thereby contributing to the sensory perception of mechanically-induced pain (By similarity).</text>
</comment>
<comment type="catalytic activity">
    <reaction evidence="22">
        <text>Na(+)(in) = Na(+)(out)</text>
        <dbReference type="Rhea" id="RHEA:34963"/>
        <dbReference type="ChEBI" id="CHEBI:29101"/>
    </reaction>
</comment>
<comment type="activity regulation">
    <text evidence="1 85 92">Activated by the spider toxins Hm1a and Hm1b (H.maculata, AC P60992 and AC P0DOC5) eliciting acute pain and mechanical allodynia (By similarity). Inhibited by the conotoxin GVIIJ (PubMed:24497506). Inhibited by the spider beta/delta-theraphotoxin-Pre1a (PubMed:28428547).</text>
</comment>
<comment type="subunit">
    <text evidence="25 45 74 96 105">The Nav1.1 voltage-gated sodium channel consists of an ion-conducting alpha subunit SCN1A which is functional on its own regulated by one or more beta-1 (SCN1B), beta-2 (SCN2B), beta-3 (SCN3B) and beta-4 (SCN4B) subunits (PubMed:15525788, PubMed:33712547). SCN1B and SCN3B are non-covalently associated with SCN1A. SCN2B and SCN4B are disulfide-linked to SCN1A (PubMed:33712547). SCN1B regulates both the expression at the plasma membrane and the voltage dependence of Nav1.1 inactivation (PubMed:15525788, PubMed:17928445). SCN3B and SCN4B reduce Nav1.1 conductance (PubMed:33712547). Probably interacts with TMEM233; modulates the gating properties of NaV1.1 (Probable). Interacts with FGF13; regulates the steady-state inactivation of Nav.1.1 (PubMed:21566136).</text>
</comment>
<comment type="subcellular location">
    <subcellularLocation>
        <location evidence="22 45">Cell membrane</location>
        <topology evidence="96">Multi-pass membrane protein</topology>
    </subcellularLocation>
</comment>
<comment type="alternative products">
    <event type="alternative splicing"/>
    <isoform>
        <id>P35498-1</id>
        <name>1</name>
        <sequence type="displayed"/>
    </isoform>
    <isoform>
        <id>P35498-2</id>
        <name>2</name>
        <sequence type="described" ref="VSP_001031"/>
    </isoform>
    <isoform>
        <id>P35498-3</id>
        <name>3</name>
        <sequence type="described" ref="VSP_045399"/>
    </isoform>
</comment>
<comment type="domain">
    <text evidence="103">The sequence contains 4 internal repeats, each with 5 hydrophobic segments (S1, S2, S3, S5, S6) and one positively charged segment (S4). Segments S4 are probably the voltage-sensors and are characterized by a series of positively charged amino acids at every third position.</text>
</comment>
<comment type="domain">
    <text evidence="1">The S3b-S4 and S1-S2 loops of repeat IV are targeted by H.maculata toxins Hm1a and Hm1b, leading to inhibit fast inactivation of Nav1.1/SCN1A. Selectivity for H.maculata toxins Hm1a and Hm1b depends on S1-S2 loops of repeat IV.</text>
</comment>
<comment type="PTM">
    <text evidence="3">Phosphorylation at Ser-1516 by PKC in a highly conserved cytoplasmic loop slows inactivation of the sodium channel and reduces peak sodium currents.</text>
</comment>
<comment type="disease" evidence="7 8 9 11 12 14 16 20 22 25 26 27 34 39 41 42 44 45 48 50 51 55 56 57 63 68 69 71 72 77">
    <disease id="DI-00506">
        <name>Generalized epilepsy with febrile seizures plus 2</name>
        <acronym>GEFSP2</acronym>
        <description>A rare autosomal dominant, familial condition with incomplete penetrance and large intrafamilial variability. Patients display febrile seizures persisting sometimes beyond the age of 6 years and/or a variety of afebrile seizure types. This disease combines febrile seizures, generalized seizures often precipitated by fever at age 6 years or more, and partial seizures, with a variable degree of severity.</description>
        <dbReference type="MIM" id="604403"/>
    </disease>
    <text>The disease is caused by variants affecting the gene represented in this entry.</text>
</comment>
<comment type="disease" evidence="10 13 15 18 19 21 22 23 24 28 30 33 35 36 37 38 39 42 50 52 53 57 58 59 61 62 65 66 67 71 72 73 75 76 77 78 80 81 83 84 87 90 91 93 96">
    <disease id="DI-01023">
        <name>Dravet syndrome</name>
        <acronym>DRVT</acronym>
        <description>A severe form of epileptic encephalopathy characterized by generalized tonic, clonic, and tonic-clonic seizures that are initially induced by fever and begin during the first year of life. Later, patients also manifest other seizure types, including absence, myoclonic, and simple and complex partial seizures. Psychomotor development delay is observed around the second year of life. Some patients manifest a borderline disease phenotype and do not necessarily fulfill all diagnostic criteria for core DRVT. DRVT is considered to be the most severe phenotype within the spectrum of generalized epilepsies with febrile seizures-plus.</description>
        <dbReference type="MIM" id="607208"/>
    </disease>
    <text>The disease is caused by variants affecting the gene represented in this entry.</text>
</comment>
<comment type="disease" evidence="15 31 41 81 84">
    <disease id="DI-00599">
        <name>Intractable childhood epilepsy with generalized tonic-clonic seizures</name>
        <acronym>ICEGTC</acronym>
        <description>A disorder characterized by generalized tonic-clonic seizures beginning usually in infancy and induced by fever. Seizures are associated with subsequent mental decline, as well as ataxia or hypotonia. ICEGTC is similar to SMEI, except for the absence of myoclonic seizures.</description>
        <dbReference type="MIM" id="607208"/>
    </disease>
    <text>The disease is caused by variants affecting the gene represented in this entry.</text>
</comment>
<comment type="disease" evidence="29 40 46 54 96">
    <disease id="DI-01572">
        <name>Migraine, familial hemiplegic, 3</name>
        <acronym>FHM3</acronym>
        <description>A subtype of migraine associated with transient blindness in some families. Migraine is a disabling symptom complex of periodic headaches, usually temporal and unilateral. Headaches are often accompanied by irritability, nausea, vomiting and photophobia, preceded by constriction of the cranial arteries. The two major subtypes are common migraine (migraine without aura) and classic migraine (migraine with aura). Classic migraine is characterized by recurrent attacks of reversible neurological symptoms (aura) that precede or accompany the headache. Aura may include a combination of sensory disturbances, such as blurred vision, hallucinations, vertigo, numbness and difficulty in concentrating and speaking.</description>
        <dbReference type="MIM" id="609634"/>
    </disease>
    <text>The disease is caused by variants affecting the gene represented in this entry.</text>
</comment>
<comment type="disease" evidence="32 57">
    <disease id="DI-00488">
        <name>Febrile seizures, familial, 3A</name>
        <acronym>FEB3A</acronym>
        <description>Seizures associated with febrile episodes in childhood without any evidence of intracranial infection or defined pathologic or traumatic cause. It is a common condition, affecting 2-5% of children aged 3 months to 5 years. The majority are simple febrile seizures (generally defined as generalized onset, single seizures with a duration of less than 30 minutes). Complex febrile seizures are characterized by focal onset, duration greater than 30 minutes, and/or more than one seizure in a 24 hour period. The likelihood of developing epilepsy following simple febrile seizures is low. Complex febrile seizures are associated with a moderately increased incidence of epilepsy.</description>
        <dbReference type="MIM" id="604403"/>
    </disease>
    <text>The disease is caused by variants affecting the gene represented in this entry.</text>
</comment>
<comment type="disease" evidence="39 86 94">
    <disease id="DI-06102">
        <name>Developmental and epileptic encephalopathy 6B</name>
        <acronym>DEE6B</acronym>
        <description>A form of epileptic encephalopathy, a heterogeneous group of severe early-onset epilepsies characterized by refractory seizures, neurodevelopmental impairment, and poor prognosis. Development is normal prior to seizure onset, after which cognitive and motor delays become apparent. DEE6B is an autosomal dominant condition characterized by onset of seizures in early infancy, profoundly impaired intellectual development, and a hyperkinetic movement disorder.</description>
        <dbReference type="MIM" id="619317"/>
    </disease>
    <text>The disease is caused by variants affecting the gene represented in this entry.</text>
</comment>
<comment type="disease">
    <text evidence="43 55 57">SCN1A mutations may be involved in Panayiotopoulos syndrome, a benign age-related focal seizure disorder occurring in early and mid-childhood. It is characterized by seizures, often prolonged, with predominantly autonomic symptoms, and by an electroencephalogram that shows shifting and/or multiple foci, often with occipital predominance. Autonomic seizures in Panayiotopoulos syndrome consist of episodes of disturbed autonomic function with emesis as the predominant symptom. Cardiorespiratory arrest is exceptional.</text>
</comment>
<comment type="similarity">
    <text evidence="103">Belongs to the sodium channel (TC 1.A.1.10) family. Nav1.1/SCN1A subfamily.</text>
</comment>
<accession>P35498</accession>
<accession>E9PG49</accession>
<accession>Q16172</accession>
<accession>Q585T7</accession>
<accession>Q8IUJ6</accession>
<accession>Q96LA3</accession>
<accession>Q9C008</accession>
<organism>
    <name type="scientific">Homo sapiens</name>
    <name type="common">Human</name>
    <dbReference type="NCBI Taxonomy" id="9606"/>
    <lineage>
        <taxon>Eukaryota</taxon>
        <taxon>Metazoa</taxon>
        <taxon>Chordata</taxon>
        <taxon>Craniata</taxon>
        <taxon>Vertebrata</taxon>
        <taxon>Euteleostomi</taxon>
        <taxon>Mammalia</taxon>
        <taxon>Eutheria</taxon>
        <taxon>Euarchontoglires</taxon>
        <taxon>Primates</taxon>
        <taxon>Haplorrhini</taxon>
        <taxon>Catarrhini</taxon>
        <taxon>Hominidae</taxon>
        <taxon>Homo</taxon>
    </lineage>
</organism>
<dbReference type="EMBL" id="AF225985">
    <property type="protein sequence ID" value="AAK00217.1"/>
    <property type="molecule type" value="mRNA"/>
</dbReference>
<dbReference type="EMBL" id="AY043484">
    <property type="protein sequence ID" value="AAK95360.1"/>
    <property type="molecule type" value="mRNA"/>
</dbReference>
<dbReference type="EMBL" id="AB093548">
    <property type="protein sequence ID" value="BAC21101.1"/>
    <property type="molecule type" value="mRNA"/>
</dbReference>
<dbReference type="EMBL" id="AB093549">
    <property type="protein sequence ID" value="BAC21102.1"/>
    <property type="molecule type" value="mRNA"/>
</dbReference>
<dbReference type="EMBL" id="AB098335">
    <property type="protein sequence ID" value="BAC45228.1"/>
    <property type="molecule type" value="mRNA"/>
</dbReference>
<dbReference type="EMBL" id="AC010127">
    <property type="protein sequence ID" value="AAX81984.1"/>
    <property type="molecule type" value="Genomic_DNA"/>
</dbReference>
<dbReference type="EMBL" id="S71446">
    <property type="protein sequence ID" value="AAB31605.1"/>
    <property type="molecule type" value="Genomic_DNA"/>
</dbReference>
<dbReference type="EMBL" id="X65362">
    <property type="protein sequence ID" value="CAA46439.1"/>
    <property type="molecule type" value="mRNA"/>
</dbReference>
<dbReference type="EMBL" id="M91803">
    <property type="status" value="NOT_ANNOTATED_CDS"/>
    <property type="molecule type" value="mRNA"/>
</dbReference>
<dbReference type="CCDS" id="CCDS33316.1">
    <molecule id="P35498-2"/>
</dbReference>
<dbReference type="CCDS" id="CCDS54413.1">
    <molecule id="P35498-1"/>
</dbReference>
<dbReference type="CCDS" id="CCDS54414.1">
    <molecule id="P35498-3"/>
</dbReference>
<dbReference type="PIR" id="I52964">
    <property type="entry name" value="I52964"/>
</dbReference>
<dbReference type="PIR" id="S29184">
    <property type="entry name" value="S29184"/>
</dbReference>
<dbReference type="RefSeq" id="NP_001159435.1">
    <molecule id="P35498-1"/>
    <property type="nucleotide sequence ID" value="NM_001165963.4"/>
</dbReference>
<dbReference type="RefSeq" id="NP_001159436.1">
    <molecule id="P35498-3"/>
    <property type="nucleotide sequence ID" value="NM_001165964.3"/>
</dbReference>
<dbReference type="RefSeq" id="NP_001189364.1">
    <molecule id="P35498-1"/>
    <property type="nucleotide sequence ID" value="NM_001202435.3"/>
</dbReference>
<dbReference type="RefSeq" id="NP_001340877.1">
    <molecule id="P35498-1"/>
    <property type="nucleotide sequence ID" value="NM_001353948.2"/>
</dbReference>
<dbReference type="RefSeq" id="NP_001340878.1">
    <molecule id="P35498-2"/>
    <property type="nucleotide sequence ID" value="NM_001353949.2"/>
</dbReference>
<dbReference type="RefSeq" id="NP_001340879.1">
    <molecule id="P35498-2"/>
    <property type="nucleotide sequence ID" value="NM_001353950.2"/>
</dbReference>
<dbReference type="RefSeq" id="NP_001340880.1">
    <molecule id="P35498-2"/>
    <property type="nucleotide sequence ID" value="NM_001353951.2"/>
</dbReference>
<dbReference type="RefSeq" id="NP_001340881.1">
    <molecule id="P35498-2"/>
    <property type="nucleotide sequence ID" value="NM_001353952.2"/>
</dbReference>
<dbReference type="RefSeq" id="NP_001340886.1">
    <molecule id="P35498-3"/>
    <property type="nucleotide sequence ID" value="NM_001353957.2"/>
</dbReference>
<dbReference type="RefSeq" id="NP_001340887.1">
    <molecule id="P35498-3"/>
    <property type="nucleotide sequence ID" value="NM_001353958.2"/>
</dbReference>
<dbReference type="RefSeq" id="NP_008851.3">
    <molecule id="P35498-2"/>
    <property type="nucleotide sequence ID" value="NM_006920.4"/>
</dbReference>
<dbReference type="RefSeq" id="XP_011509904.1">
    <property type="nucleotide sequence ID" value="XM_011511602.2"/>
</dbReference>
<dbReference type="RefSeq" id="XP_011509906.1">
    <property type="nucleotide sequence ID" value="XM_011511604.2"/>
</dbReference>
<dbReference type="RefSeq" id="XP_011509908.1">
    <property type="nucleotide sequence ID" value="XM_011511606.2"/>
</dbReference>
<dbReference type="RefSeq" id="XP_016860133.1">
    <property type="nucleotide sequence ID" value="XM_017004644.1"/>
</dbReference>
<dbReference type="RefSeq" id="XP_016860134.1">
    <property type="nucleotide sequence ID" value="XM_017004645.1"/>
</dbReference>
<dbReference type="RefSeq" id="XP_016860135.1">
    <property type="nucleotide sequence ID" value="XM_017004646.1"/>
</dbReference>
<dbReference type="RefSeq" id="XP_016860136.1">
    <property type="nucleotide sequence ID" value="XM_017004647.1"/>
</dbReference>
<dbReference type="RefSeq" id="XP_016860137.1">
    <property type="nucleotide sequence ID" value="XM_017004648.1"/>
</dbReference>
<dbReference type="RefSeq" id="XP_016860138.1">
    <property type="nucleotide sequence ID" value="XM_017004649.1"/>
</dbReference>
<dbReference type="RefSeq" id="XP_016860140.1">
    <property type="nucleotide sequence ID" value="XM_017004651.1"/>
</dbReference>
<dbReference type="RefSeq" id="XP_016860141.1">
    <property type="nucleotide sequence ID" value="XM_017004652.1"/>
</dbReference>
<dbReference type="PDB" id="7DTD">
    <property type="method" value="EM"/>
    <property type="resolution" value="3.30 A"/>
    <property type="chains" value="A=1-2009"/>
</dbReference>
<dbReference type="PDBsum" id="7DTD"/>
<dbReference type="EMDB" id="EMD-30851"/>
<dbReference type="SMR" id="P35498"/>
<dbReference type="BioGRID" id="112228">
    <property type="interactions" value="11"/>
</dbReference>
<dbReference type="ComplexPortal" id="CPX-8639">
    <property type="entry name" value="Nav1.1 voltage-gated sodium channel complex, SCN1B-SCN2B variant"/>
</dbReference>
<dbReference type="ComplexPortal" id="CPX-8640">
    <property type="entry name" value="Nav1.1 voltage-gated sodium channel complex, SCN2B-SCN3B variant"/>
</dbReference>
<dbReference type="ComplexPortal" id="CPX-8641">
    <property type="entry name" value="Nav1.1 voltage-gated sodium channel complex, SCN1B-SCN4B variant"/>
</dbReference>
<dbReference type="ComplexPortal" id="CPX-8642">
    <property type="entry name" value="Nav1.1 voltage-gated sodium channel complex, SCN3B-SCN4B variant"/>
</dbReference>
<dbReference type="DIP" id="DIP-59851N"/>
<dbReference type="FunCoup" id="P35498">
    <property type="interactions" value="1049"/>
</dbReference>
<dbReference type="IntAct" id="P35498">
    <property type="interactions" value="6"/>
</dbReference>
<dbReference type="MINT" id="P35498"/>
<dbReference type="STRING" id="9606.ENSP00000303540"/>
<dbReference type="BindingDB" id="P35498"/>
<dbReference type="ChEMBL" id="CHEMBL1845"/>
<dbReference type="DrugBank" id="DB09088">
    <property type="generic name" value="Amylocaine"/>
</dbReference>
<dbReference type="DrugBank" id="DB09009">
    <property type="generic name" value="Articaine"/>
</dbReference>
<dbReference type="DrugBank" id="DB13746">
    <property type="generic name" value="Bioallethrin"/>
</dbReference>
<dbReference type="DrugBank" id="DB05541">
    <property type="generic name" value="Brivaracetam"/>
</dbReference>
<dbReference type="DrugBank" id="DB00564">
    <property type="generic name" value="Carbamazepine"/>
</dbReference>
<dbReference type="DrugBank" id="DB06119">
    <property type="generic name" value="Cenobamate"/>
</dbReference>
<dbReference type="DrugBank" id="DB01161">
    <property type="generic name" value="Chloroprocaine"/>
</dbReference>
<dbReference type="DrugBank" id="DB00907">
    <property type="generic name" value="Cocaine"/>
</dbReference>
<dbReference type="DrugBank" id="DB13269">
    <property type="generic name" value="Dichlorobenzyl alcohol"/>
</dbReference>
<dbReference type="DrugBank" id="DB13961">
    <property type="generic name" value="Fish oil"/>
</dbReference>
<dbReference type="DrugBank" id="DB00555">
    <property type="generic name" value="Lamotrigine"/>
</dbReference>
<dbReference type="DrugBank" id="DB01595">
    <property type="generic name" value="Nitrazepam"/>
</dbReference>
<dbReference type="DrugBank" id="DB00776">
    <property type="generic name" value="Oxcarbazepine"/>
</dbReference>
<dbReference type="DrugBank" id="DB11186">
    <property type="generic name" value="Pentoxyverine"/>
</dbReference>
<dbReference type="DrugBank" id="DB04930">
    <property type="generic name" value="Permethrin"/>
</dbReference>
<dbReference type="DrugBank" id="DB01121">
    <property type="generic name" value="Phenacemide"/>
</dbReference>
<dbReference type="DrugBank" id="DB01438">
    <property type="generic name" value="Phenazopyridine"/>
</dbReference>
<dbReference type="DrugBank" id="DB00252">
    <property type="generic name" value="Phenytoin"/>
</dbReference>
<dbReference type="DrugBank" id="DB09345">
    <property type="generic name" value="Pramocaine"/>
</dbReference>
<dbReference type="DrugBank" id="DB01069">
    <property type="generic name" value="Promethazine"/>
</dbReference>
<dbReference type="DrugBank" id="DB09342">
    <property type="generic name" value="Propoxycaine"/>
</dbReference>
<dbReference type="DrugBank" id="DB00243">
    <property type="generic name" value="Ranolazine"/>
</dbReference>
<dbReference type="DrugBank" id="DB09085">
    <property type="generic name" value="Tetracaine"/>
</dbReference>
<dbReference type="DrugBank" id="DB05232">
    <property type="generic name" value="Tetrodotoxin"/>
</dbReference>
<dbReference type="DrugBank" id="DB00273">
    <property type="generic name" value="Topiramate"/>
</dbReference>
<dbReference type="DrugBank" id="DB00313">
    <property type="generic name" value="Valproic acid"/>
</dbReference>
<dbReference type="DrugBank" id="DB00909">
    <property type="generic name" value="Zonisamide"/>
</dbReference>
<dbReference type="DrugCentral" id="P35498"/>
<dbReference type="GuidetoPHARMACOLOGY" id="578"/>
<dbReference type="TCDB" id="1.A.1.10.7">
    <property type="family name" value="the voltage-gated ion channel (vic) superfamily"/>
</dbReference>
<dbReference type="GlyCosmos" id="P35498">
    <property type="glycosylation" value="9 sites, No reported glycans"/>
</dbReference>
<dbReference type="GlyGen" id="P35498">
    <property type="glycosylation" value="10 sites, 1 O-linked glycan (1 site)"/>
</dbReference>
<dbReference type="iPTMnet" id="P35498"/>
<dbReference type="PhosphoSitePlus" id="P35498"/>
<dbReference type="SwissPalm" id="P35498"/>
<dbReference type="BioMuta" id="SCN1A"/>
<dbReference type="DMDM" id="12644229"/>
<dbReference type="jPOST" id="P35498"/>
<dbReference type="MassIVE" id="P35498"/>
<dbReference type="PaxDb" id="9606-ENSP00000303540"/>
<dbReference type="PeptideAtlas" id="P35498"/>
<dbReference type="ProteomicsDB" id="20245"/>
<dbReference type="ProteomicsDB" id="55069">
    <molecule id="P35498-1"/>
</dbReference>
<dbReference type="ProteomicsDB" id="55070">
    <molecule id="P35498-2"/>
</dbReference>
<dbReference type="ABCD" id="P35498">
    <property type="antibodies" value="3 sequenced antibodies"/>
</dbReference>
<dbReference type="Antibodypedia" id="47608">
    <property type="antibodies" value="222 antibodies from 32 providers"/>
</dbReference>
<dbReference type="DNASU" id="6323"/>
<dbReference type="Ensembl" id="ENST00000303395.9">
    <molecule id="P35498-1"/>
    <property type="protein sequence ID" value="ENSP00000303540.4"/>
    <property type="gene ID" value="ENSG00000144285.24"/>
</dbReference>
<dbReference type="Ensembl" id="ENST00000375405.7">
    <molecule id="P35498-2"/>
    <property type="protein sequence ID" value="ENSP00000364554.3"/>
    <property type="gene ID" value="ENSG00000144285.24"/>
</dbReference>
<dbReference type="Ensembl" id="ENST00000409050.2">
    <molecule id="P35498-3"/>
    <property type="protein sequence ID" value="ENSP00000386312.1"/>
    <property type="gene ID" value="ENSG00000144285.24"/>
</dbReference>
<dbReference type="Ensembl" id="ENST00000635750.1">
    <molecule id="P35498-2"/>
    <property type="protein sequence ID" value="ENSP00000490799.1"/>
    <property type="gene ID" value="ENSG00000144285.24"/>
</dbReference>
<dbReference type="Ensembl" id="ENST00000637988.1">
    <molecule id="P35498-2"/>
    <property type="protein sequence ID" value="ENSP00000490780.1"/>
    <property type="gene ID" value="ENSG00000144285.24"/>
</dbReference>
<dbReference type="Ensembl" id="ENST00000674923.1">
    <molecule id="P35498-1"/>
    <property type="protein sequence ID" value="ENSP00000501589.1"/>
    <property type="gene ID" value="ENSG00000144285.24"/>
</dbReference>
<dbReference type="GeneID" id="6323"/>
<dbReference type="KEGG" id="hsa:6323"/>
<dbReference type="MANE-Select" id="ENST00000674923.1">
    <property type="protein sequence ID" value="ENSP00000501589.1"/>
    <property type="RefSeq nucleotide sequence ID" value="NM_001165963.4"/>
    <property type="RefSeq protein sequence ID" value="NP_001159435.1"/>
</dbReference>
<dbReference type="UCSC" id="uc061pes.1">
    <molecule id="P35498-1"/>
    <property type="organism name" value="human"/>
</dbReference>
<dbReference type="AGR" id="HGNC:10585"/>
<dbReference type="CTD" id="6323"/>
<dbReference type="DisGeNET" id="6323"/>
<dbReference type="GeneCards" id="SCN1A"/>
<dbReference type="GeneReviews" id="SCN1A"/>
<dbReference type="HGNC" id="HGNC:10585">
    <property type="gene designation" value="SCN1A"/>
</dbReference>
<dbReference type="HPA" id="ENSG00000144285">
    <property type="expression patterns" value="Tissue enhanced (brain, retina)"/>
</dbReference>
<dbReference type="MalaCards" id="SCN1A"/>
<dbReference type="MIM" id="182389">
    <property type="type" value="gene"/>
</dbReference>
<dbReference type="MIM" id="604403">
    <property type="type" value="phenotype"/>
</dbReference>
<dbReference type="MIM" id="607208">
    <property type="type" value="phenotype"/>
</dbReference>
<dbReference type="MIM" id="609634">
    <property type="type" value="phenotype"/>
</dbReference>
<dbReference type="MIM" id="619317">
    <property type="type" value="phenotype"/>
</dbReference>
<dbReference type="neXtProt" id="NX_P35498"/>
<dbReference type="OpenTargets" id="ENSG00000144285"/>
<dbReference type="Orphanet" id="33069">
    <property type="disease" value="Dravet syndrome"/>
</dbReference>
<dbReference type="Orphanet" id="293181">
    <property type="disease" value="Epilepsy of infancy with migrating focal seizures"/>
</dbReference>
<dbReference type="Orphanet" id="1942">
    <property type="disease" value="Epilepsy with myoclonic-atonic seizures"/>
</dbReference>
<dbReference type="Orphanet" id="569">
    <property type="disease" value="Familial or sporadic hemiplegic migraine"/>
</dbReference>
<dbReference type="Orphanet" id="36387">
    <property type="disease" value="Genetic epilepsy with febrile seizure plus"/>
</dbReference>
<dbReference type="Orphanet" id="2382">
    <property type="disease" value="Lennox-Gastaut syndrome"/>
</dbReference>
<dbReference type="Orphanet" id="442835">
    <property type="disease" value="Non-specific early-onset epileptic encephalopathy"/>
</dbReference>
<dbReference type="PharmGKB" id="PA301"/>
<dbReference type="VEuPathDB" id="HostDB:ENSG00000144285"/>
<dbReference type="eggNOG" id="KOG2301">
    <property type="taxonomic scope" value="Eukaryota"/>
</dbReference>
<dbReference type="GeneTree" id="ENSGT00940000154224"/>
<dbReference type="HOGENOM" id="CLU_000540_5_0_1"/>
<dbReference type="InParanoid" id="P35498"/>
<dbReference type="OMA" id="KTELTMS"/>
<dbReference type="OrthoDB" id="2984333at2759"/>
<dbReference type="PAN-GO" id="P35498">
    <property type="GO annotations" value="6 GO annotations based on evolutionary models"/>
</dbReference>
<dbReference type="PhylomeDB" id="P35498"/>
<dbReference type="TreeFam" id="TF323985"/>
<dbReference type="PathwayCommons" id="P35498"/>
<dbReference type="Reactome" id="R-HSA-445095">
    <property type="pathway name" value="Interaction between L1 and Ankyrins"/>
</dbReference>
<dbReference type="Reactome" id="R-HSA-5576892">
    <property type="pathway name" value="Phase 0 - rapid depolarisation"/>
</dbReference>
<dbReference type="SignaLink" id="P35498"/>
<dbReference type="SIGNOR" id="P35498"/>
<dbReference type="BioGRID-ORCS" id="6323">
    <property type="hits" value="9 hits in 1153 CRISPR screens"/>
</dbReference>
<dbReference type="ChiTaRS" id="SCN1A">
    <property type="organism name" value="human"/>
</dbReference>
<dbReference type="GeneWiki" id="Nav1.1"/>
<dbReference type="GenomeRNAi" id="6323"/>
<dbReference type="Pharos" id="P35498">
    <property type="development level" value="Tclin"/>
</dbReference>
<dbReference type="PRO" id="PR:P35498"/>
<dbReference type="Proteomes" id="UP000005640">
    <property type="component" value="Chromosome 2"/>
</dbReference>
<dbReference type="RNAct" id="P35498">
    <property type="molecule type" value="protein"/>
</dbReference>
<dbReference type="Bgee" id="ENSG00000144285">
    <property type="expression patterns" value="Expressed in Brodmann (1909) area 23 and 114 other cell types or tissues"/>
</dbReference>
<dbReference type="ExpressionAtlas" id="P35498">
    <property type="expression patterns" value="baseline and differential"/>
</dbReference>
<dbReference type="GO" id="GO:0043194">
    <property type="term" value="C:axon initial segment"/>
    <property type="evidence" value="ECO:0007669"/>
    <property type="project" value="Ensembl"/>
</dbReference>
<dbReference type="GO" id="GO:0014704">
    <property type="term" value="C:intercalated disc"/>
    <property type="evidence" value="ECO:0007669"/>
    <property type="project" value="Ensembl"/>
</dbReference>
<dbReference type="GO" id="GO:0043025">
    <property type="term" value="C:neuronal cell body"/>
    <property type="evidence" value="ECO:0007669"/>
    <property type="project" value="Ensembl"/>
</dbReference>
<dbReference type="GO" id="GO:0033268">
    <property type="term" value="C:node of Ranvier"/>
    <property type="evidence" value="ECO:0007669"/>
    <property type="project" value="Ensembl"/>
</dbReference>
<dbReference type="GO" id="GO:0016604">
    <property type="term" value="C:nuclear body"/>
    <property type="evidence" value="ECO:0000314"/>
    <property type="project" value="HPA"/>
</dbReference>
<dbReference type="GO" id="GO:0005654">
    <property type="term" value="C:nucleoplasm"/>
    <property type="evidence" value="ECO:0000314"/>
    <property type="project" value="HPA"/>
</dbReference>
<dbReference type="GO" id="GO:0005886">
    <property type="term" value="C:plasma membrane"/>
    <property type="evidence" value="ECO:0000314"/>
    <property type="project" value="HPA"/>
</dbReference>
<dbReference type="GO" id="GO:0030315">
    <property type="term" value="C:T-tubule"/>
    <property type="evidence" value="ECO:0007669"/>
    <property type="project" value="Ensembl"/>
</dbReference>
<dbReference type="GO" id="GO:0001518">
    <property type="term" value="C:voltage-gated sodium channel complex"/>
    <property type="evidence" value="ECO:0000318"/>
    <property type="project" value="GO_Central"/>
</dbReference>
<dbReference type="GO" id="GO:0030018">
    <property type="term" value="C:Z disc"/>
    <property type="evidence" value="ECO:0000250"/>
    <property type="project" value="BHF-UCL"/>
</dbReference>
<dbReference type="GO" id="GO:0099508">
    <property type="term" value="F:voltage-gated monoatomic ion channel activity involved in regulation of presynaptic membrane potential"/>
    <property type="evidence" value="ECO:0000314"/>
    <property type="project" value="SynGO"/>
</dbReference>
<dbReference type="GO" id="GO:0005248">
    <property type="term" value="F:voltage-gated sodium channel activity"/>
    <property type="evidence" value="ECO:0000315"/>
    <property type="project" value="UniProtKB"/>
</dbReference>
<dbReference type="GO" id="GO:0007628">
    <property type="term" value="P:adult walking behavior"/>
    <property type="evidence" value="ECO:0007669"/>
    <property type="project" value="Ensembl"/>
</dbReference>
<dbReference type="GO" id="GO:0086002">
    <property type="term" value="P:cardiac muscle cell action potential involved in contraction"/>
    <property type="evidence" value="ECO:0000315"/>
    <property type="project" value="BHF-UCL"/>
</dbReference>
<dbReference type="GO" id="GO:0050966">
    <property type="term" value="P:detection of mechanical stimulus involved in sensory perception of pain"/>
    <property type="evidence" value="ECO:0000250"/>
    <property type="project" value="UniProtKB"/>
</dbReference>
<dbReference type="GO" id="GO:0008340">
    <property type="term" value="P:determination of adult lifespan"/>
    <property type="evidence" value="ECO:0007669"/>
    <property type="project" value="Ensembl"/>
</dbReference>
<dbReference type="GO" id="GO:0051649">
    <property type="term" value="P:establishment of localization in cell"/>
    <property type="evidence" value="ECO:0007669"/>
    <property type="project" value="Ensembl"/>
</dbReference>
<dbReference type="GO" id="GO:0086010">
    <property type="term" value="P:membrane depolarization during action potential"/>
    <property type="evidence" value="ECO:0000315"/>
    <property type="project" value="UniProtKB"/>
</dbReference>
<dbReference type="GO" id="GO:0021675">
    <property type="term" value="P:nerve development"/>
    <property type="evidence" value="ECO:0007669"/>
    <property type="project" value="Ensembl"/>
</dbReference>
<dbReference type="GO" id="GO:0050884">
    <property type="term" value="P:neuromuscular process controlling posture"/>
    <property type="evidence" value="ECO:0007669"/>
    <property type="project" value="Ensembl"/>
</dbReference>
<dbReference type="GO" id="GO:0019228">
    <property type="term" value="P:neuronal action potential"/>
    <property type="evidence" value="ECO:0007669"/>
    <property type="project" value="Ensembl"/>
</dbReference>
<dbReference type="GO" id="GO:0019227">
    <property type="term" value="P:neuronal action potential propagation"/>
    <property type="evidence" value="ECO:0007669"/>
    <property type="project" value="Ensembl"/>
</dbReference>
<dbReference type="GO" id="GO:0035725">
    <property type="term" value="P:sodium ion transmembrane transport"/>
    <property type="evidence" value="ECO:0000318"/>
    <property type="project" value="GO_Central"/>
</dbReference>
<dbReference type="GO" id="GO:0006814">
    <property type="term" value="P:sodium ion transport"/>
    <property type="evidence" value="ECO:0000303"/>
    <property type="project" value="UniProtKB"/>
</dbReference>
<dbReference type="CDD" id="cd13433">
    <property type="entry name" value="Na_channel_gate"/>
    <property type="match status" value="1"/>
</dbReference>
<dbReference type="FunFam" id="1.10.238.10:FF:000002">
    <property type="entry name" value="Sodium channel protein"/>
    <property type="match status" value="1"/>
</dbReference>
<dbReference type="FunFam" id="1.10.287.70:FF:000001">
    <property type="entry name" value="Sodium channel protein"/>
    <property type="match status" value="1"/>
</dbReference>
<dbReference type="FunFam" id="1.10.287.70:FF:000006">
    <property type="entry name" value="Sodium channel protein"/>
    <property type="match status" value="1"/>
</dbReference>
<dbReference type="FunFam" id="1.20.120.350:FF:000002">
    <property type="entry name" value="Sodium channel protein"/>
    <property type="match status" value="1"/>
</dbReference>
<dbReference type="FunFam" id="1.20.120.350:FF:000004">
    <property type="entry name" value="Sodium channel protein"/>
    <property type="match status" value="1"/>
</dbReference>
<dbReference type="FunFam" id="1.20.120.350:FF:000005">
    <property type="entry name" value="Sodium channel protein"/>
    <property type="match status" value="1"/>
</dbReference>
<dbReference type="FunFam" id="1.20.5.1190:FF:000001">
    <property type="entry name" value="Sodium channel protein"/>
    <property type="match status" value="1"/>
</dbReference>
<dbReference type="FunFam" id="1.20.120.350:FF:000003">
    <property type="entry name" value="Voltage-dependent sodium channel"/>
    <property type="match status" value="1"/>
</dbReference>
<dbReference type="Gene3D" id="1.10.287.70">
    <property type="match status" value="4"/>
</dbReference>
<dbReference type="Gene3D" id="1.10.238.10">
    <property type="entry name" value="EF-hand"/>
    <property type="match status" value="1"/>
</dbReference>
<dbReference type="Gene3D" id="1.20.5.1190">
    <property type="entry name" value="iswi atpase"/>
    <property type="match status" value="1"/>
</dbReference>
<dbReference type="Gene3D" id="1.20.120.350">
    <property type="entry name" value="Voltage-gated potassium channels. Chain C"/>
    <property type="match status" value="4"/>
</dbReference>
<dbReference type="InterPro" id="IPR005821">
    <property type="entry name" value="Ion_trans_dom"/>
</dbReference>
<dbReference type="InterPro" id="IPR008051">
    <property type="entry name" value="Na_channel_a1su"/>
</dbReference>
<dbReference type="InterPro" id="IPR001696">
    <property type="entry name" value="Na_channel_asu"/>
</dbReference>
<dbReference type="InterPro" id="IPR044564">
    <property type="entry name" value="Na_chnl_inactivation_gate"/>
</dbReference>
<dbReference type="InterPro" id="IPR010526">
    <property type="entry name" value="Na_trans_assoc_dom"/>
</dbReference>
<dbReference type="InterPro" id="IPR024583">
    <property type="entry name" value="Na_trans_cytopl"/>
</dbReference>
<dbReference type="InterPro" id="IPR043203">
    <property type="entry name" value="VGCC_Ca_Na"/>
</dbReference>
<dbReference type="InterPro" id="IPR027359">
    <property type="entry name" value="Volt_channel_dom_sf"/>
</dbReference>
<dbReference type="PANTHER" id="PTHR10037:SF280">
    <property type="entry name" value="SODIUM CHANNEL PROTEIN TYPE 1 SUBUNIT ALPHA"/>
    <property type="match status" value="1"/>
</dbReference>
<dbReference type="PANTHER" id="PTHR10037">
    <property type="entry name" value="VOLTAGE-GATED CATION CHANNEL CALCIUM AND SODIUM"/>
    <property type="match status" value="1"/>
</dbReference>
<dbReference type="Pfam" id="PF00520">
    <property type="entry name" value="Ion_trans"/>
    <property type="match status" value="4"/>
</dbReference>
<dbReference type="Pfam" id="PF24609">
    <property type="entry name" value="IQ_SCN5A_C"/>
    <property type="match status" value="1"/>
</dbReference>
<dbReference type="Pfam" id="PF06512">
    <property type="entry name" value="Na_trans_assoc"/>
    <property type="match status" value="1"/>
</dbReference>
<dbReference type="Pfam" id="PF11933">
    <property type="entry name" value="Na_trans_cytopl"/>
    <property type="match status" value="1"/>
</dbReference>
<dbReference type="PRINTS" id="PR00170">
    <property type="entry name" value="NACHANNEL"/>
</dbReference>
<dbReference type="PRINTS" id="PR01664">
    <property type="entry name" value="NACHANNEL1"/>
</dbReference>
<dbReference type="SUPFAM" id="SSF81324">
    <property type="entry name" value="Voltage-gated potassium channels"/>
    <property type="match status" value="4"/>
</dbReference>
<feature type="chain" id="PRO_0000048489" description="Sodium channel protein type 1 subunit alpha">
    <location>
        <begin position="1"/>
        <end position="2009"/>
    </location>
</feature>
<feature type="topological domain" description="Cytoplasmic" evidence="103">
    <location>
        <begin position="1"/>
        <end position="128"/>
    </location>
</feature>
<feature type="transmembrane region" description="Helical; Name=S1 of repeat I" evidence="104 107">
    <location>
        <begin position="129"/>
        <end position="146"/>
    </location>
</feature>
<feature type="topological domain" description="Extracellular" evidence="103">
    <location>
        <begin position="147"/>
        <end position="152"/>
    </location>
</feature>
<feature type="transmembrane region" description="Helical; Name=S2 of repeat I" evidence="104 107">
    <location>
        <begin position="153"/>
        <end position="177"/>
    </location>
</feature>
<feature type="topological domain" description="Cytoplasmic" evidence="103">
    <location>
        <begin position="178"/>
        <end position="188"/>
    </location>
</feature>
<feature type="transmembrane region" description="Helical; Name=S3 of repeat I" evidence="104 107">
    <location>
        <begin position="189"/>
        <end position="205"/>
    </location>
</feature>
<feature type="topological domain" description="Extracellular" evidence="103">
    <location>
        <begin position="206"/>
        <end position="213"/>
    </location>
</feature>
<feature type="transmembrane region" description="Helical; Name=S4 of repeat I" evidence="104 107">
    <location>
        <begin position="214"/>
        <end position="235"/>
    </location>
</feature>
<feature type="topological domain" description="Cytoplasmic" evidence="103">
    <location>
        <begin position="236"/>
        <end position="245"/>
    </location>
</feature>
<feature type="transmembrane region" description="Helical; Name=S5 of repeat I" evidence="104 107">
    <location>
        <begin position="246"/>
        <end position="269"/>
    </location>
</feature>
<feature type="topological domain" description="Extracellular" evidence="103">
    <location>
        <begin position="270"/>
        <end position="369"/>
    </location>
</feature>
<feature type="intramembrane region" description="Pore-forming" evidence="104 107">
    <location>
        <begin position="370"/>
        <end position="384"/>
    </location>
</feature>
<feature type="topological domain" description="Extracellular" evidence="103">
    <location>
        <begin position="385"/>
        <end position="397"/>
    </location>
</feature>
<feature type="transmembrane region" description="Helical; Name=S6 of repeat I" evidence="104 107">
    <location>
        <begin position="398"/>
        <end position="423"/>
    </location>
</feature>
<feature type="topological domain" description="Cytoplasmic" evidence="103">
    <location>
        <begin position="424"/>
        <end position="768"/>
    </location>
</feature>
<feature type="transmembrane region" description="Helical; Name=S1 of repeat II" evidence="104 107">
    <location>
        <begin position="769"/>
        <end position="787"/>
    </location>
</feature>
<feature type="topological domain" description="Extracellular" evidence="103">
    <location>
        <begin position="788"/>
        <end position="797"/>
    </location>
</feature>
<feature type="transmembrane region" description="Helical; Name=S2 of repeat II" evidence="104 107">
    <location>
        <begin position="798"/>
        <end position="820"/>
    </location>
</feature>
<feature type="topological domain" description="Cytoplasmic" evidence="103">
    <location>
        <begin position="821"/>
        <end position="830"/>
    </location>
</feature>
<feature type="transmembrane region" description="Helical; Name=S3 of repeat II" evidence="104 107">
    <location>
        <begin position="831"/>
        <end position="849"/>
    </location>
</feature>
<feature type="topological domain" description="Extracellular" evidence="103">
    <location>
        <begin position="850"/>
        <end position="854"/>
    </location>
</feature>
<feature type="transmembrane region" description="Helical; Name=S4 of repeat II" evidence="104 107">
    <location>
        <begin position="855"/>
        <end position="874"/>
    </location>
</feature>
<feature type="topological domain" description="Cytoplasmic" evidence="103">
    <location>
        <begin position="875"/>
        <end position="891"/>
    </location>
</feature>
<feature type="transmembrane region" description="Helical; Name=S5 of repeat II" evidence="104 107">
    <location>
        <begin position="892"/>
        <end position="912"/>
    </location>
</feature>
<feature type="topological domain" description="Extracellular" evidence="103">
    <location>
        <begin position="913"/>
        <end position="938"/>
    </location>
</feature>
<feature type="intramembrane region" description="Pore-forming" evidence="104 107">
    <location>
        <begin position="939"/>
        <end position="952"/>
    </location>
</feature>
<feature type="topological domain" description="Extracellular" evidence="103">
    <location>
        <begin position="953"/>
        <end position="965"/>
    </location>
</feature>
<feature type="transmembrane region" description="Helical; Name=S6 of repeat II" evidence="104 107">
    <location>
        <begin position="966"/>
        <end position="992"/>
    </location>
</feature>
<feature type="topological domain" description="Cytoplasmic" evidence="103">
    <location>
        <begin position="993"/>
        <end position="1218"/>
    </location>
</feature>
<feature type="transmembrane region" description="Helical; Name=S1 of repeat III" evidence="104 107">
    <location>
        <begin position="1219"/>
        <end position="1237"/>
    </location>
</feature>
<feature type="topological domain" description="Extracellular" evidence="103">
    <location>
        <begin position="1238"/>
        <end position="1250"/>
    </location>
</feature>
<feature type="transmembrane region" description="Helical; Name=S2 of repeat III" evidence="104 107">
    <location>
        <begin position="1251"/>
        <end position="1276"/>
    </location>
</feature>
<feature type="topological domain" description="Cytoplasmic" evidence="103">
    <location>
        <begin position="1277"/>
        <end position="1278"/>
    </location>
</feature>
<feature type="transmembrane region" description="Helical; Name=S3 of repeat III" evidence="104 107">
    <location>
        <begin position="1279"/>
        <end position="1304"/>
    </location>
</feature>
<feature type="topological domain" description="Extracellular" evidence="103">
    <location>
        <begin position="1305"/>
        <end position="1313"/>
    </location>
</feature>
<feature type="transmembrane region" description="Helical; Name=S4 of repeat III" evidence="104 107">
    <location>
        <begin position="1314"/>
        <end position="1332"/>
    </location>
</feature>
<feature type="topological domain" description="Cytoplasmic" evidence="103">
    <location>
        <begin position="1333"/>
        <end position="1345"/>
    </location>
</feature>
<feature type="transmembrane region" description="Helical; Name=S5 of repeat III" evidence="104 107">
    <location>
        <begin position="1346"/>
        <end position="1369"/>
    </location>
</feature>
<feature type="topological domain" description="Extracellular" evidence="103">
    <location>
        <begin position="1370"/>
        <end position="1415"/>
    </location>
</feature>
<feature type="intramembrane region" description="Pore-forming" evidence="104 107">
    <location>
        <begin position="1416"/>
        <end position="1433"/>
    </location>
</feature>
<feature type="topological domain" description="Extracellular" evidence="103">
    <location>
        <begin position="1434"/>
        <end position="1457"/>
    </location>
</feature>
<feature type="transmembrane region" description="Helical; Name=S6 of repeat III" evidence="104 107">
    <location>
        <begin position="1458"/>
        <end position="1483"/>
    </location>
</feature>
<feature type="topological domain" description="Cytoplasmic" evidence="103">
    <location>
        <begin position="1484"/>
        <end position="1541"/>
    </location>
</feature>
<feature type="transmembrane region" description="Helical; Name=S1 of repeat IV" evidence="104 107">
    <location>
        <begin position="1542"/>
        <end position="1560"/>
    </location>
</feature>
<feature type="topological domain" description="Extracellular" evidence="103">
    <location>
        <begin position="1561"/>
        <end position="1571"/>
    </location>
</feature>
<feature type="transmembrane region" description="Helical; Name=S2 of repeat IV" evidence="104 107">
    <location>
        <begin position="1572"/>
        <end position="1593"/>
    </location>
</feature>
<feature type="topological domain" description="Cytoplasmic" evidence="103">
    <location>
        <begin position="1594"/>
        <end position="1601"/>
    </location>
</feature>
<feature type="transmembrane region" description="Helical; Name=S3 of repeat IV" evidence="104 107">
    <location>
        <begin position="1602"/>
        <end position="1623"/>
    </location>
</feature>
<feature type="topological domain" description="Extracellular" evidence="103">
    <location>
        <begin position="1624"/>
        <end position="1636"/>
    </location>
</feature>
<feature type="transmembrane region" description="Helical; Name=S4 of repeat IV" evidence="104 107">
    <location>
        <begin position="1637"/>
        <end position="1655"/>
    </location>
</feature>
<feature type="topological domain" description="Cytoplasmic" evidence="103">
    <location>
        <begin position="1656"/>
        <end position="1665"/>
    </location>
</feature>
<feature type="transmembrane region" description="Helical; Name=S5 of repeat IV" evidence="104 107">
    <location>
        <begin position="1666"/>
        <end position="1688"/>
    </location>
</feature>
<feature type="topological domain" description="Extracellular" evidence="103">
    <location>
        <begin position="1689"/>
        <end position="1711"/>
    </location>
</feature>
<feature type="intramembrane region" description="Pore-forming" evidence="104 107">
    <location>
        <begin position="1712"/>
        <end position="1726"/>
    </location>
</feature>
<feature type="topological domain" description="Extracellular" evidence="103">
    <location>
        <begin position="1727"/>
        <end position="1759"/>
    </location>
</feature>
<feature type="transmembrane region" description="Helical; Name=S6 of repeat IV" evidence="104 107">
    <location>
        <begin position="1760"/>
        <end position="1788"/>
    </location>
</feature>
<feature type="topological domain" description="Cytoplasmic" evidence="103">
    <location>
        <begin position="1789"/>
        <end position="2009"/>
    </location>
</feature>
<feature type="repeat" description="I" evidence="103">
    <location>
        <begin position="110"/>
        <end position="454"/>
    </location>
</feature>
<feature type="repeat" description="II" evidence="103">
    <location>
        <begin position="750"/>
        <end position="1022"/>
    </location>
</feature>
<feature type="repeat" description="III" evidence="103">
    <location>
        <begin position="1200"/>
        <end position="1514"/>
    </location>
</feature>
<feature type="repeat" description="IV" evidence="103">
    <location>
        <begin position="1523"/>
        <end position="1821"/>
    </location>
</feature>
<feature type="domain" description="IQ" evidence="5">
    <location>
        <begin position="1915"/>
        <end position="1944"/>
    </location>
</feature>
<feature type="region of interest" description="Disordered" evidence="6">
    <location>
        <begin position="28"/>
        <end position="60"/>
    </location>
</feature>
<feature type="region of interest" description="Disordered" evidence="6">
    <location>
        <begin position="455"/>
        <end position="529"/>
    </location>
</feature>
<feature type="region of interest" description="Disordered" evidence="6">
    <location>
        <begin position="584"/>
        <end position="627"/>
    </location>
</feature>
<feature type="region of interest" description="Disordered" evidence="6">
    <location>
        <begin position="1129"/>
        <end position="1163"/>
    </location>
</feature>
<feature type="region of interest" description="S1-S2 loop of repeat IV" evidence="1">
    <location>
        <begin position="1561"/>
        <end position="1571"/>
    </location>
</feature>
<feature type="region of interest" description="S3b-S4 loop of repeat IV" evidence="1">
    <location>
        <begin position="1619"/>
        <end position="1636"/>
    </location>
</feature>
<feature type="region of interest" description="Disordered" evidence="6">
    <location>
        <begin position="1986"/>
        <end position="2009"/>
    </location>
</feature>
<feature type="compositionally biased region" description="Basic and acidic residues" evidence="6">
    <location>
        <begin position="28"/>
        <end position="48"/>
    </location>
</feature>
<feature type="compositionally biased region" description="Low complexity" evidence="6">
    <location>
        <begin position="456"/>
        <end position="466"/>
    </location>
</feature>
<feature type="compositionally biased region" description="Low complexity" evidence="6">
    <location>
        <begin position="479"/>
        <end position="492"/>
    </location>
</feature>
<feature type="compositionally biased region" description="Basic residues" evidence="6">
    <location>
        <begin position="495"/>
        <end position="506"/>
    </location>
</feature>
<feature type="compositionally biased region" description="Basic and acidic residues" evidence="6">
    <location>
        <begin position="520"/>
        <end position="529"/>
    </location>
</feature>
<feature type="compositionally biased region" description="Basic and acidic residues" evidence="6">
    <location>
        <begin position="593"/>
        <end position="607"/>
    </location>
</feature>
<feature type="compositionally biased region" description="Basic and acidic residues" evidence="6">
    <location>
        <begin position="1988"/>
        <end position="2009"/>
    </location>
</feature>
<feature type="site" description="Key residue that permits the spider beta/delta-theraphotoxin-Pre1a to inhibit fast inactivation of the channel" evidence="92">
    <location>
        <position position="1574"/>
    </location>
</feature>
<feature type="modified residue" description="Phosphoserine" evidence="2">
    <location>
        <position position="470"/>
    </location>
</feature>
<feature type="modified residue" description="Phosphoserine" evidence="2">
    <location>
        <position position="523"/>
    </location>
</feature>
<feature type="modified residue" description="Phosphoserine" evidence="2">
    <location>
        <position position="525"/>
    </location>
</feature>
<feature type="modified residue" description="Phosphoserine" evidence="2">
    <location>
        <position position="550"/>
    </location>
</feature>
<feature type="modified residue" description="Phosphoserine" evidence="1">
    <location>
        <position position="551"/>
    </location>
</feature>
<feature type="modified residue" description="Phosphoserine" evidence="2">
    <location>
        <position position="607"/>
    </location>
</feature>
<feature type="modified residue" description="Phosphoserine" evidence="2">
    <location>
        <position position="730"/>
    </location>
</feature>
<feature type="modified residue" description="Phosphoserine; by PKC" evidence="3">
    <location>
        <position position="1516"/>
    </location>
</feature>
<feature type="glycosylation site" description="N-linked (GlcNAc...) asparagine" evidence="4">
    <location>
        <position position="211"/>
    </location>
</feature>
<feature type="glycosylation site" description="N-linked (GlcNAc...) asparagine" evidence="4">
    <location>
        <position position="284"/>
    </location>
</feature>
<feature type="glycosylation site" description="N-linked (GlcNAc...) asparagine" evidence="4">
    <location>
        <position position="295"/>
    </location>
</feature>
<feature type="glycosylation site" description="N-linked (GlcNAc...) asparagine" evidence="4">
    <location>
        <position position="301"/>
    </location>
</feature>
<feature type="glycosylation site" description="N-linked (GlcNAc...) asparagine" evidence="4">
    <location>
        <position position="306"/>
    </location>
</feature>
<feature type="glycosylation site" description="N-linked (GlcNAc...) asparagine" evidence="96 107">
    <location>
        <position position="338"/>
    </location>
</feature>
<feature type="glycosylation site" description="N-linked (GlcNAc...) asparagine" evidence="96 107">
    <location>
        <position position="1378"/>
    </location>
</feature>
<feature type="glycosylation site" description="N-linked (GlcNAc...) asparagine" evidence="96 107">
    <location>
        <position position="1392"/>
    </location>
</feature>
<feature type="glycosylation site" description="N-linked (GlcNAc...) asparagine" evidence="96 107">
    <location>
        <position position="1403"/>
    </location>
</feature>
<feature type="disulfide bond" evidence="96 107">
    <location>
        <begin position="277"/>
        <end position="345"/>
    </location>
</feature>
<feature type="disulfide bond" evidence="96 107">
    <location>
        <begin position="336"/>
        <end position="351"/>
    </location>
</feature>
<feature type="disulfide bond" description="Interchain; with SCN2B or SCN4B" evidence="104 107">
    <location>
        <position position="919"/>
    </location>
</feature>
<feature type="disulfide bond" description="Interchain; with the conotoxin GVIIJ (when the channel is not linked to SCN2B or SCN4B; the bond to SCN2B or SCN4B protects the channel from the inhibition by toxin)" evidence="3">
    <location>
        <position position="919"/>
    </location>
</feature>
<feature type="disulfide bond" evidence="96 107">
    <location>
        <begin position="921"/>
        <end position="927"/>
    </location>
</feature>
<feature type="disulfide bond" evidence="96 107">
    <location>
        <begin position="959"/>
        <end position="968"/>
    </location>
</feature>
<feature type="disulfide bond" evidence="96 107">
    <location>
        <begin position="1376"/>
        <end position="1396"/>
    </location>
</feature>
<feature type="disulfide bond" evidence="96 107">
    <location>
        <begin position="1741"/>
        <end position="1756"/>
    </location>
</feature>
<feature type="splice variant" id="VSP_045399" description="In isoform 3." evidence="102">
    <location>
        <begin position="654"/>
        <end position="681"/>
    </location>
</feature>
<feature type="splice variant" id="VSP_001031" description="In isoform 2." evidence="100 101 102">
    <location>
        <begin position="671"/>
        <end position="681"/>
    </location>
</feature>
<feature type="sequence variant" id="VAR_073441" description="In DRVT." evidence="72">
    <location>
        <position position="17"/>
    </location>
</feature>
<feature type="sequence variant" id="VAR_064229" description="In GEFSP2; likely benign; dbSNP:rs121917906." evidence="71">
    <original>R</original>
    <variation>T</variation>
    <location>
        <position position="27"/>
    </location>
</feature>
<feature type="sequence variant" id="VAR_073442" description="Found in patients with different types of epilepsy; uncertain significance; dbSNP:rs531894715." evidence="72 84">
    <original>D</original>
    <variation>N</variation>
    <location>
        <position position="45"/>
    </location>
</feature>
<feature type="sequence variant" id="VAR_073443" description="In DRVT." evidence="53">
    <original>G</original>
    <variation>V</variation>
    <location>
        <position position="58"/>
    </location>
</feature>
<feature type="sequence variant" id="VAR_073444" description="In DRVT." evidence="53">
    <original>L</original>
    <variation>F</variation>
    <location>
        <position position="61"/>
    </location>
</feature>
<feature type="sequence variant" id="VAR_064230" description="In DRVT; uncertain significance; dbSNP:rs121917907." evidence="71">
    <original>F</original>
    <variation>L</variation>
    <location>
        <position position="63"/>
    </location>
</feature>
<feature type="sequence variant" id="VAR_073445" description="In DRVT; uncertain significance; borderline phenotype; dbSNP:rs758871507." evidence="72">
    <original>I</original>
    <variation>T</variation>
    <location>
        <position position="68"/>
    </location>
</feature>
<feature type="sequence variant" id="VAR_064295" description="In GEFSP2; uncertain significance; dbSNP:rs121917931." evidence="42">
    <original>S</original>
    <variation>P</variation>
    <location>
        <position position="74"/>
    </location>
</feature>
<feature type="sequence variant" id="VAR_029660" description="In DRVT; dbSNP:rs121917933." evidence="19 36">
    <original>E</original>
    <variation>D</variation>
    <location>
        <position position="78"/>
    </location>
</feature>
<feature type="sequence variant" id="VAR_064346" description="In DRVT; borderline phenotype; dbSNP:rs121917982." evidence="39 53">
    <original>D</original>
    <variation>H</variation>
    <location>
        <position position="79"/>
    </location>
</feature>
<feature type="sequence variant" id="VAR_073446" description="In DRVT; dbSNP:rs121917982." evidence="72">
    <original>D</original>
    <variation>N</variation>
    <location>
        <position position="79"/>
    </location>
</feature>
<feature type="sequence variant" id="VAR_043349" description="In DRVT; dbSNP:rs121917964." evidence="39 59 72 81 91">
    <original>Y</original>
    <variation>C</variation>
    <location>
        <position position="84"/>
    </location>
</feature>
<feature type="sequence variant" id="VAR_064231" description="In DRVT and ICEGTC; dbSNP:rs121918733." evidence="65 81">
    <original>F</original>
    <variation>S</variation>
    <location>
        <position position="90"/>
    </location>
</feature>
<feature type="sequence variant" id="VAR_064232" description="In DRVT; dbSNP:rs121918734." evidence="65">
    <original>I</original>
    <variation>T</variation>
    <location>
        <position position="91"/>
    </location>
</feature>
<feature type="sequence variant" id="VAR_073447" description="In DRVT." evidence="72">
    <original>A</original>
    <variation>P</variation>
    <location>
        <position position="98"/>
    </location>
</feature>
<feature type="sequence variant" id="VAR_029661" description="In DRVT and ICEGTC; dbSNP:rs121917918." evidence="23 42 53 59 65 72 81 90">
    <original>R</original>
    <variation>Q</variation>
    <location>
        <position position="101"/>
    </location>
</feature>
<feature type="sequence variant" id="VAR_064233" description="In DRVT; dbSNP:rs121917965." evidence="39 53 65 72 81">
    <original>R</original>
    <variation>W</variation>
    <location>
        <position position="101"/>
    </location>
</feature>
<feature type="sequence variant" id="VAR_029662" description="In DRVT; dbSNP:rs121918743." evidence="15">
    <original>S</original>
    <variation>G</variation>
    <location>
        <position position="103"/>
    </location>
</feature>
<feature type="sequence variant" id="VAR_073448" description="In DRVT; dbSNP:rs796053089." evidence="81">
    <original>T</original>
    <variation>I</variation>
    <location>
        <position position="105"/>
    </location>
</feature>
<feature type="sequence variant" id="VAR_073449" description="In DRVT." evidence="72">
    <original>L</original>
    <variation>R</variation>
    <location>
        <position position="108"/>
    </location>
</feature>
<feature type="sequence variant" id="VAR_029663" description="In DRVT; dbSNP:rs121918745." evidence="15">
    <original>T</original>
    <variation>I</variation>
    <location>
        <position position="112"/>
    </location>
</feature>
<feature type="sequence variant" id="VAR_078725" description="In DRVT; dbSNP:rs794726711." evidence="87">
    <original>P</original>
    <variation>T</variation>
    <location>
        <position position="113"/>
    </location>
</feature>
<feature type="sequence variant" id="VAR_043350" description="In DRVT; dbSNP:rs121917959." evidence="50">
    <original>R</original>
    <variation>S</variation>
    <location>
        <position position="118"/>
    </location>
</feature>
<feature type="sequence variant" id="VAR_064234" description="In DRVT; dbSNP:rs121918761." evidence="53 67">
    <original>I</original>
    <variation>N</variation>
    <location>
        <position position="124"/>
    </location>
</feature>
<feature type="sequence variant" id="VAR_073450" description="In DRVT; borderline phenotype; dbSNP:rs148442069." evidence="72">
    <original>H</original>
    <variation>D</variation>
    <location>
        <position position="127"/>
    </location>
</feature>
<feature type="sequence variant" id="VAR_025366" description="In FEB3A; loss of function; dbSNP:rs121918631." evidence="32">
    <original>M</original>
    <variation>T</variation>
    <location>
        <position position="145"/>
    </location>
</feature>
<feature type="sequence variant" id="VAR_064296" description="In DRVT; dbSNP:rs121917934." evidence="36">
    <original>T</original>
    <variation>P</variation>
    <location>
        <position position="162"/>
    </location>
</feature>
<feature type="sequence variant" id="VAR_064235" description="In DRVT; dbSNP:rs121918766." evidence="59">
    <original>I</original>
    <variation>K</variation>
    <location>
        <position position="171"/>
    </location>
</feature>
<feature type="sequence variant" id="VAR_073451" description="In DRVT." evidence="53">
    <original>I</original>
    <variation>R</variation>
    <location>
        <position position="171"/>
    </location>
</feature>
<feature type="sequence variant" id="VAR_064236" description="In DRVT; dbSNP:rs121918767." evidence="59">
    <original>A</original>
    <variation>T</variation>
    <location>
        <position position="175"/>
    </location>
</feature>
<feature type="sequence variant" id="VAR_073452" description="In DRVT." evidence="53">
    <original>A</original>
    <variation>V</variation>
    <location>
        <position position="175"/>
    </location>
</feature>
<feature type="sequence variant" id="VAR_029664" description="In DRVT; results in a non-functional channel; dbSNP:rs121918770." evidence="19 37">
    <original>G</original>
    <variation>E</variation>
    <location>
        <position position="177"/>
    </location>
</feature>
<feature type="sequence variant" id="VAR_073453" description="In ICEGTC." evidence="81">
    <original>F</original>
    <variation>S</variation>
    <location>
        <position position="178"/>
    </location>
</feature>
<feature type="sequence variant" id="VAR_073454" description="In DRVT." evidence="81">
    <original>C</original>
    <variation>R</variation>
    <location>
        <position position="179"/>
    </location>
</feature>
<feature type="sequence variant" id="VAR_085768" description="Found in a child with developmental disabilities; uncertain significance." evidence="95">
    <original>R</original>
    <variation>Q</variation>
    <location>
        <position position="187"/>
    </location>
</feature>
<feature type="sequence variant" id="VAR_014267" description="In GEFSP2; dbSNP:rs121917953." evidence="8 16">
    <original>D</original>
    <variation>V</variation>
    <location>
        <position position="188"/>
    </location>
</feature>
<feature type="sequence variant" id="VAR_029665" description="In DRVT; dbSNP:rs121918773." evidence="23 81">
    <original>W</original>
    <variation>R</variation>
    <location>
        <position position="190"/>
    </location>
</feature>
<feature type="sequence variant" id="VAR_073455" description="In DRVT." evidence="53">
    <original>N</original>
    <variation>K</variation>
    <location>
        <position position="191"/>
    </location>
</feature>
<feature type="sequence variant" id="VAR_064237" description="In DRVT; dbSNP:rs121918762." evidence="53 67">
    <original>N</original>
    <variation>Y</variation>
    <location>
        <position position="191"/>
    </location>
</feature>
<feature type="sequence variant" id="VAR_073456" description="In DRVT." evidence="53">
    <original>D</original>
    <variation>G</variation>
    <location>
        <position position="194"/>
    </location>
</feature>
<feature type="sequence variant" id="VAR_064238" description="In DRVT; dbSNP:rs121917935." evidence="36 59 83 91">
    <original>D</original>
    <variation>N</variation>
    <location>
        <position position="194"/>
    </location>
</feature>
<feature type="sequence variant" id="VAR_064347" description="In DRVT; borderline phenotype with spike wave activity; dbSNP:rs121917983." evidence="39 72">
    <original>T</original>
    <variation>R</variation>
    <location>
        <position position="199"/>
    </location>
</feature>
<feature type="sequence variant" id="VAR_064297" description="In DRVT; dbSNP:rs121917936." evidence="36">
    <original>T</original>
    <variation>K</variation>
    <location>
        <position position="217"/>
    </location>
</feature>
<feature type="sequence variant" id="VAR_073457" description="In GEFSP2; also found in patients with Panayiotopoulos syndrome; dbSNP:rs970867558." evidence="55 72">
    <original>F</original>
    <variation>L</variation>
    <location>
        <position position="218"/>
    </location>
</feature>
<feature type="sequence variant" id="VAR_085926" description="In DRVT." evidence="10">
    <location>
        <begin position="222"/>
        <end position="2009"/>
    </location>
</feature>
<feature type="sequence variant" id="VAR_073458" description="In DRVT." evidence="53">
    <original>A</original>
    <variation>E</variation>
    <location>
        <position position="223"/>
    </location>
</feature>
<feature type="sequence variant" id="VAR_090162" description="In DRVT." evidence="75">
    <original>T</original>
    <variation>K</variation>
    <location>
        <position position="226"/>
    </location>
</feature>
<feature type="sequence variant" id="VAR_043351" description="In DEE6B; dbSNP:rs121917984." evidence="39 94">
    <original>T</original>
    <variation>M</variation>
    <location>
        <position position="226"/>
    </location>
</feature>
<feature type="sequence variant" id="VAR_073459" description="In DRVT; dbSNP:rs121917984." evidence="81">
    <original>T</original>
    <variation>R</variation>
    <location>
        <position position="226"/>
    </location>
</feature>
<feature type="sequence variant" id="VAR_029666" description="In DRVT; borderline phenotype with spike wave activity in some patients; results in a non-functional channel; dbSNP:rs121917937." evidence="19 36 37 53 59 72 81">
    <original>I</original>
    <variation>S</variation>
    <location>
        <position position="227"/>
    </location>
</feature>
<feature type="sequence variant" id="VAR_073460" description="In DRVT." evidence="72">
    <original>I</original>
    <variation>T</variation>
    <location>
        <position position="227"/>
    </location>
</feature>
<feature type="sequence variant" id="VAR_078192" description="In DRVT; dbSNP:rs1057519530." evidence="91">
    <original>S</original>
    <variation>P</variation>
    <location>
        <position position="228"/>
    </location>
</feature>
<feature type="sequence variant" id="VAR_073461" description="In DRVT." evidence="53 72">
    <original>G</original>
    <variation>S</variation>
    <location>
        <position position="232"/>
    </location>
</feature>
<feature type="sequence variant" id="VAR_073462" description="In DRVT." evidence="72">
    <original>L</original>
    <variation>R</variation>
    <location>
        <position position="233"/>
    </location>
</feature>
<feature type="sequence variant" id="VAR_043352" description="In DRVT; borderline phenotype with spike wave activity in some patients; dbSNP:rs121917985." evidence="39 65">
    <original>A</original>
    <variation>T</variation>
    <location>
        <position position="239"/>
    </location>
</feature>
<feature type="sequence variant" id="VAR_064239" description="In DRVT; dbSNP:rs121917909." evidence="71">
    <original>A</original>
    <variation>V</variation>
    <location>
        <position position="239"/>
    </location>
</feature>
<feature type="sequence variant" id="VAR_073463" description="In DRVT; dbSNP:rs794726755." evidence="53">
    <original>S</original>
    <variation>Y</variation>
    <location>
        <position position="243"/>
    </location>
</feature>
<feature type="sequence variant" id="VAR_073464" description="In ICEGTC." evidence="81">
    <original>I</original>
    <variation>M</variation>
    <location>
        <position position="252"/>
    </location>
</feature>
<feature type="sequence variant" id="VAR_029667" description="In DRVT; dbSNP:rs121918780." evidence="24">
    <original>I</original>
    <variation>N</variation>
    <location>
        <position position="252"/>
    </location>
</feature>
<feature type="sequence variant" id="VAR_073465" description="In GEFSP2." evidence="72">
    <original>T</original>
    <variation>I</variation>
    <location>
        <position position="254"/>
    </location>
</feature>
<feature type="sequence variant" id="VAR_064240" description="In DRVT; dbSNP:rs121918735." evidence="65 81">
    <original>S</original>
    <variation>R</variation>
    <location>
        <position position="259"/>
    </location>
</feature>
<feature type="sequence variant" id="VAR_029668" description="In DRVT; dbSNP:rs121918749." evidence="15">
    <original>G</original>
    <variation>W</variation>
    <location>
        <position position="265"/>
    </location>
</feature>
<feature type="sequence variant" id="VAR_073466" description="In DRVT." evidence="53">
    <original>C</original>
    <variation>R</variation>
    <location>
        <position position="277"/>
    </location>
</feature>
<feature type="sequence variant" id="VAR_073467" description="In DRVT." evidence="52">
    <original>W</original>
    <variation>C</variation>
    <location>
        <position position="280"/>
    </location>
</feature>
<feature type="sequence variant" id="VAR_029669" description="In DRVT; dbSNP:rs121917938." evidence="19 36 81">
    <original>W</original>
    <variation>R</variation>
    <location>
        <position position="280"/>
    </location>
</feature>
<feature type="sequence variant" id="VAR_073468" description="In DRVT." evidence="81">
    <original>P</original>
    <variation>A</variation>
    <location>
        <position position="281"/>
    </location>
</feature>
<feature type="sequence variant" id="VAR_073469" description="In DRVT; dbSNP:rs796052964." evidence="53">
    <original>P</original>
    <variation>L</variation>
    <location>
        <position position="281"/>
    </location>
</feature>
<feature type="sequence variant" id="VAR_073470" description="In DRVT." evidence="53">
    <original>P</original>
    <variation>S</variation>
    <location>
        <position position="281"/>
    </location>
</feature>
<feature type="sequence variant" id="VAR_072743" description="In DRVT." evidence="80">
    <original>E</original>
    <variation>V</variation>
    <location>
        <position position="289"/>
    </location>
</feature>
<feature type="sequence variant" id="VAR_073471" description="In ICEGTC." evidence="81">
    <original>H</original>
    <variation>R</variation>
    <location>
        <position position="290"/>
    </location>
</feature>
<feature type="sequence variant" id="VAR_073472" description="In GEFSP2." evidence="72">
    <original>S</original>
    <variation>G</variation>
    <location>
        <position position="291"/>
    </location>
</feature>
<feature type="sequence variant" id="VAR_029670" description="In DRVT; dbSNP:rs121918771." evidence="19">
    <original>T</original>
    <variation>I</variation>
    <location>
        <position position="297"/>
    </location>
</feature>
<feature type="sequence variant" id="VAR_064298" description="In DRVT; dbSNP:rs121917928." evidence="42 53">
    <original>R</original>
    <variation>I</variation>
    <location>
        <position position="322"/>
    </location>
</feature>
<feature type="sequence variant" id="VAR_073473" evidence="72">
    <original>A</original>
    <variation>V</variation>
    <location>
        <position position="333"/>
    </location>
</feature>
<feature type="sequence variant" id="VAR_073474" description="In DRVT." evidence="53">
    <original>S</original>
    <variation>F</variation>
    <location>
        <position position="340"/>
    </location>
</feature>
<feature type="sequence variant" id="VAR_073475" description="In DRVT; dbSNP:rs794726797." evidence="72">
    <original>A</original>
    <variation>V</variation>
    <location>
        <position position="342"/>
    </location>
</feature>
<feature type="sequence variant" id="VAR_029671" description="In DRVT; dbSNP:rs121918753." evidence="15 53 72">
    <original>G</original>
    <variation>D</variation>
    <location>
        <position position="343"/>
    </location>
</feature>
<feature type="sequence variant" id="VAR_073476" description="In DRVT; dbSNP:rs794726782." evidence="53">
    <original>C</original>
    <variation>R</variation>
    <location>
        <position position="345"/>
    </location>
</feature>
<feature type="sequence variant" id="VAR_073477" description="In DRVT." evidence="72">
    <original>C</original>
    <variation>W</variation>
    <location>
        <position position="351"/>
    </location>
</feature>
<feature type="sequence variant" id="VAR_073478" description="In DRVT." evidence="53">
    <original>G</original>
    <variation>D</variation>
    <location>
        <position position="355"/>
    </location>
</feature>
<feature type="sequence variant" id="VAR_064299" description="In DRVT; dbSNP:rs121917920." evidence="42">
    <original>R</original>
    <variation>G</variation>
    <location>
        <position position="356"/>
    </location>
</feature>
<feature type="sequence variant" id="VAR_073479" description="In DRVT." evidence="53">
    <original>N</original>
    <variation>I</variation>
    <location>
        <position position="357"/>
    </location>
</feature>
<feature type="sequence variant" id="VAR_064300" description="In DRVT; dbSNP:rs121917923." evidence="42">
    <original>P</original>
    <variation>T</variation>
    <location>
        <position position="358"/>
    </location>
</feature>
<feature type="sequence variant" id="VAR_073480" description="In DRVT and ICEGTC; dbSNP:rs794726713." evidence="72 84">
    <original>N</original>
    <variation>S</variation>
    <location>
        <position position="359"/>
    </location>
</feature>
<feature type="sequence variant" id="VAR_073481" description="In DRVT; dbSNP:rs1131691465." evidence="81">
    <original>T</original>
    <variation>P</variation>
    <location>
        <position position="363"/>
    </location>
</feature>
<feature type="sequence variant" id="VAR_073482" description="In DRVT." evidence="72">
    <original>T</original>
    <variation>R</variation>
    <location>
        <position position="363"/>
    </location>
</feature>
<feature type="sequence variant" id="VAR_043353" description="In DRVT; dbSNP:rs121917958." evidence="50">
    <original>D</original>
    <variation>E</variation>
    <location>
        <position position="366"/>
    </location>
</feature>
<feature type="sequence variant" id="VAR_043354" description="In GEFSP2; dbSNP:rs121917957." evidence="50">
    <original>R</original>
    <variation>Q</variation>
    <location>
        <position position="377"/>
    </location>
</feature>
<feature type="sequence variant" id="VAR_073483" description="In DRVT." evidence="53">
    <original>L</original>
    <variation>Q</variation>
    <location>
        <position position="378"/>
    </location>
</feature>
<feature type="sequence variant" id="VAR_072744" description="In DRVT." evidence="80">
    <original>M</original>
    <variation>R</variation>
    <location>
        <position position="379"/>
    </location>
</feature>
<feature type="sequence variant" id="VAR_073484" description="Found in a patient with an unclassified form of epilepsy; likely pathogenic." evidence="72">
    <original>D</original>
    <variation>N</variation>
    <location>
        <position position="382"/>
    </location>
</feature>
<feature type="sequence variant" id="VAR_064301" description="In DRVT; dbSNP:rs121917939." evidence="36">
    <original>F</original>
    <variation>L</variation>
    <location>
        <position position="383"/>
    </location>
</feature>
<feature type="sequence variant" id="VAR_073485" description="In DRVT; borderline phenotype; dbSNP:rs1057523858." evidence="72 81">
    <original>W</original>
    <variation>R</variation>
    <location>
        <position position="384"/>
    </location>
</feature>
<feature type="sequence variant" id="VAR_064241" description="In GEFSP2; dbSNP:rs121918781." evidence="56">
    <original>Y</original>
    <variation>H</variation>
    <location>
        <position position="388"/>
    </location>
</feature>
<feature type="sequence variant" id="VAR_043355" description="In DRVT; also in a patient with myoclonic astatic epilepsy; dbSNP:rs121917929." evidence="36 39 42 53 72">
    <original>R</original>
    <variation>C</variation>
    <location>
        <position position="393"/>
    </location>
</feature>
<feature type="sequence variant" id="VAR_029672" description="In DRVT and ICEGTC; results in a non-functional channel; dbSNP:rs121917927." evidence="18 37 42 65 72 80 81 93">
    <original>R</original>
    <variation>H</variation>
    <location>
        <position position="393"/>
    </location>
</feature>
<feature type="sequence variant" id="VAR_064302" description="In DRVT; dbSNP:rs121917929." evidence="36">
    <original>R</original>
    <variation>S</variation>
    <location>
        <position position="393"/>
    </location>
</feature>
<feature type="sequence variant" id="VAR_043356" description="Found in a patient with cryptogenic generalized epilepsy; likely pathogenic; dbSNP:rs121917988." evidence="39">
    <original>A</original>
    <variation>P</variation>
    <location>
        <position position="395"/>
    </location>
</feature>
<feature type="sequence variant" id="VAR_073486" description="In DRVT." evidence="72">
    <original>M</original>
    <variation>V</variation>
    <location>
        <position position="400"/>
    </location>
</feature>
<feature type="sequence variant" id="VAR_073487" description="In DRVT." evidence="53">
    <location>
        <position position="400"/>
    </location>
</feature>
<feature type="sequence variant" id="VAR_064303" description="In DRVT; dbSNP:rs121917966." evidence="35 39">
    <original>F</original>
    <variation>L</variation>
    <location>
        <position position="403"/>
    </location>
</feature>
<feature type="sequence variant" id="VAR_073488" description="In DRVT." evidence="72">
    <original>F</original>
    <variation>V</variation>
    <location>
        <position position="403"/>
    </location>
</feature>
<feature type="sequence variant" id="VAR_064242" description="In DRVT; dbSNP:rs121918768." evidence="59 72">
    <original>V</original>
    <variation>F</variation>
    <location>
        <position position="406"/>
    </location>
</feature>
<feature type="sequence variant" id="VAR_073489" description="In DRVT." evidence="81">
    <original>L</original>
    <variation>W</variation>
    <location>
        <position position="409"/>
    </location>
</feature>
<feature type="sequence variant" id="VAR_064243" description="In DRVT; dbSNP:rs121917967." evidence="35 39 59">
    <original>Y</original>
    <variation>N</variation>
    <location>
        <position position="413"/>
    </location>
</feature>
<feature type="sequence variant" id="VAR_043357" description="Found in a patient with cryptogenic generalized epilepsy; likely pathogenic; dbSNP:rs121917989." evidence="39">
    <original>V</original>
    <variation>E</variation>
    <location>
        <position position="422"/>
    </location>
</feature>
<feature type="sequence variant" id="VAR_085927" description="In DEE6B." evidence="86">
    <original>V</original>
    <variation>L</variation>
    <location>
        <position position="422"/>
    </location>
</feature>
<feature type="sequence variant" id="VAR_073490" description="In DRVT; dbSNP:rs796052973." evidence="53 81">
    <original>Y</original>
    <variation>C</variation>
    <location>
        <position position="426"/>
    </location>
</feature>
<feature type="sequence variant" id="VAR_029673" description="In DRVT; results in decreased peak current densities; causes a negative shift in the half-maximal steady-state inactivation and delayed recovery from fast inactivation; dbSNP:rs121917940." evidence="19 36 37">
    <original>Y</original>
    <variation>N</variation>
    <location>
        <position position="426"/>
    </location>
</feature>
<feature type="sequence variant" id="VAR_078726" description="In DRVT." evidence="87">
    <location>
        <begin position="450"/>
        <end position="2009"/>
    </location>
</feature>
<feature type="sequence variant" id="VAR_073491" description="In DRVT." evidence="53">
    <original>S</original>
    <variation>F</variation>
    <location>
        <position position="525"/>
    </location>
</feature>
<feature type="sequence variant" id="VAR_088154" description="Found in a patient with infantile epileptic spasms also carrying a PLPPR4 variant; uncertain significance." evidence="97">
    <original>N</original>
    <variation>S</variation>
    <location>
        <position position="541"/>
    </location>
</feature>
<feature type="sequence variant" id="VAR_029674" description="Found in patients with different types of epilepsy; uncertain significance; also found in patients with autism; uncertain significance; dbSNP:rs121918817." evidence="17 53 57 81">
    <original>R</original>
    <variation>Q</variation>
    <location>
        <position position="542"/>
    </location>
</feature>
<feature type="sequence variant" id="VAR_064244" description="In dbSNP:rs121918769." evidence="53 59 72">
    <original>R</original>
    <variation>H</variation>
    <location>
        <position position="604"/>
    </location>
</feature>
<feature type="sequence variant" id="VAR_078193" description="Found in a patient with drug-resistant epilepsy and mild cognitive impairment; likely pathogenic; dbSNP:rs1057519529." evidence="91">
    <original>E</original>
    <variation>D</variation>
    <location>
        <position position="616"/>
    </location>
</feature>
<feature type="sequence variant" id="VAR_043358" description="In DRVT; also found in a patient with cryptogenic generalized epilepsy; dbSNP:rs121917990." evidence="39 53 72">
    <original>S</original>
    <variation>G</variation>
    <location>
        <position position="626"/>
    </location>
</feature>
<feature type="sequence variant" id="VAR_073492" description="In DRVT." evidence="39">
    <original>D</original>
    <variation>G</variation>
    <location>
        <position position="674"/>
    </location>
</feature>
<feature type="sequence variant" id="VAR_073493" description="In dbSNP:rs1260934774." evidence="72">
    <original>V</original>
    <variation>I</variation>
    <location>
        <position position="699"/>
    </location>
</feature>
<feature type="sequence variant" id="VAR_073494" description="In DRVT." evidence="72">
    <original>N</original>
    <variation>D</variation>
    <location>
        <position position="762"/>
    </location>
</feature>
<feature type="sequence variant" id="VAR_064245" description="In DRVT; dbSNP:rs121917968." evidence="39 59">
    <original>L</original>
    <variation>P</variation>
    <location>
        <position position="783"/>
    </location>
</feature>
<feature type="sequence variant" id="VAR_073495" description="In DRVT; dbSNP:rs796053095." evidence="72">
    <original>M</original>
    <variation>T</variation>
    <location>
        <position position="785"/>
    </location>
</feature>
<feature type="sequence variant" id="VAR_029675" description="In GEFSP2; dbSNP:rs121918782." evidence="20">
    <original>Y</original>
    <variation>C</variation>
    <location>
        <position position="790"/>
    </location>
</feature>
<feature type="sequence variant" id="VAR_073496" description="Found in patients with Panayiotopoulos syndrome; likely pathogenic; dbSNP:rs121918782." evidence="43 57">
    <original>Y</original>
    <variation>F</variation>
    <location>
        <position position="790"/>
    </location>
</feature>
<feature type="sequence variant" id="VAR_029676" description="In ICEGTC; results in increased peak current density and delayed slow inactivation onset; recovery from slow inactivation is delayed; dbSNP:rs121918758." evidence="15 31">
    <original>T</original>
    <variation>S</variation>
    <location>
        <position position="808"/>
    </location>
</feature>
<feature type="sequence variant" id="VAR_073497" description="In DRVT; borderline phenotype." evidence="72">
    <original>T</original>
    <variation>I</variation>
    <location>
        <position position="812"/>
    </location>
</feature>
<feature type="sequence variant" id="VAR_064304" description="In DRVT; dbSNP:rs121917941." evidence="36">
    <original>T</original>
    <variation>R</variation>
    <location>
        <position position="812"/>
    </location>
</feature>
<feature type="sequence variant" id="VAR_073498" description="In DRVT." evidence="72">
    <original>L</original>
    <variation>R</variation>
    <location>
        <position position="842"/>
    </location>
</feature>
<feature type="sequence variant" id="VAR_073499" description="In DRVT." evidence="53">
    <original>S</original>
    <variation>R</variation>
    <location>
        <position position="843"/>
    </location>
</feature>
<feature type="sequence variant" id="VAR_064305" description="In DRVT; dbSNP:rs121917942." evidence="36">
    <original>E</original>
    <variation>K</variation>
    <location>
        <position position="846"/>
    </location>
</feature>
<feature type="sequence variant" id="VAR_073500" description="In DRVT." evidence="72">
    <location>
        <begin position="854"/>
        <end position="855"/>
    </location>
</feature>
<feature type="sequence variant" id="VAR_064306" description="In GEFSP2 and DRVT; causes a positive shift in the voltage dependence of channel activation, slower recovery from slow inactivation and lower levels of current compared with the wild-type channel; dbSNP:rs121918784." evidence="34 53 72">
    <original>R</original>
    <variation>C</variation>
    <location>
        <position position="859"/>
    </location>
</feature>
<feature type="sequence variant" id="VAR_073501" description="In GEFSP2; results in impaired channel fast inactivation and significantly increased persistent current; dbSNP:rs398123588." evidence="77">
    <original>R</original>
    <variation>H</variation>
    <location>
        <position position="859"/>
    </location>
</feature>
<feature type="sequence variant" id="VAR_085928" description="In DRVT." evidence="76">
    <original>R</original>
    <variation>G</variation>
    <location>
        <position position="862"/>
    </location>
</feature>
<feature type="sequence variant" id="VAR_064246" description="In DRVT; dbSNP:rs121918785." evidence="62 72">
    <original>R</original>
    <variation>Q</variation>
    <location>
        <position position="862"/>
    </location>
</feature>
<feature type="sequence variant" id="VAR_073502" description="In DRVT; results in impaired channel fast inactivation and significantly increased persistent current." evidence="77">
    <original>R</original>
    <variation>G</variation>
    <location>
        <position position="865"/>
    </location>
</feature>
<feature type="sequence variant" id="VAR_064247" description="In DRVT; dbSNP:rs121918623." evidence="53 67">
    <original>T</original>
    <variation>K</variation>
    <location>
        <position position="875"/>
    </location>
</feature>
<feature type="sequence variant" id="VAR_010110" description="In GEFSP2 and DRVT; borderline phenotype; dbSNP:rs121918623." evidence="7 81">
    <original>T</original>
    <variation>M</variation>
    <location>
        <position position="875"/>
    </location>
</feature>
<feature type="sequence variant" id="VAR_073503" description="In DRVT." evidence="81">
    <original>L</original>
    <variation>I</variation>
    <location>
        <position position="876"/>
    </location>
</feature>
<feature type="sequence variant" id="VAR_073504" description="In DRVT; dbSNP:rs1553541473." evidence="72">
    <original>L</original>
    <variation>P</variation>
    <location>
        <position position="890"/>
    </location>
</feature>
<feature type="sequence variant" id="VAR_073505" description="In DRVT; borderline phenotype." evidence="81">
    <original>V</original>
    <variation>F</variation>
    <location>
        <position position="896"/>
    </location>
</feature>
<feature type="sequence variant" id="VAR_073506" description="In ICEGTC; dbSNP:rs745378416." evidence="81">
    <original>V</original>
    <variation>I</variation>
    <location>
        <position position="896"/>
    </location>
</feature>
<feature type="sequence variant" id="VAR_073507" description="In DRVT." evidence="53">
    <original>V</original>
    <variation>L</variation>
    <location>
        <position position="896"/>
    </location>
</feature>
<feature type="sequence variant" id="VAR_073508" description="In GEFSP2." evidence="57">
    <original>I</original>
    <variation>T</variation>
    <location>
        <position position="899"/>
    </location>
</feature>
<feature type="sequence variant" id="VAR_029677" description="In DRVT; dbSNP:rs121918787." evidence="13">
    <original>F</original>
    <variation>C</variation>
    <location>
        <position position="902"/>
    </location>
</feature>
<feature type="sequence variant" id="VAR_073509" description="In dbSNP:rs141950573." evidence="53 72">
    <original>A</original>
    <variation>T</variation>
    <location>
        <position position="924"/>
    </location>
</feature>
<feature type="sequence variant" id="VAR_073510" description="In DRVT; dbSNP:rs794726811." evidence="53">
    <original>C</original>
    <variation>F</variation>
    <location>
        <position position="927"/>
    </location>
</feature>
<feature type="sequence variant" id="VAR_029678" description="In DRVT; dbSNP:rs121918788." evidence="13 53">
    <original>R</original>
    <variation>C</variation>
    <location>
        <position position="931"/>
    </location>
</feature>
<feature type="sequence variant" id="VAR_073511" description="In DRVT; likely pathogenic; dbSNP:rs794726718." evidence="72 75">
    <original>R</original>
    <variation>H</variation>
    <location>
        <position position="931"/>
    </location>
</feature>
<feature type="sequence variant" id="VAR_073512" description="In DRVT." evidence="72">
    <original>W</original>
    <variation>C</variation>
    <location>
        <position position="932"/>
    </location>
</feature>
<feature type="sequence variant" id="VAR_073513" description="In DRVT." evidence="72">
    <original>H</original>
    <variation>P</variation>
    <location>
        <position position="933"/>
    </location>
</feature>
<feature type="sequence variant" id="VAR_029679" description="In DRVT; dbSNP:rs121918774." evidence="23 53 81">
    <original>M</original>
    <variation>I</variation>
    <location>
        <position position="934"/>
    </location>
</feature>
<feature type="sequence variant" id="VAR_073514" description="In GEFSP2." evidence="51">
    <original>N</original>
    <variation>H</variation>
    <location>
        <position position="935"/>
    </location>
</feature>
<feature type="sequence variant" id="VAR_073515" description="In DRVT; uncertain significance." evidence="53">
    <original>H</original>
    <variation>P</variation>
    <location>
        <position position="939"/>
    </location>
</feature>
<feature type="sequence variant" id="VAR_029680" description="In DRVT; results in a non-functional channel; dbSNP:rs121918795." evidence="18 37">
    <original>H</original>
    <variation>Q</variation>
    <location>
        <position position="939"/>
    </location>
</feature>
<feature type="sequence variant" id="VAR_064248" description="In DRVT; dbSNP:rs121918736." evidence="65">
    <original>H</original>
    <variation>Y</variation>
    <location>
        <position position="939"/>
    </location>
</feature>
<feature type="sequence variant" id="VAR_073516" description="In DRVT; dbSNP:rs1057521080." evidence="81">
    <original>S</original>
    <variation>F</variation>
    <location>
        <position position="940"/>
    </location>
</feature>
<feature type="sequence variant" id="VAR_064307" description="In DRVT; dbSNP:rs121917943." evidence="36">
    <original>L</original>
    <variation>P</variation>
    <location>
        <position position="942"/>
    </location>
</feature>
<feature type="sequence variant" id="VAR_073517" description="In DRVT." evidence="53">
    <original>I</original>
    <variation>N</variation>
    <location>
        <position position="943"/>
    </location>
</feature>
<feature type="sequence variant" id="VAR_029681" description="In DRVT and ICEGTC; dbSNP:rs121917969." evidence="23 81">
    <original>V</original>
    <variation>A</variation>
    <location>
        <position position="944"/>
    </location>
</feature>
<feature type="sequence variant" id="VAR_064249" description="In DRVT." evidence="39 59">
    <original>V</original>
    <variation>E</variation>
    <location>
        <position position="944"/>
    </location>
</feature>
<feature type="sequence variant" id="VAR_064250" description="In DRVT; dbSNP:rs121917970." evidence="39 59">
    <original>F</original>
    <variation>L</variation>
    <location>
        <position position="945"/>
    </location>
</feature>
<feature type="sequence variant" id="VAR_029682" description="In DRVT; loss-of-function mutation resulting in complete absence of sodium current; dbSNP:rs121918775." evidence="23 72 77 81">
    <original>R</original>
    <variation>C</variation>
    <location>
        <position position="946"/>
    </location>
</feature>
<feature type="sequence variant" id="VAR_029683" description="In DRVT and GEFSP2; GEFSP2 phenotype consists of partial epilepsy with antecedent febrile seizures and seizure aggravation by antiepileptic drugs; loss-of-function mutation resulting in complete absence of sodium current; dbSNP:rs121917971." evidence="23 35 59 68 72 77 81">
    <original>R</original>
    <variation>H</variation>
    <location>
        <position position="946"/>
    </location>
</feature>
<feature type="sequence variant" id="VAR_057995" description="In DRVT; dbSNP:rs121918775." evidence="28">
    <original>R</original>
    <variation>S</variation>
    <location>
        <position position="946"/>
    </location>
</feature>
<feature type="sequence variant" id="VAR_073518" description="In DRVT." evidence="53">
    <original>C</original>
    <variation>S</variation>
    <location>
        <position position="949"/>
    </location>
</feature>
<feature type="sequence variant" id="VAR_073519" description="In DRVT." evidence="53">
    <original>C</original>
    <variation>Y</variation>
    <location>
        <position position="949"/>
    </location>
</feature>
<feature type="sequence variant" id="VAR_064251" description="In DRVT; dbSNP:rs121917972." evidence="39 59">
    <original>G</original>
    <variation>E</variation>
    <location>
        <position position="950"/>
    </location>
</feature>
<feature type="sequence variant" id="VAR_073520" description="In DRVT." evidence="72">
    <original>G</original>
    <variation>R</variation>
    <location>
        <position position="950"/>
    </location>
</feature>
<feature type="sequence variant" id="VAR_064252" description="In DRVT; dbSNP:rs121918737." evidence="65">
    <original>W</original>
    <variation>G</variation>
    <location>
        <position position="952"/>
    </location>
</feature>
<feature type="sequence variant" id="VAR_064253" description="In DRVT; dbSNP:rs121918786." evidence="62 72">
    <original>E</original>
    <variation>K</variation>
    <location>
        <position position="954"/>
    </location>
</feature>
<feature type="sequence variant" id="VAR_073521" description="In DRVT." evidence="72">
    <original>M</original>
    <variation>K</variation>
    <location>
        <position position="956"/>
    </location>
</feature>
<feature type="sequence variant" id="VAR_064308" description="In DRVT; dbSNP:rs121917917." evidence="42 72">
    <original>W</original>
    <variation>L</variation>
    <location>
        <position position="957"/>
    </location>
</feature>
<feature type="sequence variant" id="VAR_029684" description="In DRVT; results in a non-functional channel; dbSNP:rs121918796." evidence="18 37">
    <original>C</original>
    <variation>R</variation>
    <location>
        <position position="959"/>
    </location>
</feature>
<feature type="sequence variant" id="VAR_073522" description="In GEFSP2." evidence="72">
    <original>M</original>
    <variation>T</variation>
    <location>
        <position position="960"/>
    </location>
</feature>
<feature type="sequence variant" id="VAR_029685" description="In DRVT; dbSNP:rs121918750." evidence="15">
    <original>M</original>
    <variation>V</variation>
    <location>
        <position position="960"/>
    </location>
</feature>
<feature type="sequence variant" id="VAR_073523" description="In DRVT." evidence="53">
    <original>M</original>
    <variation>K</variation>
    <location>
        <position position="973"/>
    </location>
</feature>
<feature type="sequence variant" id="VAR_043359" description="In GEFSP2; dbSNP:rs121917991." evidence="39 72">
    <original>M</original>
    <variation>V</variation>
    <location>
        <position position="973"/>
    </location>
</feature>
<feature type="sequence variant" id="VAR_073524" description="In DRVT and GEFSP2." evidence="57 72">
    <original>M</original>
    <variation>I</variation>
    <location>
        <position position="976"/>
    </location>
</feature>
<feature type="sequence variant" id="VAR_073525" description="In GEFSP2; uncertain significance." evidence="44">
    <original>I</original>
    <variation>M</variation>
    <location>
        <position position="978"/>
    </location>
</feature>
<feature type="sequence variant" id="VAR_029686" description="In ICEGTC; loss-of-function mutation resulting in absence of sodium current; dbSNP:rs121918754." evidence="15 31">
    <original>G</original>
    <variation>R</variation>
    <location>
        <position position="979"/>
    </location>
</feature>
<feature type="sequence variant" id="VAR_073526" description="In DRVT." evidence="72">
    <original>G</original>
    <variation>V</variation>
    <location>
        <position position="979"/>
    </location>
</feature>
<feature type="sequence variant" id="VAR_075569" description="Found in a patient with acute encephalopathy with biphasic seizures and late reduced diffusion; uncertain significance." evidence="79 88">
    <original>V</original>
    <variation>L</variation>
    <location>
        <position position="982"/>
    </location>
</feature>
<feature type="sequence variant" id="VAR_029687" description="In ICEGTC; reduced function; decreased peak current density; results in a negative shift of inactivation and positive shift of activation; dbSNP:rs121918756." evidence="15 31">
    <original>V</original>
    <variation>A</variation>
    <location>
        <position position="983"/>
    </location>
</feature>
<feature type="sequence variant" id="VAR_029688" description="In DRVT; dbSNP:rs121918747." evidence="15">
    <original>N</original>
    <variation>I</variation>
    <location>
        <position position="985"/>
    </location>
</feature>
<feature type="sequence variant" id="VAR_014268" description="In DRVT; complete loss of sodium ion transmembrane transport; dbSNP:rs121918625." evidence="10 22">
    <original>L</original>
    <variation>F</variation>
    <location>
        <position position="986"/>
    </location>
</feature>
<feature type="sequence variant" id="VAR_073527" description="In DRVT." evidence="53">
    <original>L</original>
    <variation>P</variation>
    <location>
        <position position="986"/>
    </location>
</feature>
<feature type="sequence variant" id="VAR_073528" description="In DRVT." evidence="81">
    <original>F</original>
    <variation>L</variation>
    <location>
        <position position="987"/>
    </location>
</feature>
<feature type="sequence variant" id="VAR_073529" description="In DRVT; borderline phenotype." evidence="72">
    <original>S</original>
    <variation>R</variation>
    <location>
        <position position="993"/>
    </location>
</feature>
<feature type="sequence variant" id="VAR_073530" description="In DRVT; dbSNP:rs1484321812." evidence="53">
    <original>D</original>
    <variation>G</variation>
    <location>
        <position position="998"/>
    </location>
</feature>
<feature type="sequence variant" id="VAR_073531" description="In DRVT." evidence="72">
    <original>NL</original>
    <variation>LIS</variation>
    <location>
        <begin position="999"/>
        <end position="1000"/>
    </location>
</feature>
<feature type="sequence variant" id="VAR_073532" description="Found in a patient with an unclassified form of epilepsy; likely pathogenic; dbSNP:rs375909896." evidence="72">
    <original>D</original>
    <variation>E</variation>
    <location>
        <position position="1006"/>
    </location>
</feature>
<feature type="sequence variant" id="VAR_029689" description="In ICEGTC; results in reduced peak current density and hyperpolarizing shift in inactivation; dbSNP:rs121918759." evidence="15 31">
    <original>N</original>
    <variation>I</variation>
    <location>
        <position position="1011"/>
    </location>
</feature>
<feature type="sequence variant" id="VAR_029690" description="In dbSNP:rs121918818." evidence="17">
    <original>I</original>
    <variation>T</variation>
    <location>
        <position position="1034"/>
    </location>
</feature>
<feature type="sequence variant" id="VAR_029691" evidence="17">
    <original>F</original>
    <variation>L</variation>
    <location>
        <position position="1038"/>
    </location>
</feature>
<feature type="sequence variant" id="VAR_014269" description="In dbSNP:rs2298771." evidence="8 13 15 17 30 60 70 99">
    <original>A</original>
    <variation>T</variation>
    <location>
        <position position="1067"/>
    </location>
</feature>
<feature type="sequence variant" id="VAR_073533" description="In DRVT." evidence="53">
    <original>E</original>
    <variation>K</variation>
    <location>
        <position position="1068"/>
    </location>
</feature>
<feature type="sequence variant" id="VAR_073534" evidence="53 72">
    <original>V</original>
    <variation>I</variation>
    <location>
        <position position="1079"/>
    </location>
</feature>
<feature type="sequence variant" id="VAR_073535" description="In dbSNP:rs753452775." evidence="53 72">
    <original>P</original>
    <variation>T</variation>
    <location>
        <position position="1109"/>
    </location>
</feature>
<feature type="sequence variant" id="VAR_064309" description="In FHM3; dbSNP:rs121918799." evidence="46">
    <original>T</original>
    <variation>S</variation>
    <location>
        <position position="1174"/>
    </location>
</feature>
<feature type="sequence variant" id="VAR_014270" description="In GEFSP2; causes hyperpolarized shifts in the voltage dependence of activation and steady-state inactivation; dbSNP:rs121917930." evidence="9 14 42">
    <original>W</original>
    <variation>R</variation>
    <location>
        <position position="1204"/>
    </location>
</feature>
<feature type="sequence variant" id="VAR_073536" description="In GEFSP2." evidence="72">
    <original>W</original>
    <variation>S</variation>
    <location>
        <position position="1204"/>
    </location>
</feature>
<feature type="sequence variant" id="VAR_043360" description="In DRVT; dbSNP:rs121917963." evidence="50">
    <original>L</original>
    <variation>P</variation>
    <location>
        <position position="1207"/>
    </location>
</feature>
<feature type="sequence variant" id="VAR_073537" description="In DRVT; dbSNP:rs1559149025." evidence="72">
    <original>R</original>
    <variation>K</variation>
    <location>
        <position position="1208"/>
    </location>
</feature>
<feature type="sequence variant" id="VAR_064254" description="In DRVT; dbSNP:rs121918738." evidence="65">
    <original>T</original>
    <variation>K</variation>
    <location>
        <position position="1210"/>
    </location>
</feature>
<feature type="sequence variant" id="VAR_073538" description="In ICEGTC; dbSNP:rs566081370." evidence="81">
    <original>R</original>
    <variation>Q</variation>
    <location>
        <position position="1213"/>
    </location>
</feature>
<feature type="sequence variant" id="VAR_073539" description="In DRVT." evidence="72">
    <original>E</original>
    <variation>K</variation>
    <location>
        <position position="1221"/>
    </location>
</feature>
<feature type="sequence variant" id="VAR_073540" description="In DRVT and GEFSP2." evidence="72">
    <original>L</original>
    <variation>F</variation>
    <location>
        <position position="1230"/>
    </location>
</feature>
<feature type="sequence variant" id="VAR_029692" description="In DRVT; dbSNP:rs121918746." evidence="15">
    <original>S</original>
    <variation>R</variation>
    <location>
        <position position="1231"/>
    </location>
</feature>
<feature type="sequence variant" id="VAR_064310" description="In DRVT; dbSNP:rs121918800." evidence="33">
    <original>S</original>
    <variation>T</variation>
    <location>
        <position position="1231"/>
    </location>
</feature>
<feature type="sequence variant" id="VAR_029693" description="In DRVT; dbSNP:rs121917911." evidence="19 36">
    <original>G</original>
    <variation>R</variation>
    <location>
        <position position="1233"/>
    </location>
</feature>
<feature type="sequence variant" id="VAR_043361" description="In DRVT; dbSNP:rs121917973." evidence="35 39 72 83">
    <original>E</original>
    <variation>D</variation>
    <location>
        <position position="1238"/>
    </location>
</feature>
<feature type="sequence variant" id="VAR_073541" description="In DRVT." evidence="53">
    <original>D</original>
    <variation>G</variation>
    <location>
        <position position="1239"/>
    </location>
</feature>
<feature type="sequence variant" id="VAR_073542" description="In DRVT." evidence="53">
    <original>D</original>
    <variation>Y</variation>
    <location>
        <position position="1239"/>
    </location>
</feature>
<feature type="sequence variant" id="VAR_064311" description="In DRVT; dbSNP:rs121917912." evidence="36">
    <original>R</original>
    <variation>Q</variation>
    <location>
        <position position="1245"/>
    </location>
</feature>
<feature type="sequence variant" id="VAR_073543" description="In GEFSP2." evidence="57">
    <original>K</original>
    <variation>N</variation>
    <location>
        <position position="1249"/>
    </location>
</feature>
<feature type="sequence variant" id="VAR_073544" description="In GEFSP2; dbSNP:rs140731963." evidence="57">
    <original>T</original>
    <variation>M</variation>
    <location>
        <position position="1250"/>
    </location>
</feature>
<feature type="sequence variant" id="VAR_073545" description="In ICEGTC." evidence="81">
    <original>Y</original>
    <variation>C</variation>
    <location>
        <position position="1254"/>
    </location>
</feature>
<feature type="sequence variant" id="VAR_073546" description="In DRVT." evidence="53">
    <original>A</original>
    <variation>D</variation>
    <location>
        <position position="1255"/>
    </location>
</feature>
<feature type="sequence variant" id="VAR_064255" description="In DRVT; dbSNP:rs121918739." evidence="65">
    <original>T</original>
    <variation>P</variation>
    <location>
        <position position="1260"/>
    </location>
</feature>
<feature type="sequence variant" id="VAR_029694" description="In DRVT; dbSNP:rs121918752." evidence="15">
    <original>F</original>
    <variation>L</variation>
    <location>
        <position position="1263"/>
    </location>
</feature>
<feature type="sequence variant" id="VAR_029695" description="In DRVT; dbSNP:rs121918794." evidence="13">
    <original>L</original>
    <variation>P</variation>
    <location>
        <position position="1265"/>
    </location>
</feature>
<feature type="sequence variant" id="VAR_073547" description="In DRVT." evidence="72 75">
    <original>E</original>
    <variation>A</variation>
    <location>
        <position position="1266"/>
    </location>
</feature>
<feature type="sequence variant" id="VAR_014271" description="In GEFSP2; dbSNP:rs121918626." evidence="12">
    <original>K</original>
    <variation>T</variation>
    <location>
        <position position="1270"/>
    </location>
</feature>
<feature type="sequence variant" id="VAR_077831" description="Found in a child with sporadic epilepsy; uncertain significance." evidence="82">
    <original>G</original>
    <variation>A</variation>
    <location>
        <position position="1275"/>
    </location>
</feature>
<feature type="sequence variant" id="VAR_073548" description="In DRVT." evidence="53">
    <original>G</original>
    <variation>V</variation>
    <location>
        <position position="1275"/>
    </location>
</feature>
<feature type="sequence variant" id="VAR_078727" description="In DRVT." evidence="90">
    <location>
        <begin position="1284"/>
        <end position="2009"/>
    </location>
</feature>
<feature type="sequence variant" id="VAR_073549" description="In DRVT." evidence="53">
    <original>W</original>
    <variation>S</variation>
    <location>
        <position position="1284"/>
    </location>
</feature>
<feature type="sequence variant" id="VAR_064256" description="In DRVT; dbSNP:rs121918740." evidence="65">
    <original>L</original>
    <variation>P</variation>
    <location>
        <position position="1287"/>
    </location>
</feature>
<feature type="sequence variant" id="VAR_073550" description="In DRVT." evidence="72">
    <original>D</original>
    <variation>N</variation>
    <location>
        <position position="1288"/>
    </location>
</feature>
<feature type="sequence variant" id="VAR_029696" description="In DRVT; results in a non-functional channel." evidence="13 37 53">
    <location>
        <position position="1289"/>
    </location>
</feature>
<feature type="sequence variant" id="VAR_064257" description="In FEB3A; uncertain significance; also found in patients with early infantile epileptic encephalopathy; uncertain significance; dbSNP:rs121917910." evidence="53 57 71 72">
    <original>E</original>
    <variation>D</variation>
    <location>
        <position position="1308"/>
    </location>
</feature>
<feature type="sequence variant" id="VAR_064258" description="In GEFSP2; dbSNP:rs121918801." evidence="63">
    <original>L</original>
    <variation>F</variation>
    <location>
        <position position="1309"/>
    </location>
</feature>
<feature type="sequence variant" id="VAR_073551" description="In DRVT." evidence="81">
    <original>R</original>
    <variation>G</variation>
    <location>
        <position position="1316"/>
    </location>
</feature>
<feature type="sequence variant" id="VAR_073552" description="In DRVT." evidence="53">
    <original>R</original>
    <variation>S</variation>
    <location>
        <position position="1316"/>
    </location>
</feature>
<feature type="sequence variant" id="VAR_073553" description="In DRVT; borderline phenotype." evidence="72">
    <original>A</original>
    <variation>V</variation>
    <location>
        <position position="1320"/>
    </location>
</feature>
<feature type="sequence variant" id="VAR_073554" description="In ICEGTC." evidence="81">
    <original>R</original>
    <variation>T</variation>
    <location>
        <position position="1325"/>
    </location>
</feature>
<feature type="sequence variant" id="VAR_073555" description="Found in a patient with an unclassified form of epilepsy; likely pathogenic." evidence="72">
    <original>A</original>
    <variation>D</variation>
    <location>
        <position position="1326"/>
    </location>
</feature>
<feature type="sequence variant" id="VAR_029698" description="In DRVT; dbSNP:rs121918803." evidence="21 72">
    <original>A</original>
    <variation>P</variation>
    <location>
        <position position="1326"/>
    </location>
</feature>
<feature type="sequence variant" id="VAR_073556" description="In ICEGTC and DRVT." evidence="53 81">
    <original>S</original>
    <variation>P</variation>
    <location>
        <position position="1328"/>
    </location>
</feature>
<feature type="sequence variant" id="VAR_043362" description="In DRVT; dbSNP:rs121917960." evidence="50 65">
    <original>V</original>
    <variation>M</variation>
    <location>
        <position position="1335"/>
    </location>
</feature>
<feature type="sequence variant" id="VAR_073557" description="In DRVT; changed voltage-gated sodium channel activity; right shift of the activation curve and slight left shift of the inactivation curve; dbSNP:rs794726789." evidence="78 81 96">
    <original>A</original>
    <variation>V</variation>
    <location>
        <position position="1339"/>
    </location>
</feature>
<feature type="sequence variant" id="VAR_073558" description="In DRVT." evidence="81">
    <original>I</original>
    <variation>M</variation>
    <location>
        <position position="1344"/>
    </location>
</feature>
<feature type="sequence variant" id="VAR_078728" description="In DRVT." evidence="90">
    <original>P</original>
    <variation>L</variation>
    <location>
        <position position="1345"/>
    </location>
</feature>
<feature type="sequence variant" id="VAR_085929" description="In DEE6B." evidence="94">
    <original>P</original>
    <variation>S</variation>
    <location>
        <position position="1345"/>
    </location>
</feature>
<feature type="sequence variant" id="VAR_073559" description="In DRVT." evidence="72">
    <original>V</original>
    <variation>G</variation>
    <location>
        <position position="1350"/>
    </location>
</feature>
<feature type="sequence variant" id="VAR_014272" description="In GEFSP2; complete loss of sodium ion transmembrane transport; dbSNP:rs121917954." evidence="8 22">
    <original>V</original>
    <variation>L</variation>
    <location>
        <position position="1353"/>
    </location>
</feature>
<feature type="sequence variant" id="VAR_029697" description="In DRVT; dbSNP:rs121918776." evidence="23 81">
    <original>L</original>
    <variation>P</variation>
    <location>
        <position position="1355"/>
    </location>
</feature>
<feature type="sequence variant" id="VAR_073560" description="In ICEGTC." evidence="81">
    <original>F</original>
    <variation>L</variation>
    <location>
        <position position="1357"/>
    </location>
</feature>
<feature type="sequence variant" id="VAR_073561" description="In DRVT." evidence="72">
    <original>W</original>
    <variation>R</variation>
    <location>
        <position position="1358"/>
    </location>
</feature>
<feature type="sequence variant" id="VAR_043363" description="In DRVT; dbSNP:rs121917961." evidence="50">
    <original>W</original>
    <variation>S</variation>
    <location>
        <position position="1358"/>
    </location>
</feature>
<feature type="sequence variant" id="VAR_043364" description="In GEFSP2 and ICEGTC; dbSNP:rs121918805." evidence="41">
    <original>V</original>
    <variation>I</variation>
    <location>
        <position position="1366"/>
    </location>
</feature>
<feature type="sequence variant" id="VAR_064259" description="In DRVT; dbSNP:rs121918760." evidence="53 67">
    <original>N</original>
    <variation>K</variation>
    <location>
        <position position="1367"/>
    </location>
</feature>
<feature type="sequence variant" id="VAR_073562" description="In DRVT; borderline phenotype." evidence="72">
    <original>A</original>
    <variation>P</variation>
    <location>
        <position position="1370"/>
    </location>
</feature>
<feature type="sequence variant" id="VAR_073563" description="In ICEGTC." evidence="81">
    <original>C</original>
    <variation>R</variation>
    <location>
        <position position="1376"/>
    </location>
</feature>
<feature type="sequence variant" id="VAR_073564" description="In DRVT." evidence="72">
    <original>N</original>
    <variation>H</variation>
    <location>
        <position position="1378"/>
    </location>
</feature>
<feature type="sequence variant" id="VAR_073565" description="In DRVT; dbSNP:rs1131691775." evidence="72">
    <original>N</original>
    <variation>T</variation>
    <location>
        <position position="1378"/>
    </location>
</feature>
<feature type="sequence variant" id="VAR_073566" description="In DRVT." evidence="81">
    <original>F</original>
    <variation>V</variation>
    <location>
        <position position="1385"/>
    </location>
</feature>
<feature type="sequence variant" id="VAR_029699" description="In DRVT; some patients have a borderline DRVT phenotype; dbSNP:rs121917986." evidence="13 39 65">
    <original>V</original>
    <variation>M</variation>
    <location>
        <position position="1390"/>
    </location>
</feature>
<feature type="sequence variant" id="VAR_073567" description="In DRVT; dbSNP:rs1553525062." evidence="53">
    <original>N</original>
    <variation>S</variation>
    <location>
        <position position="1391"/>
    </location>
</feature>
<feature type="sequence variant" id="VAR_073568" description="In DRVT; borderline phenotype." evidence="38">
    <original>H</original>
    <variation>P</variation>
    <location>
        <position position="1393"/>
    </location>
</feature>
<feature type="sequence variant" id="VAR_073569" description="In DRVT." evidence="72">
    <original>T</original>
    <variation>I</variation>
    <location>
        <position position="1394"/>
    </location>
</feature>
<feature type="sequence variant" id="VAR_064260" description="In DRVT; some patients have a borderline DRVT phenotype; dbSNP:rs121917987." evidence="35 39 59">
    <original>C</original>
    <variation>G</variation>
    <location>
        <position position="1396"/>
    </location>
</feature>
<feature type="sequence variant" id="VAR_073570" description="In DRVT." evidence="72">
    <original>C</original>
    <variation>Y</variation>
    <location>
        <position position="1396"/>
    </location>
</feature>
<feature type="sequence variant" id="VAR_073571" description="In GEFSP2." evidence="72">
    <original>N</original>
    <variation>D</variation>
    <location>
        <position position="1414"/>
    </location>
</feature>
<feature type="sequence variant" id="VAR_064312" description="In DRVT; dbSNP:rs121917925." evidence="42">
    <original>N</original>
    <variation>Y</variation>
    <location>
        <position position="1414"/>
    </location>
</feature>
<feature type="sequence variant" id="VAR_073572" description="In DRVT." evidence="53">
    <original>D</original>
    <variation>G</variation>
    <location>
        <position position="1416"/>
    </location>
</feature>
<feature type="sequence variant" id="VAR_073573" description="In DRVT." evidence="72">
    <original>N</original>
    <variation>S</variation>
    <location>
        <position position="1417"/>
    </location>
</feature>
<feature type="sequence variant" id="VAR_073574" description="In DRVT." evidence="81">
    <original>V</original>
    <variation>G</variation>
    <location>
        <position position="1418"/>
    </location>
</feature>
<feature type="sequence variant" id="VAR_064313" description="In DRVT; dbSNP:rs121917913." evidence="36">
    <original>Y</original>
    <variation>C</variation>
    <location>
        <position position="1422"/>
    </location>
</feature>
<feature type="sequence variant" id="VAR_073575" description="In DRVT." evidence="72">
    <original>L</original>
    <variation>F</variation>
    <location>
        <position position="1423"/>
    </location>
</feature>
<feature type="sequence variant" id="VAR_064314" description="In DRVT; dbSNP:rs121917944." evidence="36">
    <original>L</original>
    <variation>R</variation>
    <location>
        <position position="1426"/>
    </location>
</feature>
<feature type="sequence variant" id="VAR_073576" description="In DRVT." evidence="81">
    <original>Q</original>
    <variation>P</variation>
    <location>
        <position position="1427"/>
    </location>
</feature>
<feature type="sequence variant" id="VAR_029700" description="In GEFSP2; dbSNP:rs121918627." evidence="11">
    <original>V</original>
    <variation>A</variation>
    <location>
        <position position="1428"/>
    </location>
</feature>
<feature type="sequence variant" id="VAR_073577" description="In ICEGTC." evidence="81">
    <original>A</original>
    <variation>D</variation>
    <location>
        <position position="1429"/>
    </location>
</feature>
<feature type="sequence variant" id="VAR_073578" description="In DRVT." evidence="72">
    <location>
        <position position="1429"/>
    </location>
</feature>
<feature type="sequence variant" id="VAR_073579" description="In DRVT." evidence="53">
    <original>F</original>
    <variation>I</variation>
    <location>
        <position position="1431"/>
    </location>
</feature>
<feature type="sequence variant" id="VAR_064261" description="In DRVT; dbSNP:rs121918741." evidence="65">
    <original>G</original>
    <variation>E</variation>
    <location>
        <position position="1433"/>
    </location>
</feature>
<feature type="sequence variant" id="VAR_064262" description="In DRVT; dbSNP:rs121917908." evidence="71">
    <original>G</original>
    <variation>R</variation>
    <location>
        <position position="1433"/>
    </location>
</feature>
<feature type="sequence variant" id="VAR_073580" description="In DRVT." evidence="72">
    <original>G</original>
    <variation>V</variation>
    <location>
        <position position="1433"/>
    </location>
</feature>
<feature type="sequence variant" id="VAR_029701" description="In DRVT; dbSNP:rs121918789." evidence="13 18">
    <original>W</original>
    <variation>R</variation>
    <location>
        <position position="1434"/>
    </location>
</feature>
<feature type="sequence variant" id="VAR_073581" description="In DRVT." evidence="53">
    <original>I</original>
    <variation>M</variation>
    <location>
        <position position="1437"/>
    </location>
</feature>
<feature type="sequence variant" id="VAR_078729" description="Found in a patient with autism; uncertain significance; dbSNP:rs1559122124." evidence="89">
    <original>A</original>
    <variation>V</variation>
    <location>
        <position position="1440"/>
    </location>
</feature>
<feature type="sequence variant" id="VAR_064348" description="In DRVT; dbSNP:rs121917974." evidence="39">
    <original>A</original>
    <variation>P</variation>
    <location>
        <position position="1441"/>
    </location>
</feature>
<feature type="sequence variant" id="VAR_064263" description="In DRVT; dbSNP:rs121918806." evidence="59 72">
    <original>Q</original>
    <variation>K</variation>
    <location>
        <position position="1450"/>
    </location>
</feature>
<feature type="sequence variant" id="VAR_029702" description="In DRVT; dbSNP:rs121918790." evidence="13">
    <original>Q</original>
    <variation>R</variation>
    <location>
        <position position="1450"/>
    </location>
</feature>
<feature type="sequence variant" id="VAR_064315" description="In DRVT; dbSNP:rs121917945." evidence="36">
    <original>P</original>
    <variation>L</variation>
    <location>
        <position position="1451"/>
    </location>
</feature>
<feature type="sequence variant" id="VAR_073582" description="In DRVT." evidence="72">
    <original>P</original>
    <variation>S</variation>
    <location>
        <position position="1451"/>
    </location>
</feature>
<feature type="sequence variant" id="VAR_073583" description="In DRVT; borderline phenotype." evidence="81">
    <original>Y</original>
    <variation>C</variation>
    <location>
        <position position="1453"/>
    </location>
</feature>
<feature type="sequence variant" id="VAR_073584" description="In DRVT; dbSNP:rs1553522472." evidence="72">
    <original>E</original>
    <variation>K</variation>
    <location>
        <position position="1454"/>
    </location>
</feature>
<feature type="sequence variant" id="VAR_029703" description="In DRVT; dbSNP:rs121918772." evidence="19">
    <original>L</original>
    <variation>I</variation>
    <location>
        <position position="1461"/>
    </location>
</feature>
<feature type="sequence variant" id="VAR_043365" description="In DRVT; dbSNP:rs121917962." evidence="50">
    <original>Y</original>
    <variation>C</variation>
    <location>
        <position position="1462"/>
    </location>
</feature>
<feature type="sequence variant" id="VAR_073585" description="In DRVT and ICEGTC; borderline DRVT phenotype; dbSNP:rs1559119345." evidence="72 75 81">
    <original>Y</original>
    <variation>H</variation>
    <location>
        <position position="1462"/>
    </location>
</feature>
<feature type="sequence variant" id="VAR_029704" description="In DRVT; dbSNP:rs121917946." evidence="19 36">
    <original>F</original>
    <variation>S</variation>
    <location>
        <position position="1463"/>
    </location>
</feature>
<feature type="sequence variant" id="VAR_064316" description="In DRVT; dbSNP:rs121917924." evidence="42">
    <original>G</original>
    <variation>W</variation>
    <location>
        <position position="1470"/>
    </location>
</feature>
<feature type="sequence variant" id="VAR_073586" description="In DRVT; borderline phenotype." evidence="81">
    <original>F</original>
    <variation>S</variation>
    <location>
        <position position="1472"/>
    </location>
</feature>
<feature type="sequence variant" id="VAR_073587" description="In DRVT." evidence="53">
    <location>
        <position position="1473"/>
    </location>
</feature>
<feature type="sequence variant" id="VAR_064317" description="In DRVT; dbSNP:rs121917947." evidence="36">
    <original>L</original>
    <variation>S</variation>
    <location>
        <position position="1475"/>
    </location>
</feature>
<feature type="sequence variant" id="VAR_073588" description="In DRVT; borderline phenotype." evidence="72">
    <original>N</original>
    <variation>K</variation>
    <location>
        <position position="1476"/>
    </location>
</feature>
<feature type="sequence variant" id="VAR_043366" description="Found in a patient with myoclonic astatic epilepsy; likely pathogenic; dbSNP:rs121917996." evidence="39">
    <original>G</original>
    <variation>V</variation>
    <location>
        <position position="1480"/>
    </location>
</feature>
<feature type="sequence variant" id="VAR_073589" description="Found in a patient with an unclassified form of epilepsy; likely pathogenic." evidence="72">
    <original>I</original>
    <variation>M</variation>
    <location>
        <position position="1483"/>
    </location>
</feature>
<feature type="sequence variant" id="VAR_073590" description="In DRVT." evidence="53">
    <location>
        <position position="1483"/>
    </location>
</feature>
<feature type="sequence variant" id="VAR_073591" description="In DRVT." evidence="53">
    <original>D</original>
    <variation>G</variation>
    <location>
        <position position="1484"/>
    </location>
</feature>
<feature type="sequence variant" id="VAR_073592" description="In DRVT." evidence="81">
    <original>N</original>
    <variation>Y</variation>
    <location>
        <position position="1485"/>
    </location>
</feature>
<feature type="sequence variant" id="VAR_057996" description="In FHM3; dbSNP:rs121918633." evidence="54">
    <original>Q</original>
    <variation>H</variation>
    <location>
        <position position="1489"/>
    </location>
</feature>
<feature type="sequence variant" id="VAR_025281" description="In FHM3; dbSNP:rs121918628." evidence="29">
    <original>Q</original>
    <variation>K</variation>
    <location>
        <position position="1489"/>
    </location>
</feature>
<feature type="sequence variant" id="VAR_057997" description="In FHM3; changed voltage-gated sodium channel activity; right shift of the inactivation curve without major impact on activation; dbSNP:rs121918632." evidence="54 96">
    <original>F</original>
    <variation>L</variation>
    <location>
        <position position="1499"/>
    </location>
</feature>
<feature type="sequence variant" id="VAR_073593" description="In DRVT; borderline phenotype." evidence="61 72 81">
    <original>E</original>
    <variation>K</variation>
    <location>
        <position position="1503"/>
    </location>
</feature>
<feature type="sequence variant" id="VAR_073594" description="In DRVT; borderline phenotype." evidence="81">
    <location>
        <position position="1503"/>
    </location>
</feature>
<feature type="sequence variant" id="VAR_073595" description="In ICEGTC." evidence="81">
    <original>M</original>
    <variation>K</variation>
    <location>
        <position position="1511"/>
    </location>
</feature>
<feature type="sequence variant" id="VAR_064264" description="In DRVT; dbSNP:rs121918764." evidence="67">
    <original>L</original>
    <variation>S</variation>
    <location>
        <position position="1514"/>
    </location>
</feature>
<feature type="sequence variant" id="VAR_090163" description="In DRVT; uncertain significance." evidence="75">
    <original>I</original>
    <variation>T</variation>
    <location>
        <position position="1523"/>
    </location>
</feature>
<feature type="sequence variant" id="VAR_073596" description="In DRVT; dbSNP:rs780360360." evidence="53">
    <original>V</original>
    <variation>I</variation>
    <location>
        <position position="1538"/>
    </location>
</feature>
<feature type="sequence variant" id="VAR_043367" description="In a patient with cryptogenic focal epilepsy; dbSNP:rs121917992." evidence="39">
    <original>F</original>
    <variation>S</variation>
    <location>
        <position position="1543"/>
    </location>
</feature>
<feature type="sequence variant" id="VAR_073597" description="In DRVT." evidence="53">
    <original>D</original>
    <variation>A</variation>
    <location>
        <position position="1544"/>
    </location>
</feature>
<feature type="sequence variant" id="VAR_073598" description="In DRVT." evidence="72">
    <original>D</original>
    <variation>G</variation>
    <location>
        <position position="1544"/>
    </location>
</feature>
<feature type="sequence variant" id="VAR_064265" description="In DRVT; dbSNP:rs121917975." evidence="39 59 81">
    <original>I</original>
    <variation>V</variation>
    <location>
        <position position="1545"/>
    </location>
</feature>
<feature type="sequence variant" id="VAR_073599" description="In DRVT." evidence="81">
    <original>M</original>
    <variation>R</variation>
    <location>
        <position position="1555"/>
    </location>
</feature>
<feature type="sequence variant" id="VAR_029705" description="In DRVT." evidence="23">
    <location>
        <position position="1559"/>
    </location>
</feature>
<feature type="sequence variant" id="VAR_073600" description="In DRVT." evidence="53">
    <original>E</original>
    <variation>K</variation>
    <location>
        <position position="1561"/>
    </location>
</feature>
<feature type="sequence variant" id="VAR_064318" description="Found in patients with Dravet syndrome; uncertain significance; found in a patient with acute necrotizing encephalopathy; uncertain significance; also found in a patient with acute encephalopathy with biphasic seizures and late reduced diffusion; uncertain significance; dbSNP:rs121918807." evidence="47 53 79 81 88">
    <original>R</original>
    <variation>C</variation>
    <location>
        <position position="1575"/>
    </location>
</feature>
<feature type="sequence variant" id="VAR_073601" description="In DRVT." evidence="53">
    <original>V</original>
    <variation>E</variation>
    <location>
        <position position="1579"/>
    </location>
</feature>
<feature type="sequence variant" id="VAR_064266" description="In DRVT; dbSNP:rs121918742." evidence="53 65 72">
    <original>G</original>
    <variation>E</variation>
    <location>
        <position position="1586"/>
    </location>
</feature>
<feature type="sequence variant" id="VAR_064319" description="In DRVT; dbSNP:rs121917919." evidence="42 72 87">
    <original>C</original>
    <variation>R</variation>
    <location>
        <position position="1588"/>
    </location>
</feature>
<feature type="sequence variant" id="VAR_073602" description="In DRVT; borderline phenotype." evidence="72">
    <original>L</original>
    <variation>H</variation>
    <location>
        <position position="1592"/>
    </location>
</feature>
<feature type="sequence variant" id="VAR_073603" description="In DRVT." evidence="72">
    <original>L</original>
    <variation>P</variation>
    <location>
        <position position="1592"/>
    </location>
</feature>
<feature type="sequence variant" id="VAR_043368" description="In DRVT; also found in a patient with cryptogenic focal epilepsy; affects voltage-gated sodium channel activity resulting in reduced current amplitude and a hyperpolarizing shift of the inactivation curve with no changes in the kinetics of recovery from inactivation; dbSNP:rs121917993." evidence="39 53 98">
    <original>R</original>
    <variation>C</variation>
    <location>
        <position position="1596"/>
    </location>
</feature>
<feature type="sequence variant" id="VAR_073604" description="In GEFSP2; dbSNP:rs575368466." evidence="72">
    <original>R</original>
    <variation>H</variation>
    <location>
        <position position="1596"/>
    </location>
</feature>
<feature type="sequence variant" id="VAR_073605" description="In DRVT." evidence="53">
    <original>R</original>
    <variation>L</variation>
    <location>
        <position position="1596"/>
    </location>
</feature>
<feature type="sequence variant" id="VAR_078194" description="In DRVT; dbSNP:rs1057519533." evidence="91">
    <original>N</original>
    <variation>I</variation>
    <location>
        <position position="1605"/>
    </location>
</feature>
<feature type="sequence variant" id="VAR_073606" description="In DRVT; borderline phenotype." evidence="72">
    <original>N</original>
    <variation>S</variation>
    <location>
        <position position="1605"/>
    </location>
</feature>
<feature type="sequence variant" id="VAR_073607" description="In DRVT." evidence="81">
    <original>D</original>
    <variation>G</variation>
    <location>
        <position position="1608"/>
    </location>
</feature>
<feature type="sequence variant" id="VAR_064320" description="In DRVT; dbSNP:rs121917915." evidence="42">
    <original>D</original>
    <variation>Y</variation>
    <location>
        <position position="1608"/>
    </location>
</feature>
<feature type="sequence variant" id="VAR_029706" description="In ICEGTC; results in greater levels of persistent non-inactivating current compared to wild-type; dbSNP:rs121918630." evidence="15 31">
    <original>V</original>
    <variation>F</variation>
    <location>
        <position position="1611"/>
    </location>
</feature>
<feature type="sequence variant" id="VAR_064267" description="In DRVT; dbSNP:rs121918808." evidence="53 58 66">
    <original>V</original>
    <variation>I</variation>
    <location>
        <position position="1612"/>
    </location>
</feature>
<feature type="sequence variant" id="VAR_073608" description="In ICEGTC; dbSNP:rs373967247." evidence="81">
    <original>M</original>
    <variation>V</variation>
    <location>
        <position position="1619"/>
    </location>
</feature>
<feature type="sequence variant" id="VAR_073609" description="In DRVT; borderline phenotype in some patients; dbSNP:rs121917914." evidence="78 81">
    <original>V</original>
    <variation>L</variation>
    <location>
        <position position="1630"/>
    </location>
</feature>
<feature type="sequence variant" id="VAR_064321" description="In DRVT; dbSNP:rs121917914." evidence="42">
    <original>V</original>
    <variation>M</variation>
    <location>
        <position position="1630"/>
    </location>
</feature>
<feature type="sequence variant" id="VAR_029707" description="In ICEGTC; results in greater levels of persistent non-inactivating current compared to wild-type; dbSNP:rs121918755." evidence="15 31">
    <original>P</original>
    <variation>S</variation>
    <location>
        <position position="1632"/>
    </location>
</feature>
<feature type="sequence variant" id="VAR_043369" description="Found in a patient with Lennon-Gastaut syndrome; likely pathogenic; dbSNP:rs121917995." evidence="39 59">
    <original>R</original>
    <variation>Q</variation>
    <location>
        <position position="1636"/>
    </location>
</feature>
<feature type="sequence variant" id="VAR_064268" description="In DRVT; also found in a child with febrile status epilepticus who developed liver failure; dbSNP:rs121918810." evidence="64 72">
    <original>V</original>
    <variation>E</variation>
    <location>
        <position position="1637"/>
    </location>
</feature>
<feature type="sequence variant" id="VAR_073610" description="In DRVT; dbSNP:rs1057521079." evidence="81">
    <original>I</original>
    <variation>N</variation>
    <location>
        <position position="1638"/>
    </location>
</feature>
<feature type="sequence variant" id="VAR_073611" description="In DRVT; also found in a patient with an unclassified form of epilepsy." evidence="72 75">
    <original>I</original>
    <variation>T</variation>
    <location>
        <position position="1638"/>
    </location>
</feature>
<feature type="sequence variant" id="VAR_073612" description="In DRVT." evidence="53">
    <original>R</original>
    <variation>G</variation>
    <location>
        <position position="1639"/>
    </location>
</feature>
<feature type="sequence variant" id="VAR_073613" description="In DRVT; dbSNP:rs1131691581." evidence="81">
    <original>R</original>
    <variation>S</variation>
    <location>
        <position position="1642"/>
    </location>
</feature>
<feature type="sequence variant" id="VAR_064269" description="In DRVT; dbSNP:rs121917976." evidence="35 39 59">
    <original>R</original>
    <variation>Q</variation>
    <location>
        <position position="1645"/>
    </location>
</feature>
<feature type="sequence variant" id="VAR_029708" description="In DRVT; dbSNP:rs121918791." evidence="13 57 72">
    <original>R</original>
    <variation>C</variation>
    <location>
        <position position="1648"/>
    </location>
</feature>
<feature type="sequence variant" id="VAR_010111" description="In GEFSP2 and DRVT; dbSNP:rs121918622." evidence="7 53 67">
    <original>R</original>
    <variation>H</variation>
    <location>
        <position position="1648"/>
    </location>
</feature>
<feature type="sequence variant" id="VAR_064322" description="In FHM3." evidence="40">
    <original>L</original>
    <variation>Q</variation>
    <location>
        <position position="1649"/>
    </location>
</feature>
<feature type="sequence variant" id="VAR_073614" description="In DRVT; borderline phenotype." evidence="72">
    <original>A</original>
    <variation>E</variation>
    <location>
        <position position="1653"/>
    </location>
</feature>
<feature type="sequence variant" id="VAR_014273" description="In GEFSP2; changed voltage-gated sodium channel activity; exhibits a depolarizing shift in the voltage dependence of activation; dbSNP:rs121917955." evidence="8 22">
    <original>I</original>
    <variation>M</variation>
    <location>
        <position position="1656"/>
    </location>
</feature>
<feature type="sequence variant" id="VAR_029709" description="In GEFSP2; changed voltage-gated sodium channel activity; exhibits a depolarizing shift in the voltage dependence of activation; shows a 50% reduction in current density and accelerates recovery from slow inactivation; dbSNP:rs121918811." evidence="22">
    <original>R</original>
    <variation>C</variation>
    <location>
        <position position="1657"/>
    </location>
</feature>
<feature type="sequence variant" id="VAR_043370" description="Found in a patient with cryptogenic focal epilepsy; likely pathogenic; dbSNP:rs121917994." evidence="39 59">
    <original>R</original>
    <variation>H</variation>
    <location>
        <position position="1657"/>
    </location>
</feature>
<feature type="sequence variant" id="VAR_064270" description="In DRVT; dbSNP:rs121917922." evidence="53 67">
    <original>T</original>
    <variation>M</variation>
    <location>
        <position position="1658"/>
    </location>
</feature>
<feature type="sequence variant" id="VAR_064323" description="In DRVT; changed voltage-gated sodium channel activity; inactivation curve is shifted toward the negative potential; dbSNP:rs121917922." evidence="42 53 96">
    <original>T</original>
    <variation>R</variation>
    <location>
        <position position="1658"/>
    </location>
</feature>
<feature type="sequence variant" id="VAR_073615" description="In DRVT; dbSNP:rs1131691675." evidence="72">
    <original>L</original>
    <variation>P</variation>
    <location>
        <position position="1660"/>
    </location>
</feature>
<feature type="sequence variant" id="VAR_029710" description="In DRVT; dbSNP:rs121918797." evidence="18">
    <original>F</original>
    <variation>S</variation>
    <location>
        <position position="1661"/>
    </location>
</feature>
<feature type="sequence variant" id="VAR_073616" description="In DRVT; borderline phenotype; dbSNP:rs794726839." evidence="81">
    <original>A</original>
    <variation>V</variation>
    <location>
        <position position="1662"/>
    </location>
</feature>
<feature type="sequence variant" id="VAR_064271" description="In DRVT; dbSNP:rs121918765." evidence="53 67">
    <original>M</original>
    <variation>K</variation>
    <location>
        <position position="1664"/>
    </location>
</feature>
<feature type="sequence variant" id="VAR_073617" description="In DRVT; dbSNP:rs1131691774." evidence="72 81">
    <original>L</original>
    <variation>P</variation>
    <location>
        <position position="1667"/>
    </location>
</feature>
<feature type="sequence variant" id="VAR_029711" description="In DRVT; dbSNP:rs121917948." evidence="19 36">
    <original>P</original>
    <variation>A</variation>
    <location>
        <position position="1668"/>
    </location>
</feature>
<feature type="sequence variant" id="VAR_073618" description="In DRVT; borderline phenotype." evidence="72">
    <original>P</original>
    <variation>L</variation>
    <location>
        <position position="1668"/>
    </location>
</feature>
<feature type="sequence variant" id="VAR_085930" description="In DRVT." evidence="73">
    <original>A</original>
    <variation>E</variation>
    <location>
        <position position="1669"/>
    </location>
</feature>
<feature type="sequence variant" id="VAR_073619" description="In DRVT." evidence="72">
    <original>N</original>
    <variation>I</variation>
    <location>
        <position position="1672"/>
    </location>
</feature>
<feature type="sequence variant" id="VAR_073620" description="In DRVT." evidence="72">
    <original>I</original>
    <variation>T</variation>
    <location>
        <position position="1673"/>
    </location>
</feature>
<feature type="sequence variant" id="VAR_029712" description="In DRVT; dbSNP:rs121918792." evidence="13">
    <original>G</original>
    <variation>R</variation>
    <location>
        <position position="1674"/>
    </location>
</feature>
<feature type="sequence variant" id="VAR_075570" description="Found in a patient acute encephalopathy with biphasic seizures and late reduced diffusion; uncertain significance." evidence="88">
    <original>G</original>
    <variation>S</variation>
    <location>
        <position position="1674"/>
    </location>
</feature>
<feature type="sequence variant" id="VAR_073621" description="In DRVT." evidence="53">
    <original>L</original>
    <variation>R</variation>
    <location>
        <position position="1675"/>
    </location>
</feature>
<feature type="sequence variant" id="VAR_073622" description="In DRVT." evidence="53 81">
    <original>L</original>
    <variation>F</variation>
    <location>
        <position position="1677"/>
    </location>
</feature>
<feature type="sequence variant" id="VAR_073623" description="Found in a patient with an unclassified form of epilepsy; likely pathogenic." evidence="72">
    <original>I</original>
    <variation>F</variation>
    <location>
        <position position="1683"/>
    </location>
</feature>
<feature type="sequence variant" id="VAR_073624" description="In DRVT; borderline phenotype." evidence="72 81">
    <original>I</original>
    <variation>T</variation>
    <location>
        <position position="1683"/>
    </location>
</feature>
<feature type="sequence variant" id="VAR_073625" description="In DRVT." evidence="72">
    <original>Y</original>
    <variation>D</variation>
    <location>
        <position position="1684"/>
    </location>
</feature>
<feature type="sequence variant" id="VAR_073626" description="In ICEGTC." evidence="81">
    <original>Y</original>
    <variation>S</variation>
    <location>
        <position position="1684"/>
    </location>
</feature>
<feature type="sequence variant" id="VAR_029714" description="In DRVT; dbSNP:rs121918744." evidence="15">
    <original>A</original>
    <variation>D</variation>
    <location>
        <position position="1685"/>
    </location>
</feature>
<feature type="sequence variant" id="VAR_029715" description="In GEFSP2; complete loss of sodium ion transmembrane transport; dbSNP:rs121918744." evidence="11 22">
    <original>A</original>
    <variation>V</variation>
    <location>
        <position position="1685"/>
    </location>
</feature>
<feature type="sequence variant" id="VAR_064324" description="In GEFSP2; dbSNP:rs121917932." evidence="42">
    <original>F</original>
    <variation>S</variation>
    <location>
        <position position="1687"/>
    </location>
</feature>
<feature type="sequence variant" id="VAR_073627" description="In DRVT." evidence="72">
    <original>G</original>
    <variation>W</variation>
    <location>
        <position position="1688"/>
    </location>
</feature>
<feature type="sequence variant" id="VAR_029716" description="In DRVT; dbSNP:rs121918778." evidence="23 81">
    <original>F</original>
    <variation>S</variation>
    <location>
        <position position="1692"/>
    </location>
</feature>
<feature type="sequence variant" id="VAR_029713" description="In DRVT; dbSNP:rs121918777." evidence="23 81">
    <original>Y</original>
    <variation>C</variation>
    <location>
        <position position="1694"/>
    </location>
</feature>
<feature type="sequence variant" id="VAR_064349" description="In DRVT; dbSNP:rs121917977." evidence="39">
    <original>F</original>
    <variation>V</variation>
    <location>
        <position position="1707"/>
    </location>
</feature>
<feature type="sequence variant" id="VAR_029717" description="In ICEGTC; loss-of-function mutation resulting in absence of sodium current; dbSNP:rs121918629." evidence="15 31">
    <original>T</original>
    <variation>I</variation>
    <location>
        <position position="1709"/>
    </location>
</feature>
<feature type="sequence variant" id="VAR_064325" description="In DRVT; dbSNP:rs121918816." evidence="30">
    <original>S</original>
    <variation>N</variation>
    <location>
        <position position="1713"/>
    </location>
</feature>
<feature type="sequence variant" id="VAR_073628" description="In DRVT." evidence="53">
    <original>M</original>
    <variation>K</variation>
    <location>
        <position position="1714"/>
    </location>
</feature>
<feature type="sequence variant" id="VAR_064326" description="In DRVT; dbSNP:rs121917949." evidence="36 72">
    <original>M</original>
    <variation>R</variation>
    <location>
        <position position="1714"/>
    </location>
</feature>
<feature type="sequence variant" id="VAR_064327" description="In DRVT; dbSNP:rs121917926." evidence="42">
    <original>C</original>
    <variation>R</variation>
    <location>
        <position position="1716"/>
    </location>
</feature>
<feature type="sequence variant" id="VAR_064350" description="In DRVT; dbSNP:rs121917978." evidence="39">
    <original>T</original>
    <variation>R</variation>
    <location>
        <position position="1721"/>
    </location>
</feature>
<feature type="sequence variant" id="VAR_073629" description="In ICEGTC." evidence="81">
    <original>A</original>
    <variation>P</variation>
    <location>
        <position position="1724"/>
    </location>
</feature>
<feature type="sequence variant" id="VAR_073630" description="In DRVT." evidence="53">
    <original>G</original>
    <variation>C</variation>
    <location>
        <position position="1725"/>
    </location>
</feature>
<feature type="sequence variant" id="VAR_064272" description="In DRVT; dbSNP:rs121917979." evidence="59">
    <original>W</original>
    <variation>R</variation>
    <location>
        <position position="1726"/>
    </location>
</feature>
<feature type="sequence variant" id="VAR_073631" description="In DRVT." evidence="81">
    <original>D</original>
    <variation>G</variation>
    <location>
        <position position="1727"/>
    </location>
</feature>
<feature type="sequence variant" id="VAR_073632" description="In GEFSP2." evidence="72">
    <original>P</original>
    <variation>L</variation>
    <location>
        <position position="1739"/>
    </location>
</feature>
<feature type="sequence variant" id="VAR_073633" description="In DRVT." evidence="81">
    <original>C</original>
    <variation>R</variation>
    <location>
        <position position="1741"/>
    </location>
</feature>
<feature type="sequence variant" id="VAR_057998" description="In GEFSP2; dbSNP:rs121918812." evidence="26">
    <original>D</original>
    <variation>G</variation>
    <location>
        <position position="1742"/>
    </location>
</feature>
<feature type="sequence variant" id="VAR_029718" description="In DRVT; dbSNP:rs121918798." evidence="18">
    <original>G</original>
    <variation>E</variation>
    <location>
        <position position="1749"/>
    </location>
</feature>
<feature type="sequence variant" id="VAR_064273" description="In DRVT; dbSNP:rs121918809." evidence="58 66">
    <original>C</original>
    <variation>G</variation>
    <location>
        <position position="1756"/>
    </location>
</feature>
<feature type="sequence variant" id="VAR_064328" description="In DRVT; dbSNP:rs121917950." evidence="36">
    <original>G</original>
    <variation>E</variation>
    <location>
        <position position="1762"/>
    </location>
</feature>
<feature type="sequence variant" id="VAR_073634" description="In DRVT." evidence="72">
    <original>I</original>
    <variation>N</variation>
    <location>
        <position position="1763"/>
    </location>
</feature>
<feature type="sequence variant" id="VAR_073635" description="In GEFSP2; disease phenotype consists of partial epilepsy with antecedent febrile seizures and seizure aggravation by antiepileptic drugs; loss-of-function mutation resulting in complete absence of sodium current." evidence="68">
    <original>F</original>
    <variation>L</variation>
    <location>
        <position position="1765"/>
    </location>
</feature>
<feature type="sequence variant" id="VAR_029719" description="In DRVT." evidence="23 81">
    <location>
        <position position="1766"/>
    </location>
</feature>
<feature type="sequence variant" id="VAR_073636" description="In DRVT." evidence="72">
    <original>I</original>
    <variation>F</variation>
    <location>
        <position position="1770"/>
    </location>
</feature>
<feature type="sequence variant" id="VAR_073637" description="In DRVT." evidence="72">
    <original>I</original>
    <variation>N</variation>
    <location>
        <position position="1770"/>
    </location>
</feature>
<feature type="sequence variant" id="VAR_073638" description="In DRVT; borderline phenotype." evidence="72">
    <original>I</original>
    <variation>T</variation>
    <location>
        <position position="1770"/>
    </location>
</feature>
<feature type="sequence variant" id="VAR_073639" description="In DRVT; borderline phenotype; also found in a patient with focal epilepsy." evidence="49 81">
    <original>I</original>
    <variation>F</variation>
    <location>
        <position position="1771"/>
    </location>
</feature>
<feature type="sequence variant" id="VAR_073640" description="In DRVT." evidence="53">
    <original>I</original>
    <variation>N</variation>
    <location>
        <position position="1771"/>
    </location>
</feature>
<feature type="sequence variant" id="VAR_064329" description="In DRVT; dbSNP:rs121917951." evidence="36">
    <original>S</original>
    <variation>F</variation>
    <location>
        <position position="1773"/>
    </location>
</feature>
<feature type="sequence variant" id="VAR_029720" description="In DRVT; dbSNP:rs121917952." evidence="19 36 53 72">
    <original>M</original>
    <variation>T</variation>
    <location>
        <position position="1780"/>
    </location>
</feature>
<feature type="sequence variant" id="VAR_029721" description="In DRVT and ICEGTC; dbSNP:rs121918779." evidence="23 81">
    <original>Y</original>
    <variation>C</variation>
    <location>
        <position position="1781"/>
    </location>
</feature>
<feature type="sequence variant" id="VAR_073641" description="In DRVT." evidence="53">
    <original>Y</original>
    <variation>H</variation>
    <location>
        <position position="1781"/>
    </location>
</feature>
<feature type="sequence variant" id="VAR_064274" description="In DRVT; dbSNP:rs121918763." evidence="53 67">
    <original>I</original>
    <variation>M</variation>
    <location>
        <position position="1782"/>
    </location>
</feature>
<feature type="sequence variant" id="VAR_073642" description="In DRVT." evidence="53">
    <original>I</original>
    <variation>S</variation>
    <location>
        <position position="1782"/>
    </location>
</feature>
<feature type="sequence variant" id="VAR_064275" description="In DRVT; dbSNP:rs121917980." evidence="53 59 65 81">
    <original>A</original>
    <variation>T</variation>
    <location>
        <position position="1783"/>
    </location>
</feature>
<feature type="sequence variant" id="VAR_064345" description="In DRVT; dbSNP:rs121917921." evidence="42 53 72 81">
    <original>A</original>
    <variation>V</variation>
    <location>
        <position position="1783"/>
    </location>
</feature>
<feature type="sequence variant" id="VAR_064330" description="In DRVT; dbSNP:rs121917916." evidence="42 72">
    <original>E</original>
    <variation>K</variation>
    <location>
        <position position="1787"/>
    </location>
</feature>
<feature type="sequence variant" id="VAR_073643" description="In DRVT; uncertain significance; dbSNP:rs1381184010." evidence="53">
    <original>N</original>
    <variation>K</variation>
    <location>
        <position position="1788"/>
    </location>
</feature>
<feature type="sequence variant" id="VAR_073644" description="In DRVT." evidence="81">
    <original>A</original>
    <variation>T</variation>
    <location>
        <position position="1792"/>
    </location>
</feature>
<feature type="sequence variant" id="VAR_064276" description="In GEFSP2; dbSNP:rs121918813." evidence="69">
    <original>E</original>
    <variation>K</variation>
    <location>
        <position position="1795"/>
    </location>
</feature>
<feature type="sequence variant" id="VAR_029722" description="In DRVT." evidence="15">
    <location>
        <begin position="1807"/>
        <end position="1810"/>
    </location>
</feature>
<feature type="sequence variant" id="VAR_073645" description="In DRVT." evidence="53">
    <original>F</original>
    <variation>I</variation>
    <location>
        <position position="1808"/>
    </location>
</feature>
<feature type="sequence variant" id="VAR_029723" description="In ICEGTC; results in decreased peak current density but significantly greater levels of persistent non-inactivating current compared to wild-type channel; dbSNP:rs121918757." evidence="15 31">
    <original>F</original>
    <variation>L</variation>
    <location>
        <position position="1808"/>
    </location>
</feature>
<feature type="sequence variant" id="VAR_029725" description="In DRVT.">
    <original>WEKF</original>
    <variation>C</variation>
    <location>
        <begin position="1812"/>
        <end position="1815"/>
    </location>
</feature>
<feature type="sequence variant" id="VAR_029724" description="In DRVT; dbSNP:rs121918751." evidence="15">
    <original>W</original>
    <variation>G</variation>
    <location>
        <position position="1812"/>
    </location>
</feature>
<feature type="sequence variant" id="VAR_073646" description="In DRVT." evidence="53">
    <original>W</original>
    <variation>S</variation>
    <location>
        <position position="1812"/>
    </location>
</feature>
<feature type="sequence variant" id="VAR_073647" description="In DRVT." evidence="53">
    <location>
        <begin position="1813"/>
        <end position="1815"/>
    </location>
</feature>
<feature type="sequence variant" id="VAR_029726" description="In DRVT; dbSNP:rs121918748." evidence="15">
    <original>F</original>
    <variation>S</variation>
    <location>
        <position position="1831"/>
    </location>
</feature>
<feature type="sequence variant" id="VAR_073648" description="In DRVT." evidence="72">
    <original>A</original>
    <variation>P</variation>
    <location>
        <position position="1832"/>
    </location>
</feature>
<feature type="sequence variant" id="VAR_073649" description="In DRVT." evidence="53">
    <original>L</original>
    <variation>F</variation>
    <location>
        <position position="1835"/>
    </location>
</feature>
<feature type="sequence variant" id="VAR_073650" description="In DRVT." evidence="72">
    <original>M</original>
    <variation>K</variation>
    <location>
        <position position="1852"/>
    </location>
</feature>
<feature type="sequence variant" id="VAR_029727" description="In GEFSP2; loss of localization to the plasma membrane; no effect on voltage-gated sodium channel activity; no effect on interaction with SCN1B; dbSNP:rs121918783." evidence="20 45 96">
    <original>M</original>
    <variation>T</variation>
    <location>
        <position position="1852"/>
    </location>
</feature>
<feature type="sequence variant" id="VAR_073651" description="In DRVT; dbSNP:rs1057517958." evidence="72">
    <original>P</original>
    <variation>L</variation>
    <location>
        <position position="1855"/>
    </location>
</feature>
<feature type="sequence variant" id="VAR_057999" description="In GEFSP2; dbSNP:rs121918814." evidence="27">
    <original>V</original>
    <variation>L</variation>
    <location>
        <position position="1857"/>
    </location>
</feature>
<feature type="sequence variant" id="VAR_073652" description="In ICEGTC." evidence="81">
    <original>R</original>
    <variation>W</variation>
    <location>
        <position position="1861"/>
    </location>
</feature>
<feature type="sequence variant" id="VAR_058000" description="In GEFSP2; causes a positive shift in the voltage dependence of sodium channel fast inactivation; causes an increase in the magnitude of the persistent current; causes delay in the kinetics of inactivation and significantly reduces interaction with SCN1B; dbSNP:rs121918815." evidence="25">
    <original>D</original>
    <variation>Y</variation>
    <location>
        <position position="1866"/>
    </location>
</feature>
<feature type="sequence variant" id="VAR_073653" description="In GEFSP2; dbSNP:rs1131691773." evidence="48 72">
    <original>I</original>
    <variation>T</variation>
    <location>
        <position position="1867"/>
    </location>
</feature>
<feature type="sequence variant" id="VAR_073654" description="In DRVT; dbSNP:rs201905405." evidence="72 75">
    <original>G</original>
    <variation>E</variation>
    <location>
        <position position="1880"/>
    </location>
</feature>
<feature type="sequence variant" id="VAR_029728" description="In DRVT; dbSNP:rs121918804." evidence="21">
    <original>E</original>
    <variation>D</variation>
    <location>
        <position position="1881"/>
    </location>
</feature>
<feature type="sequence variant" id="VAR_029729" description="In DRVT; functional channel displaying decreased peak current densities but increased persistent current; dbSNP:rs121918793." evidence="13 37">
    <original>T</original>
    <variation>I</variation>
    <location>
        <position position="1909"/>
    </location>
</feature>
<feature type="sequence variant" id="VAR_073655" description="In DRVT; dbSNP:rs1553519902." evidence="72">
    <location>
        <position position="1909"/>
    </location>
</feature>
<feature type="sequence variant" id="VAR_064351" description="In DRVT; dbSNP:rs121917981." evidence="39">
    <original>I</original>
    <variation>T</variation>
    <location>
        <position position="1922"/>
    </location>
</feature>
<feature type="sequence variant" id="VAR_073656" description="In DRVT." evidence="72">
    <original>R</original>
    <variation>IIQ</variation>
    <location>
        <position position="1927"/>
    </location>
</feature>
<feature type="sequence variant" id="VAR_043371" description="In dbSNP:rs121917956." evidence="8 50 53">
    <original>R</original>
    <variation>G</variation>
    <location>
        <position position="1928"/>
    </location>
</feature>
<feature type="sequence variant" id="VAR_029730" description="In dbSNP:rs35735053." evidence="17">
    <original>I</original>
    <variation>T</variation>
    <location>
        <position position="1955"/>
    </location>
</feature>
<feature type="sequence variant" id="VAR_029731" description="In infantile spasms; dbSNP:rs121918802." evidence="21">
    <original>E</original>
    <variation>G</variation>
    <location>
        <position position="1957"/>
    </location>
</feature>
<feature type="sequence variant" id="VAR_075571" description="Found in a patient with febrile seizures and non-specific acute encephalopathy; uncertain significance." evidence="79">
    <original>M</original>
    <variation>L</variation>
    <location>
        <position position="1977"/>
    </location>
</feature>
<feature type="sequence variant" id="VAR_078611" description="Found in a patient with epilepsy-aphasia and febrile seizures plus; uncertain significance; dbSNP:rs756519197." evidence="84">
    <original>R</original>
    <variation>W</variation>
    <location>
        <position position="1988"/>
    </location>
</feature>
<feature type="sequence conflict" description="In Ref. 2; AAK00217." evidence="103" ref="2">
    <original>E</original>
    <variation>G</variation>
    <location>
        <position position="670"/>
    </location>
</feature>
<feature type="sequence conflict" description="In Ref. 2; AAK00217." evidence="103" ref="2">
    <original>L</original>
    <variation>S</variation>
    <location>
        <position position="746"/>
    </location>
</feature>
<feature type="sequence conflict" description="In Ref. 2; AAK00217." evidence="103" ref="2">
    <original>P</original>
    <variation>PQ</variation>
    <location>
        <position position="930"/>
    </location>
</feature>
<feature type="sequence conflict" description="In Ref. 2; AAK00217." evidence="103" ref="2">
    <original>DIGA</original>
    <variation>GHRR</variation>
    <location>
        <begin position="1158"/>
        <end position="1161"/>
    </location>
</feature>
<feature type="sequence conflict" description="In Ref. 7; CAA46439/M91803." evidence="103" ref="7">
    <original>F</original>
    <variation>L</variation>
    <location>
        <position position="1537"/>
    </location>
</feature>
<feature type="helix" evidence="108">
    <location>
        <begin position="117"/>
        <end position="125"/>
    </location>
</feature>
<feature type="helix" evidence="108">
    <location>
        <begin position="128"/>
        <end position="145"/>
    </location>
</feature>
<feature type="helix" evidence="108">
    <location>
        <begin position="152"/>
        <end position="176"/>
    </location>
</feature>
<feature type="helix" evidence="108">
    <location>
        <begin position="189"/>
        <end position="204"/>
    </location>
</feature>
<feature type="strand" evidence="108">
    <location>
        <begin position="205"/>
        <end position="207"/>
    </location>
</feature>
<feature type="helix" evidence="108">
    <location>
        <begin position="215"/>
        <end position="225"/>
    </location>
</feature>
<feature type="helix" evidence="108">
    <location>
        <begin position="226"/>
        <end position="229"/>
    </location>
</feature>
<feature type="helix" evidence="108">
    <location>
        <begin position="234"/>
        <end position="245"/>
    </location>
</feature>
<feature type="helix" evidence="108">
    <location>
        <begin position="248"/>
        <end position="268"/>
    </location>
</feature>
<feature type="turn" evidence="108">
    <location>
        <begin position="269"/>
        <end position="271"/>
    </location>
</feature>
<feature type="helix" evidence="108">
    <location>
        <begin position="272"/>
        <end position="274"/>
    </location>
</feature>
<feature type="strand" evidence="108">
    <location>
        <begin position="315"/>
        <end position="318"/>
    </location>
</feature>
<feature type="strand" evidence="108">
    <location>
        <begin position="322"/>
        <end position="324"/>
    </location>
</feature>
<feature type="turn" evidence="108">
    <location>
        <begin position="359"/>
        <end position="362"/>
    </location>
</feature>
<feature type="strand" evidence="108">
    <location>
        <begin position="365"/>
        <end position="367"/>
    </location>
</feature>
<feature type="helix" evidence="108">
    <location>
        <begin position="369"/>
        <end position="379"/>
    </location>
</feature>
<feature type="helix" evidence="108">
    <location>
        <begin position="384"/>
        <end position="395"/>
    </location>
</feature>
<feature type="helix" evidence="108">
    <location>
        <begin position="397"/>
        <end position="399"/>
    </location>
</feature>
<feature type="helix" evidence="108">
    <location>
        <begin position="400"/>
        <end position="438"/>
    </location>
</feature>
<feature type="helix" evidence="108">
    <location>
        <begin position="750"/>
        <end position="762"/>
    </location>
</feature>
<feature type="turn" evidence="108">
    <location>
        <begin position="763"/>
        <end position="766"/>
    </location>
</feature>
<feature type="helix" evidence="108">
    <location>
        <begin position="770"/>
        <end position="786"/>
    </location>
</feature>
<feature type="helix" evidence="108">
    <location>
        <begin position="794"/>
        <end position="818"/>
    </location>
</feature>
<feature type="turn" evidence="108">
    <location>
        <begin position="819"/>
        <end position="821"/>
    </location>
</feature>
<feature type="helix" evidence="108">
    <location>
        <begin position="832"/>
        <end position="847"/>
    </location>
</feature>
<feature type="helix" evidence="108">
    <location>
        <begin position="856"/>
        <end position="871"/>
    </location>
</feature>
<feature type="helix" evidence="108">
    <location>
        <begin position="874"/>
        <end position="885"/>
    </location>
</feature>
<feature type="turn" evidence="108">
    <location>
        <begin position="886"/>
        <end position="890"/>
    </location>
</feature>
<feature type="helix" evidence="108">
    <location>
        <begin position="891"/>
        <end position="911"/>
    </location>
</feature>
<feature type="helix" evidence="108">
    <location>
        <begin position="915"/>
        <end position="918"/>
    </location>
</feature>
<feature type="helix" evidence="108">
    <location>
        <begin position="920"/>
        <end position="922"/>
    </location>
</feature>
<feature type="strand" evidence="108">
    <location>
        <begin position="925"/>
        <end position="927"/>
    </location>
</feature>
<feature type="helix" evidence="108">
    <location>
        <begin position="937"/>
        <end position="949"/>
    </location>
</feature>
<feature type="helix" evidence="108">
    <location>
        <begin position="954"/>
        <end position="963"/>
    </location>
</feature>
<feature type="helix" evidence="108">
    <location>
        <begin position="965"/>
        <end position="994"/>
    </location>
</feature>
<feature type="helix" evidence="108">
    <location>
        <begin position="1204"/>
        <end position="1215"/>
    </location>
</feature>
<feature type="helix" evidence="108">
    <location>
        <begin position="1218"/>
        <end position="1233"/>
    </location>
</feature>
<feature type="turn" evidence="108">
    <location>
        <begin position="1234"/>
        <end position="1237"/>
    </location>
</feature>
<feature type="helix" evidence="108">
    <location>
        <begin position="1240"/>
        <end position="1244"/>
    </location>
</feature>
<feature type="strand" evidence="108">
    <location>
        <begin position="1246"/>
        <end position="1248"/>
    </location>
</feature>
<feature type="helix" evidence="108">
    <location>
        <begin position="1249"/>
        <end position="1280"/>
    </location>
</feature>
<feature type="helix" evidence="108">
    <location>
        <begin position="1283"/>
        <end position="1304"/>
    </location>
</feature>
<feature type="helix" evidence="108">
    <location>
        <begin position="1312"/>
        <end position="1315"/>
    </location>
</feature>
<feature type="helix" evidence="108">
    <location>
        <begin position="1316"/>
        <end position="1326"/>
    </location>
</feature>
<feature type="turn" evidence="108">
    <location>
        <begin position="1327"/>
        <end position="1329"/>
    </location>
</feature>
<feature type="helix" evidence="108">
    <location>
        <begin position="1331"/>
        <end position="1341"/>
    </location>
</feature>
<feature type="helix" evidence="108">
    <location>
        <begin position="1344"/>
        <end position="1368"/>
    </location>
</feature>
<feature type="strand" evidence="108">
    <location>
        <begin position="1369"/>
        <end position="1372"/>
    </location>
</feature>
<feature type="strand" evidence="108">
    <location>
        <begin position="1375"/>
        <end position="1378"/>
    </location>
</feature>
<feature type="turn" evidence="108">
    <location>
        <begin position="1379"/>
        <end position="1381"/>
    </location>
</feature>
<feature type="turn" evidence="108">
    <location>
        <begin position="1387"/>
        <end position="1389"/>
    </location>
</feature>
<feature type="helix" evidence="108">
    <location>
        <begin position="1393"/>
        <end position="1401"/>
    </location>
</feature>
<feature type="strand" evidence="108">
    <location>
        <begin position="1406"/>
        <end position="1409"/>
    </location>
</feature>
<feature type="strand" evidence="108">
    <location>
        <begin position="1412"/>
        <end position="1417"/>
    </location>
</feature>
<feature type="helix" evidence="108">
    <location>
        <begin position="1418"/>
        <end position="1430"/>
    </location>
</feature>
<feature type="helix" evidence="108">
    <location>
        <begin position="1434"/>
        <end position="1442"/>
    </location>
</feature>
<feature type="helix" evidence="108">
    <location>
        <begin position="1457"/>
        <end position="1459"/>
    </location>
</feature>
<feature type="helix" evidence="108">
    <location>
        <begin position="1460"/>
        <end position="1469"/>
    </location>
</feature>
<feature type="turn" evidence="108">
    <location>
        <begin position="1470"/>
        <end position="1472"/>
    </location>
</feature>
<feature type="helix" evidence="108">
    <location>
        <begin position="1473"/>
        <end position="1493"/>
    </location>
</feature>
<feature type="helix" evidence="108">
    <location>
        <begin position="1504"/>
        <end position="1514"/>
    </location>
</feature>
<feature type="helix" evidence="108">
    <location>
        <begin position="1530"/>
        <end position="1539"/>
    </location>
</feature>
<feature type="helix" evidence="108">
    <location>
        <begin position="1541"/>
        <end position="1559"/>
    </location>
</feature>
<feature type="helix" evidence="108">
    <location>
        <begin position="1567"/>
        <end position="1594"/>
    </location>
</feature>
<feature type="helix" evidence="108">
    <location>
        <begin position="1603"/>
        <end position="1620"/>
    </location>
</feature>
<feature type="turn" evidence="108">
    <location>
        <begin position="1622"/>
        <end position="1627"/>
    </location>
</feature>
<feature type="helix" evidence="108">
    <location>
        <begin position="1632"/>
        <end position="1638"/>
    </location>
</feature>
<feature type="helix" evidence="108">
    <location>
        <begin position="1639"/>
        <end position="1642"/>
    </location>
</feature>
<feature type="helix" evidence="108">
    <location>
        <begin position="1643"/>
        <end position="1646"/>
    </location>
</feature>
<feature type="helix" evidence="108">
    <location>
        <begin position="1647"/>
        <end position="1651"/>
    </location>
</feature>
<feature type="helix" evidence="108">
    <location>
        <begin position="1656"/>
        <end position="1691"/>
    </location>
</feature>
<feature type="turn" evidence="108">
    <location>
        <begin position="1692"/>
        <end position="1694"/>
    </location>
</feature>
<feature type="strand" evidence="108">
    <location>
        <begin position="1703"/>
        <end position="1709"/>
    </location>
</feature>
<feature type="helix" evidence="108">
    <location>
        <begin position="1710"/>
        <end position="1721"/>
    </location>
</feature>
<feature type="turn" evidence="108">
    <location>
        <begin position="1722"/>
        <end position="1725"/>
    </location>
</feature>
<feature type="helix" evidence="108">
    <location>
        <begin position="1726"/>
        <end position="1733"/>
    </location>
</feature>
<feature type="strand" evidence="108">
    <location>
        <begin position="1748"/>
        <end position="1751"/>
    </location>
</feature>
<feature type="helix" evidence="108">
    <location>
        <begin position="1759"/>
        <end position="1792"/>
    </location>
</feature>